<name>MTOR_HUMAN</name>
<organism>
    <name type="scientific">Homo sapiens</name>
    <name type="common">Human</name>
    <dbReference type="NCBI Taxonomy" id="9606"/>
    <lineage>
        <taxon>Eukaryota</taxon>
        <taxon>Metazoa</taxon>
        <taxon>Chordata</taxon>
        <taxon>Craniata</taxon>
        <taxon>Vertebrata</taxon>
        <taxon>Euteleostomi</taxon>
        <taxon>Mammalia</taxon>
        <taxon>Eutheria</taxon>
        <taxon>Euarchontoglires</taxon>
        <taxon>Primates</taxon>
        <taxon>Haplorrhini</taxon>
        <taxon>Catarrhini</taxon>
        <taxon>Hominidae</taxon>
        <taxon>Homo</taxon>
    </lineage>
</organism>
<sequence>MLGTGPAAATTAATTSSNVSVLQQFASGLKSRNEETRAKAAKELQHYVTMELREMSQEESTRFYDQLNHHIFELVSSSDANERKGGILAIASLIGVEGGNATRIGRFANYLRNLLPSNDPVVMEMASKAIGRLAMAGDTFTAEYVEFEVKRALEWLGADRNEGRRHAAVLVLRELAISVPTFFFQQVQPFFDNIFVAVWDPKQAIREGAVAALRACLILTTQREPKEMQKPQWYRHTFEEAEKGFDETLAKEKGMNRDDRIHGALLILNELVRISSMEGERLREEMEEITQQQLVHDKYCKDLMGFGTKPRHITPFTSFQAVQPQQSNALVGLLGYSSHQGLMGFGTSPSPAKSTLVESRCCRDLMEEKFDQVCQWVLKCRNSKNSLIQMTILNLLPRLAAFRPSAFTDTQYLQDTMNHVLSCVKKEKERTAAFQALGLLSVAVRSEFKVYLPRVLDIIRAALPPKDFAHKRQKAMQVDATVFTCISMLARAMGPGIQQDIKELLEPMLAVGLSPALTAVLYDLSRQIPQLKKDIQDGLLKMLSLVLMHKPLRHPGMPKGLAHQLASPGLTTLPEASDVGSITLALRTLGSFEFEGHSLTQFVRHCADHFLNSEHKEIRMEAARTCSRLLTPSIHLISGHAHVVSQTAVQVVADVLSKLLVVGITDPDPDIRYCVLASLDERFDAHLAQAENLQALFVALNDQVFEIRELAICTVGRLSSMNPAFVMPFLRKMLIQILTELEHSGIGRIKEQSARMLGHLVSNAPRLIRPYMEPILKALILKLKDPDPDPNPGVINNVLATIGELAQVSGLEMRKWVDELFIIIMDMLQDSSLLAKRQVALWTLGQLVASTGYVVEPYRKYPTLLEVLLNFLKTEQNQGTRREAIRVLGLLGALDPYKHKVNIGMIDQSRDASAVSLSESKSSQDSSDYSTSEMLVNMGNLPLDEFYPAVSMVALMRIFRDQSLSHHHTMVVQAITFIFKSLGLKCVQFLPQVMPTFLNVIRVCDGAIREFLFQQLGMLVSFVKSHIRPYMDEIVTLMREFWVMNTSIQSTIILLIEQIVVALGGEFKLYLPQLIPHMLRVFMHDNSPGRIVSIKLLAAIQLFGANLDDYLHLLLPPIVKLFDAPEAPLPSRKAALETVDRLTESLDFTDYASRIIHPIVRTLDQSPELRSTAMDTLSSLVFQLGKKYQIFIPMVNKVLVRHRINHQRYDVLICRIVKGYTLADEEEDPLIYQHRMLRSGQGDALASGPVETGPMKKLHVSTINLQKAWGAARRVSKDDWLEWLRRLSLELLKDSSSPSLRSCWALAQAYNPMARDLFNAAFVSCWSELNEDQQDELIRSIELALTSQDIAEVTQTLLNLAEFMEHSDKGPLPLRDDNGIVLLGERAAKCRAYAKALHYKELEFQKGPTPAILESLISINNKLQQPEAAAGVLEYAMKHFGELEIQATWYEKLHEWEDALVAYDKKMDTNKDDPELMLGRMRCLEALGEWGQLHQQCCEKWTLVNDETQAKMARMAAAAAWGLGQWDSMEEYTCMIPRDTHDGAFYRAVLALHQDLFSLAQQCIDKARDLLDAELTAMAGESYSRAYGAMVSCHMLSELEEVIQYKLVPERREIIRQIWWERLQGCQRIVEDWQKILMVRSLVVSPHEDMRTWLKYASLCGKSGRLALAHKTLVLLLGVDPSRQLDHPLPTVHPQVTYAYMKNMWKSARKIDAFQHMQHFVQTMQQQAQHAIATEDQQHKQELHKLMARCFLKLGEWQLNLQGINESTIPKVLQYYSAATEHDRSWYKAWHAWAVMNFEAVLHYKHQNQARDEKKKLRHASGANITNATTAATTAATATTTASTEGSNSESEAESTENSPTPSPLQKKVTEDLSKTLLMYTVPAVQGFFRSISLSRGNNLQDTLRVLTLWFDYGHWPDVNEALVEGVKAIQIDTWLQVIPQLIARIDTPRPLVGRLIHQLLTDIGRYHPQALIYPLTVASKSTTTARHNAANKILKNMCEHSNTLVQQAMMVSEELIRVAILWHEMWHEGLEEASRLYFGERNVKGMFEVLEPLHAMMERGPQTLKETSFNQAYGRDLMEAQEWCRKYMKSGNVKDLTQAWDLYYHVFRRISKQLPQLTSLELQYVSPKLLMCRDLELAVPGTYDPNQPIIRIQSIAPSLQVITSKQRPRKLTLMGSNGHEFVFLLKGHEDLRQDERVMQLFGLVNTLLANDPTSLRKNLSIQRYAVIPLSTNSGLIGWVPHCDTLHALIRDYREKKKILLNIEHRIMLRMAPDYDHLTLMQKVEVFEHAVNNTAGDDLAKLLWLKSPSSEVWFDRRTNYTRSLAVMSMVGYILGLGDRHPSNLMLDRLSGKILHIDFGDCFEVAMTREKFPEKIPFRLTRMLTNAMEVTGLDGNYRITCHTVMEVLREHKDSVMAVLEAFVYDPLLNWRLMDTNTKGNKRSRTRTDSYSAGQSVEILDGVELGEPAHKKTGTTVPESIHSFIGDGLVKPEALNKKAIQIINRVRDKLTGRDFSHDDTLDVPTQVELLIKQATSHENLCQCYIGWCPFW</sequence>
<dbReference type="EC" id="2.7.11.1" evidence="17 18 20 30 47 48 49"/>
<dbReference type="EC" id="2.7.10.2" evidence="111"/>
<dbReference type="EMBL" id="L34075">
    <property type="protein sequence ID" value="AAA58486.1"/>
    <property type="molecule type" value="mRNA"/>
</dbReference>
<dbReference type="EMBL" id="U88966">
    <property type="protein sequence ID" value="AAC39933.1"/>
    <property type="status" value="ALT_FRAME"/>
    <property type="molecule type" value="mRNA"/>
</dbReference>
<dbReference type="EMBL" id="AB209995">
    <property type="protein sequence ID" value="BAE06077.1"/>
    <property type="status" value="ALT_INIT"/>
    <property type="molecule type" value="mRNA"/>
</dbReference>
<dbReference type="EMBL" id="AL109811">
    <property type="status" value="NOT_ANNOTATED_CDS"/>
    <property type="molecule type" value="Genomic_DNA"/>
</dbReference>
<dbReference type="EMBL" id="AL391561">
    <property type="status" value="NOT_ANNOTATED_CDS"/>
    <property type="molecule type" value="Genomic_DNA"/>
</dbReference>
<dbReference type="EMBL" id="AL049653">
    <property type="status" value="NOT_ANNOTATED_CDS"/>
    <property type="molecule type" value="Genomic_DNA"/>
</dbReference>
<dbReference type="EMBL" id="BC117166">
    <property type="protein sequence ID" value="AAI17167.1"/>
    <property type="molecule type" value="mRNA"/>
</dbReference>
<dbReference type="EMBL" id="AJ300188">
    <property type="protein sequence ID" value="CAC15570.1"/>
    <property type="molecule type" value="Genomic_DNA"/>
</dbReference>
<dbReference type="EMBL" id="L35478">
    <property type="protein sequence ID" value="AAC41713.1"/>
    <property type="molecule type" value="mRNA"/>
</dbReference>
<dbReference type="CCDS" id="CCDS127.1"/>
<dbReference type="PIR" id="S45340">
    <property type="entry name" value="S45340"/>
</dbReference>
<dbReference type="RefSeq" id="NP_001373429.1">
    <property type="nucleotide sequence ID" value="NM_001386500.1"/>
</dbReference>
<dbReference type="RefSeq" id="NP_004949.1">
    <property type="nucleotide sequence ID" value="NM_004958.4"/>
</dbReference>
<dbReference type="RefSeq" id="XP_005263495.1">
    <property type="nucleotide sequence ID" value="XM_005263438.2"/>
</dbReference>
<dbReference type="PDB" id="1AUE">
    <property type="method" value="X-ray"/>
    <property type="resolution" value="2.33 A"/>
    <property type="chains" value="A/B=2015-2114"/>
</dbReference>
<dbReference type="PDB" id="1FAP">
    <property type="method" value="X-ray"/>
    <property type="resolution" value="2.70 A"/>
    <property type="chains" value="B=2018-2112"/>
</dbReference>
<dbReference type="PDB" id="1NSG">
    <property type="method" value="X-ray"/>
    <property type="resolution" value="2.20 A"/>
    <property type="chains" value="B=2019-2112"/>
</dbReference>
<dbReference type="PDB" id="2FAP">
    <property type="method" value="X-ray"/>
    <property type="resolution" value="2.20 A"/>
    <property type="chains" value="B=2019-2112"/>
</dbReference>
<dbReference type="PDB" id="2GAQ">
    <property type="method" value="NMR"/>
    <property type="chains" value="A=2015-2114"/>
</dbReference>
<dbReference type="PDB" id="2NPU">
    <property type="method" value="NMR"/>
    <property type="chains" value="A=2015-2114"/>
</dbReference>
<dbReference type="PDB" id="2RSE">
    <property type="method" value="NMR"/>
    <property type="chains" value="B=2019-2112"/>
</dbReference>
<dbReference type="PDB" id="3FAP">
    <property type="method" value="X-ray"/>
    <property type="resolution" value="1.85 A"/>
    <property type="chains" value="B=2019-2112"/>
</dbReference>
<dbReference type="PDB" id="3JBZ">
    <property type="method" value="EM"/>
    <property type="resolution" value="28.00 A"/>
    <property type="chains" value="A=1385-2549"/>
</dbReference>
<dbReference type="PDB" id="4DRH">
    <property type="method" value="X-ray"/>
    <property type="resolution" value="2.30 A"/>
    <property type="chains" value="B/E=2025-2114"/>
</dbReference>
<dbReference type="PDB" id="4DRI">
    <property type="method" value="X-ray"/>
    <property type="resolution" value="1.45 A"/>
    <property type="chains" value="B=2025-2114"/>
</dbReference>
<dbReference type="PDB" id="4DRJ">
    <property type="method" value="X-ray"/>
    <property type="resolution" value="1.80 A"/>
    <property type="chains" value="B=2025-2114"/>
</dbReference>
<dbReference type="PDB" id="4FAP">
    <property type="method" value="X-ray"/>
    <property type="resolution" value="2.80 A"/>
    <property type="chains" value="B=2019-2112"/>
</dbReference>
<dbReference type="PDB" id="4JSN">
    <property type="method" value="X-ray"/>
    <property type="resolution" value="3.20 A"/>
    <property type="chains" value="A/B=1376-2549"/>
</dbReference>
<dbReference type="PDB" id="4JSP">
    <property type="method" value="X-ray"/>
    <property type="resolution" value="3.30 A"/>
    <property type="chains" value="A/B=1376-2549"/>
</dbReference>
<dbReference type="PDB" id="4JSV">
    <property type="method" value="X-ray"/>
    <property type="resolution" value="3.50 A"/>
    <property type="chains" value="A/B=1376-2549"/>
</dbReference>
<dbReference type="PDB" id="4JSX">
    <property type="method" value="X-ray"/>
    <property type="resolution" value="3.50 A"/>
    <property type="chains" value="A/B=1376-2549"/>
</dbReference>
<dbReference type="PDB" id="4JT5">
    <property type="method" value="X-ray"/>
    <property type="resolution" value="3.45 A"/>
    <property type="chains" value="A/B=1376-2549"/>
</dbReference>
<dbReference type="PDB" id="4JT6">
    <property type="method" value="X-ray"/>
    <property type="resolution" value="3.60 A"/>
    <property type="chains" value="A/B=1376-2549"/>
</dbReference>
<dbReference type="PDB" id="5FLC">
    <property type="method" value="EM"/>
    <property type="resolution" value="5.90 A"/>
    <property type="chains" value="B/F=1382-2549"/>
</dbReference>
<dbReference type="PDB" id="5GPG">
    <property type="method" value="X-ray"/>
    <property type="resolution" value="1.67 A"/>
    <property type="chains" value="B=2021-2112"/>
</dbReference>
<dbReference type="PDB" id="5H64">
    <property type="method" value="EM"/>
    <property type="resolution" value="4.40 A"/>
    <property type="chains" value="A/a=1-2549"/>
</dbReference>
<dbReference type="PDB" id="5WBH">
    <property type="method" value="X-ray"/>
    <property type="resolution" value="1.75 A"/>
    <property type="chains" value="A/B/C/D/E=2018-2114"/>
</dbReference>
<dbReference type="PDB" id="5WBU">
    <property type="method" value="X-ray"/>
    <property type="resolution" value="3.42 A"/>
    <property type="chains" value="A/B=1376-2549"/>
</dbReference>
<dbReference type="PDB" id="5WBY">
    <property type="method" value="X-ray"/>
    <property type="resolution" value="3.10 A"/>
    <property type="chains" value="A/B=1376-2549"/>
</dbReference>
<dbReference type="PDB" id="5ZCS">
    <property type="method" value="EM"/>
    <property type="resolution" value="4.90 A"/>
    <property type="chains" value="A/B=1-2549"/>
</dbReference>
<dbReference type="PDB" id="6BCU">
    <property type="method" value="EM"/>
    <property type="resolution" value="3.43 A"/>
    <property type="chains" value="A/B=1-2549"/>
</dbReference>
<dbReference type="PDB" id="6BCX">
    <property type="method" value="EM"/>
    <property type="resolution" value="3.00 A"/>
    <property type="chains" value="A/B=1-2549"/>
</dbReference>
<dbReference type="PDB" id="6M4U">
    <property type="method" value="X-ray"/>
    <property type="resolution" value="2.20 A"/>
    <property type="chains" value="B/F=2021-2113"/>
</dbReference>
<dbReference type="PDB" id="6M4W">
    <property type="method" value="X-ray"/>
    <property type="resolution" value="3.11 A"/>
    <property type="chains" value="G/H/I=2021-2113"/>
</dbReference>
<dbReference type="PDB" id="6SB0">
    <property type="method" value="EM"/>
    <property type="resolution" value="5.50 A"/>
    <property type="chains" value="A/B=60-2549"/>
</dbReference>
<dbReference type="PDB" id="6SB2">
    <property type="method" value="EM"/>
    <property type="resolution" value="6.20 A"/>
    <property type="chains" value="A/B=54-2549"/>
</dbReference>
<dbReference type="PDB" id="6ZWM">
    <property type="method" value="EM"/>
    <property type="resolution" value="3.20 A"/>
    <property type="chains" value="A/B=1-2549"/>
</dbReference>
<dbReference type="PDB" id="6ZWO">
    <property type="method" value="EM"/>
    <property type="resolution" value="3.00 A"/>
    <property type="chains" value="B=1-2549"/>
</dbReference>
<dbReference type="PDB" id="7EPD">
    <property type="method" value="EM"/>
    <property type="resolution" value="3.90 A"/>
    <property type="chains" value="B=2019-2114"/>
</dbReference>
<dbReference type="PDB" id="7OWG">
    <property type="method" value="EM"/>
    <property type="resolution" value="4.70 A"/>
    <property type="chains" value="B=1-2549"/>
</dbReference>
<dbReference type="PDB" id="7PE7">
    <property type="method" value="EM"/>
    <property type="resolution" value="3.41 A"/>
    <property type="chains" value="A/B=1-2549"/>
</dbReference>
<dbReference type="PDB" id="7PE8">
    <property type="method" value="EM"/>
    <property type="resolution" value="3.20 A"/>
    <property type="chains" value="A=1-2549"/>
</dbReference>
<dbReference type="PDB" id="7PE9">
    <property type="method" value="EM"/>
    <property type="resolution" value="3.70 A"/>
    <property type="chains" value="A=1-2549"/>
</dbReference>
<dbReference type="PDB" id="7PEA">
    <property type="method" value="EM"/>
    <property type="resolution" value="4.07 A"/>
    <property type="chains" value="A/B=1-2549"/>
</dbReference>
<dbReference type="PDB" id="7PEB">
    <property type="method" value="EM"/>
    <property type="resolution" value="3.67 A"/>
    <property type="chains" value="A=1-2549"/>
</dbReference>
<dbReference type="PDB" id="7PEC">
    <property type="method" value="EM"/>
    <property type="resolution" value="4.24 A"/>
    <property type="chains" value="A=1-2549"/>
</dbReference>
<dbReference type="PDB" id="7TZO">
    <property type="method" value="EM"/>
    <property type="resolution" value="3.28 A"/>
    <property type="chains" value="A/B=1-2549"/>
</dbReference>
<dbReference type="PDB" id="7UXC">
    <property type="method" value="EM"/>
    <property type="resolution" value="3.20 A"/>
    <property type="chains" value="A=1-2549"/>
</dbReference>
<dbReference type="PDB" id="7UXH">
    <property type="method" value="EM"/>
    <property type="resolution" value="3.20 A"/>
    <property type="chains" value="A/C=1-2549"/>
</dbReference>
<dbReference type="PDB" id="8ER6">
    <property type="method" value="X-ray"/>
    <property type="resolution" value="2.81 A"/>
    <property type="chains" value="B/D/F=2019-2112"/>
</dbReference>
<dbReference type="PDB" id="8ER7">
    <property type="method" value="X-ray"/>
    <property type="resolution" value="3.07 A"/>
    <property type="chains" value="B/D/F=2019-2112"/>
</dbReference>
<dbReference type="PDB" id="8ERA">
    <property type="method" value="EM"/>
    <property type="resolution" value="2.86 A"/>
    <property type="chains" value="A=1-2549"/>
</dbReference>
<dbReference type="PDB" id="8PPZ">
    <property type="method" value="X-ray"/>
    <property type="resolution" value="1.85 A"/>
    <property type="chains" value="B=2025-2114"/>
</dbReference>
<dbReference type="PDB" id="8RCH">
    <property type="method" value="EM"/>
    <property type="resolution" value="4.00 A"/>
    <property type="chains" value="A/B=1-2549"/>
</dbReference>
<dbReference type="PDB" id="8RCK">
    <property type="method" value="EM"/>
    <property type="resolution" value="3.40 A"/>
    <property type="chains" value="B=1-2549"/>
</dbReference>
<dbReference type="PDB" id="8RCN">
    <property type="method" value="EM"/>
    <property type="resolution" value="3.10 A"/>
    <property type="chains" value="B=1-2549"/>
</dbReference>
<dbReference type="PDB" id="9F44">
    <property type="method" value="EM"/>
    <property type="resolution" value="3.68 A"/>
    <property type="chains" value="A/B=1-2549"/>
</dbReference>
<dbReference type="PDB" id="9F45">
    <property type="method" value="EM"/>
    <property type="resolution" value="3.74 A"/>
    <property type="chains" value="A/B=1-2549"/>
</dbReference>
<dbReference type="PDBsum" id="1AUE"/>
<dbReference type="PDBsum" id="1FAP"/>
<dbReference type="PDBsum" id="1NSG"/>
<dbReference type="PDBsum" id="2FAP"/>
<dbReference type="PDBsum" id="2GAQ"/>
<dbReference type="PDBsum" id="2NPU"/>
<dbReference type="PDBsum" id="2RSE"/>
<dbReference type="PDBsum" id="3FAP"/>
<dbReference type="PDBsum" id="3JBZ"/>
<dbReference type="PDBsum" id="4DRH"/>
<dbReference type="PDBsum" id="4DRI"/>
<dbReference type="PDBsum" id="4DRJ"/>
<dbReference type="PDBsum" id="4FAP"/>
<dbReference type="PDBsum" id="4JSN"/>
<dbReference type="PDBsum" id="4JSP"/>
<dbReference type="PDBsum" id="4JSV"/>
<dbReference type="PDBsum" id="4JSX"/>
<dbReference type="PDBsum" id="4JT5"/>
<dbReference type="PDBsum" id="4JT6"/>
<dbReference type="PDBsum" id="5FLC"/>
<dbReference type="PDBsum" id="5GPG"/>
<dbReference type="PDBsum" id="5H64"/>
<dbReference type="PDBsum" id="5WBH"/>
<dbReference type="PDBsum" id="5WBU"/>
<dbReference type="PDBsum" id="5WBY"/>
<dbReference type="PDBsum" id="5ZCS"/>
<dbReference type="PDBsum" id="6BCU"/>
<dbReference type="PDBsum" id="6BCX"/>
<dbReference type="PDBsum" id="6M4U"/>
<dbReference type="PDBsum" id="6M4W"/>
<dbReference type="PDBsum" id="6SB0"/>
<dbReference type="PDBsum" id="6SB2"/>
<dbReference type="PDBsum" id="6ZWM"/>
<dbReference type="PDBsum" id="6ZWO"/>
<dbReference type="PDBsum" id="7EPD"/>
<dbReference type="PDBsum" id="7OWG"/>
<dbReference type="PDBsum" id="7PE7"/>
<dbReference type="PDBsum" id="7PE8"/>
<dbReference type="PDBsum" id="7PE9"/>
<dbReference type="PDBsum" id="7PEA"/>
<dbReference type="PDBsum" id="7PEB"/>
<dbReference type="PDBsum" id="7PEC"/>
<dbReference type="PDBsum" id="7TZO"/>
<dbReference type="PDBsum" id="7UXC"/>
<dbReference type="PDBsum" id="7UXH"/>
<dbReference type="PDBsum" id="8ER6"/>
<dbReference type="PDBsum" id="8ER7"/>
<dbReference type="PDBsum" id="8ERA"/>
<dbReference type="PDBsum" id="8PPZ"/>
<dbReference type="PDBsum" id="8RCH"/>
<dbReference type="PDBsum" id="8RCK"/>
<dbReference type="PDBsum" id="8RCN"/>
<dbReference type="PDBsum" id="9F44"/>
<dbReference type="PDBsum" id="9F45"/>
<dbReference type="BMRB" id="P42345"/>
<dbReference type="EMDB" id="EMD-10132"/>
<dbReference type="EMDB" id="EMD-10133"/>
<dbReference type="EMDB" id="EMD-11488"/>
<dbReference type="EMDB" id="EMD-11489"/>
<dbReference type="EMDB" id="EMD-11490"/>
<dbReference type="EMDB" id="EMD-11491"/>
<dbReference type="EMDB" id="EMD-11492"/>
<dbReference type="EMDB" id="EMD-13097"/>
<dbReference type="EMDB" id="EMD-13347"/>
<dbReference type="EMDB" id="EMD-13348"/>
<dbReference type="EMDB" id="EMD-13349"/>
<dbReference type="EMDB" id="EMD-13350"/>
<dbReference type="EMDB" id="EMD-13351"/>
<dbReference type="EMDB" id="EMD-13352"/>
<dbReference type="EMDB" id="EMD-19052"/>
<dbReference type="EMDB" id="EMD-19053"/>
<dbReference type="EMDB" id="EMD-19056"/>
<dbReference type="EMDB" id="EMD-26213"/>
<dbReference type="EMDB" id="EMD-26857"/>
<dbReference type="EMDB" id="EMD-26861"/>
<dbReference type="EMDB" id="EMD-28551"/>
<dbReference type="EMDB" id="EMD-3212"/>
<dbReference type="EMDB" id="EMD-3213"/>
<dbReference type="EMDB" id="EMD-50183"/>
<dbReference type="EMDB" id="EMD-50184"/>
<dbReference type="EMDB" id="EMD-6668"/>
<dbReference type="EMDB" id="EMD-6913"/>
<dbReference type="EMDB" id="EMD-7086"/>
<dbReference type="EMDB" id="EMD-7087"/>
<dbReference type="SMR" id="P42345"/>
<dbReference type="BioGRID" id="108757">
    <property type="interactions" value="375"/>
</dbReference>
<dbReference type="ComplexPortal" id="CPX-4402">
    <property type="entry name" value="mTORC2 complex"/>
</dbReference>
<dbReference type="ComplexPortal" id="CPX-503">
    <property type="entry name" value="mTORC1 complex"/>
</dbReference>
<dbReference type="CORUM" id="P42345"/>
<dbReference type="DIP" id="DIP-790N"/>
<dbReference type="FunCoup" id="P42345">
    <property type="interactions" value="4303"/>
</dbReference>
<dbReference type="IntAct" id="P42345">
    <property type="interactions" value="174"/>
</dbReference>
<dbReference type="MINT" id="P42345"/>
<dbReference type="STRING" id="9606.ENSP00000354558"/>
<dbReference type="BindingDB" id="P42345"/>
<dbReference type="ChEMBL" id="CHEMBL2842"/>
<dbReference type="DrugBank" id="DB12180">
    <property type="generic name" value="Apitolisib"/>
</dbReference>
<dbReference type="DrugBank" id="DB12774">
    <property type="generic name" value="AZD-8055"/>
</dbReference>
<dbReference type="DrugBank" id="DB14846">
    <property type="generic name" value="Bimiralisib"/>
</dbReference>
<dbReference type="DrugBank" id="DB11651">
    <property type="generic name" value="Dactolisib"/>
</dbReference>
<dbReference type="DrugBank" id="DB01590">
    <property type="generic name" value="Everolimus"/>
</dbReference>
<dbReference type="DrugBank" id="DB12010">
    <property type="generic name" value="Fostamatinib"/>
</dbReference>
<dbReference type="DrugBank" id="DB13072">
    <property type="generic name" value="GDC-0349"/>
</dbReference>
<dbReference type="DrugBank" id="DB11896">
    <property type="generic name" value="Gedatolisib"/>
</dbReference>
<dbReference type="DrugBank" id="DB11978">
    <property type="generic name" value="Glasdegib"/>
</dbReference>
<dbReference type="DrugBank" id="DB11962">
    <property type="generic name" value="GSK-1059615"/>
</dbReference>
<dbReference type="DrugBank" id="DB12167">
    <property type="generic name" value="LY-3023414"/>
</dbReference>
<dbReference type="DrugBank" id="DB13062">
    <property type="generic name" value="ME-344"/>
</dbReference>
<dbReference type="DrugBank" id="DB19085">
    <property type="generic name" value="Novolimus"/>
</dbReference>
<dbReference type="DrugBank" id="DB12843">
    <property type="generic name" value="Oleandrin"/>
</dbReference>
<dbReference type="DrugBank" id="DB12570">
    <property type="generic name" value="Onatasertib"/>
</dbReference>
<dbReference type="DrugBank" id="DB12387">
    <property type="generic name" value="OSI-027"/>
</dbReference>
<dbReference type="DrugBank" id="DB11974">
    <property type="generic name" value="PF-04691502"/>
</dbReference>
<dbReference type="DrugBank" id="DB00337">
    <property type="generic name" value="Pimecrolimus"/>
</dbReference>
<dbReference type="DrugBank" id="DB08052">
    <property type="generic name" value="PP-121"/>
</dbReference>
<dbReference type="DrugBank" id="DB06233">
    <property type="generic name" value="Ridaforolimus"/>
</dbReference>
<dbReference type="DrugBank" id="DB04974">
    <property type="generic name" value="Rimiducid"/>
</dbReference>
<dbReference type="DrugBank" id="DB12681">
    <property type="generic name" value="Salirasib"/>
</dbReference>
<dbReference type="DrugBank" id="DB11836">
    <property type="generic name" value="Sapanisertib"/>
</dbReference>
<dbReference type="DrugBank" id="DB05210">
    <property type="generic name" value="SF1126"/>
</dbReference>
<dbReference type="DrugBank" id="DB00877">
    <property type="generic name" value="Sirolimus"/>
</dbReference>
<dbReference type="DrugBank" id="DB06287">
    <property type="generic name" value="Temsirolimus"/>
</dbReference>
<dbReference type="DrugBank" id="DB11925">
    <property type="generic name" value="Vistusertib"/>
</dbReference>
<dbReference type="DrugBank" id="DB12400">
    <property type="generic name" value="Voxtalisib"/>
</dbReference>
<dbReference type="DrugBank" id="DB12986">
    <property type="generic name" value="VS-5584"/>
</dbReference>
<dbReference type="DrugBank" id="DB05241">
    <property type="generic name" value="XL765"/>
</dbReference>
<dbReference type="DrugBank" id="DB18761">
    <property type="generic name" value="Zotarolimus"/>
</dbReference>
<dbReference type="DrugCentral" id="P42345"/>
<dbReference type="GuidetoPHARMACOLOGY" id="2109"/>
<dbReference type="GlyGen" id="P42345">
    <property type="glycosylation" value="7 sites, 2 N-linked glycans (2 sites), 1 O-linked glycan (1 site)"/>
</dbReference>
<dbReference type="iPTMnet" id="P42345"/>
<dbReference type="MetOSite" id="P42345"/>
<dbReference type="PhosphoSitePlus" id="P42345"/>
<dbReference type="SwissPalm" id="P42345"/>
<dbReference type="BioMuta" id="MTOR"/>
<dbReference type="DMDM" id="1169735"/>
<dbReference type="CPTAC" id="CPTAC-1360"/>
<dbReference type="CPTAC" id="CPTAC-1361"/>
<dbReference type="CPTAC" id="CPTAC-3133"/>
<dbReference type="CPTAC" id="CPTAC-3134"/>
<dbReference type="CPTAC" id="CPTAC-5752"/>
<dbReference type="CPTAC" id="CPTAC-5753"/>
<dbReference type="CPTAC" id="CPTAC-5754"/>
<dbReference type="CPTAC" id="CPTAC-5755"/>
<dbReference type="CPTAC" id="CPTAC-5756"/>
<dbReference type="CPTAC" id="CPTAC-5793"/>
<dbReference type="CPTAC" id="CPTAC-5794"/>
<dbReference type="CPTAC" id="CPTAC-5795"/>
<dbReference type="CPTAC" id="CPTAC-5796"/>
<dbReference type="CPTAC" id="CPTAC-5797"/>
<dbReference type="CPTAC" id="CPTAC-5798"/>
<dbReference type="CPTAC" id="CPTAC-5799"/>
<dbReference type="CPTAC" id="CPTAC-5800"/>
<dbReference type="CPTAC" id="non-CPTAC-5421"/>
<dbReference type="CPTAC" id="non-CPTAC-5422"/>
<dbReference type="CPTAC" id="non-CPTAC-5423"/>
<dbReference type="CPTAC" id="non-CPTAC-5424"/>
<dbReference type="CPTAC" id="non-CPTAC-5425"/>
<dbReference type="CPTAC" id="non-CPTAC-5560"/>
<dbReference type="CPTAC" id="non-CPTAC-5561"/>
<dbReference type="CPTAC" id="non-CPTAC-5562"/>
<dbReference type="CPTAC" id="non-CPTAC-5563"/>
<dbReference type="CPTAC" id="non-CPTAC-5709"/>
<dbReference type="CPTAC" id="non-CPTAC-5710"/>
<dbReference type="CPTAC" id="non-CPTAC-5711"/>
<dbReference type="CPTAC" id="non-CPTAC-5712"/>
<dbReference type="jPOST" id="P42345"/>
<dbReference type="MassIVE" id="P42345"/>
<dbReference type="PaxDb" id="9606-ENSP00000354558"/>
<dbReference type="PeptideAtlas" id="P42345"/>
<dbReference type="ProteomicsDB" id="55511"/>
<dbReference type="Pumba" id="P42345"/>
<dbReference type="Antibodypedia" id="3566">
    <property type="antibodies" value="1822 antibodies from 53 providers"/>
</dbReference>
<dbReference type="CPTC" id="P42345">
    <property type="antibodies" value="10 antibodies"/>
</dbReference>
<dbReference type="DNASU" id="2475"/>
<dbReference type="Ensembl" id="ENST00000361445.9">
    <property type="protein sequence ID" value="ENSP00000354558.4"/>
    <property type="gene ID" value="ENSG00000198793.14"/>
</dbReference>
<dbReference type="Ensembl" id="ENST00000703143.2">
    <property type="protein sequence ID" value="ENSP00000515200.2"/>
    <property type="gene ID" value="ENSG00000198793.14"/>
</dbReference>
<dbReference type="GeneID" id="2475"/>
<dbReference type="KEGG" id="hsa:2475"/>
<dbReference type="MANE-Select" id="ENST00000361445.9">
    <property type="protein sequence ID" value="ENSP00000354558.4"/>
    <property type="RefSeq nucleotide sequence ID" value="NM_004958.4"/>
    <property type="RefSeq protein sequence ID" value="NP_004949.1"/>
</dbReference>
<dbReference type="UCSC" id="uc001asd.4">
    <property type="organism name" value="human"/>
</dbReference>
<dbReference type="AGR" id="HGNC:3942"/>
<dbReference type="CTD" id="2475"/>
<dbReference type="DisGeNET" id="2475"/>
<dbReference type="GeneCards" id="MTOR"/>
<dbReference type="HGNC" id="HGNC:3942">
    <property type="gene designation" value="MTOR"/>
</dbReference>
<dbReference type="HPA" id="ENSG00000198793">
    <property type="expression patterns" value="Low tissue specificity"/>
</dbReference>
<dbReference type="MalaCards" id="MTOR"/>
<dbReference type="MIM" id="601231">
    <property type="type" value="gene"/>
</dbReference>
<dbReference type="MIM" id="607341">
    <property type="type" value="phenotype"/>
</dbReference>
<dbReference type="MIM" id="616638">
    <property type="type" value="phenotype"/>
</dbReference>
<dbReference type="neXtProt" id="NX_P42345"/>
<dbReference type="OpenTargets" id="ENSG00000198793"/>
<dbReference type="Orphanet" id="99802">
    <property type="disease" value="Hemimegalencephaly"/>
</dbReference>
<dbReference type="Orphanet" id="269001">
    <property type="disease" value="Isolated focal cortical dysplasia type IIa"/>
</dbReference>
<dbReference type="Orphanet" id="269008">
    <property type="disease" value="Isolated focal cortical dysplasia type IIb"/>
</dbReference>
<dbReference type="Orphanet" id="457485">
    <property type="disease" value="Macrocephaly-intellectual disability-neurodevelopmental disorder-small thorax syndrome"/>
</dbReference>
<dbReference type="PharmGKB" id="PA28360"/>
<dbReference type="VEuPathDB" id="HostDB:ENSG00000198793"/>
<dbReference type="eggNOG" id="KOG0891">
    <property type="taxonomic scope" value="Eukaryota"/>
</dbReference>
<dbReference type="GeneTree" id="ENSGT00930000151037"/>
<dbReference type="HOGENOM" id="CLU_000178_7_1_1"/>
<dbReference type="InParanoid" id="P42345"/>
<dbReference type="OMA" id="MRQHSAK"/>
<dbReference type="OrthoDB" id="2250022at2759"/>
<dbReference type="PAN-GO" id="P42345">
    <property type="GO annotations" value="7 GO annotations based on evolutionary models"/>
</dbReference>
<dbReference type="PhylomeDB" id="P42345"/>
<dbReference type="TreeFam" id="TF105134"/>
<dbReference type="PathwayCommons" id="P42345"/>
<dbReference type="Reactome" id="R-HSA-1257604">
    <property type="pathway name" value="PIP3 activates AKT signaling"/>
</dbReference>
<dbReference type="Reactome" id="R-HSA-1632852">
    <property type="pathway name" value="Macroautophagy"/>
</dbReference>
<dbReference type="Reactome" id="R-HSA-165159">
    <property type="pathway name" value="MTOR signalling"/>
</dbReference>
<dbReference type="Reactome" id="R-HSA-166208">
    <property type="pathway name" value="mTORC1-mediated signalling"/>
</dbReference>
<dbReference type="Reactome" id="R-HSA-3371571">
    <property type="pathway name" value="HSF1-dependent transactivation"/>
</dbReference>
<dbReference type="Reactome" id="R-HSA-380972">
    <property type="pathway name" value="Energy dependent regulation of mTOR by LKB1-AMPK"/>
</dbReference>
<dbReference type="Reactome" id="R-HSA-389357">
    <property type="pathway name" value="CD28 dependent PI3K/Akt signaling"/>
</dbReference>
<dbReference type="Reactome" id="R-HSA-5218920">
    <property type="pathway name" value="VEGFR2 mediated vascular permeability"/>
</dbReference>
<dbReference type="Reactome" id="R-HSA-5628897">
    <property type="pathway name" value="TP53 Regulates Metabolic Genes"/>
</dbReference>
<dbReference type="Reactome" id="R-HSA-5674400">
    <property type="pathway name" value="Constitutive Signaling by AKT1 E17K in Cancer"/>
</dbReference>
<dbReference type="Reactome" id="R-HSA-6804757">
    <property type="pathway name" value="Regulation of TP53 Degradation"/>
</dbReference>
<dbReference type="Reactome" id="R-HSA-8943724">
    <property type="pathway name" value="Regulation of PTEN gene transcription"/>
</dbReference>
<dbReference type="Reactome" id="R-HSA-9639288">
    <property type="pathway name" value="Amino acids regulate mTORC1"/>
</dbReference>
<dbReference type="Reactome" id="R-HSA-9856530">
    <property type="pathway name" value="High laminar flow shear stress activates signaling by PIEZO1 and PECAM1:CDH5:KDR in endothelial cells"/>
</dbReference>
<dbReference type="SABIO-RK" id="P42345"/>
<dbReference type="SignaLink" id="P42345"/>
<dbReference type="SIGNOR" id="P42345"/>
<dbReference type="BioGRID-ORCS" id="2475">
    <property type="hits" value="805 hits in 1184 CRISPR screens"/>
</dbReference>
<dbReference type="CD-CODE" id="8C2F96ED">
    <property type="entry name" value="Centrosome"/>
</dbReference>
<dbReference type="CD-CODE" id="DEE660B4">
    <property type="entry name" value="Stress granule"/>
</dbReference>
<dbReference type="ChiTaRS" id="MTOR">
    <property type="organism name" value="human"/>
</dbReference>
<dbReference type="EvolutionaryTrace" id="P42345"/>
<dbReference type="GeneWiki" id="Mammalian_target_of_rapamycin"/>
<dbReference type="GenomeRNAi" id="2475"/>
<dbReference type="Pharos" id="P42345">
    <property type="development level" value="Tclin"/>
</dbReference>
<dbReference type="PRO" id="PR:P42345"/>
<dbReference type="Proteomes" id="UP000005640">
    <property type="component" value="Chromosome 1"/>
</dbReference>
<dbReference type="RNAct" id="P42345">
    <property type="molecule type" value="protein"/>
</dbReference>
<dbReference type="Bgee" id="ENSG00000198793">
    <property type="expression patterns" value="Expressed in primordial germ cell in gonad and 132 other cell types or tissues"/>
</dbReference>
<dbReference type="ExpressionAtlas" id="P42345">
    <property type="expression patterns" value="baseline and differential"/>
</dbReference>
<dbReference type="GO" id="GO:0005737">
    <property type="term" value="C:cytoplasm"/>
    <property type="evidence" value="ECO:0000314"/>
    <property type="project" value="UniProtKB"/>
</dbReference>
<dbReference type="GO" id="GO:0005829">
    <property type="term" value="C:cytosol"/>
    <property type="evidence" value="ECO:0000314"/>
    <property type="project" value="UniProt"/>
</dbReference>
<dbReference type="GO" id="GO:0030425">
    <property type="term" value="C:dendrite"/>
    <property type="evidence" value="ECO:0007669"/>
    <property type="project" value="Ensembl"/>
</dbReference>
<dbReference type="GO" id="GO:0012505">
    <property type="term" value="C:endomembrane system"/>
    <property type="evidence" value="ECO:0000314"/>
    <property type="project" value="UniProtKB"/>
</dbReference>
<dbReference type="GO" id="GO:0005783">
    <property type="term" value="C:endoplasmic reticulum"/>
    <property type="evidence" value="ECO:0000314"/>
    <property type="project" value="UniProtKB"/>
</dbReference>
<dbReference type="GO" id="GO:0005789">
    <property type="term" value="C:endoplasmic reticulum membrane"/>
    <property type="evidence" value="ECO:0007669"/>
    <property type="project" value="UniProtKB-SubCell"/>
</dbReference>
<dbReference type="GO" id="GO:0000139">
    <property type="term" value="C:Golgi membrane"/>
    <property type="evidence" value="ECO:0007669"/>
    <property type="project" value="UniProtKB-SubCell"/>
</dbReference>
<dbReference type="GO" id="GO:0005765">
    <property type="term" value="C:lysosomal membrane"/>
    <property type="evidence" value="ECO:0000314"/>
    <property type="project" value="UniProtKB"/>
</dbReference>
<dbReference type="GO" id="GO:0005764">
    <property type="term" value="C:lysosome"/>
    <property type="evidence" value="ECO:0000314"/>
    <property type="project" value="UniProtKB"/>
</dbReference>
<dbReference type="GO" id="GO:0016020">
    <property type="term" value="C:membrane"/>
    <property type="evidence" value="ECO:0000314"/>
    <property type="project" value="UniProtKB"/>
</dbReference>
<dbReference type="GO" id="GO:0005741">
    <property type="term" value="C:mitochondrial outer membrane"/>
    <property type="evidence" value="ECO:0007669"/>
    <property type="project" value="UniProtKB-SubCell"/>
</dbReference>
<dbReference type="GO" id="GO:0005635">
    <property type="term" value="C:nuclear envelope"/>
    <property type="evidence" value="ECO:0000314"/>
    <property type="project" value="CACAO"/>
</dbReference>
<dbReference type="GO" id="GO:0005654">
    <property type="term" value="C:nucleoplasm"/>
    <property type="evidence" value="ECO:0000304"/>
    <property type="project" value="Reactome"/>
</dbReference>
<dbReference type="GO" id="GO:0005634">
    <property type="term" value="C:nucleus"/>
    <property type="evidence" value="ECO:0000318"/>
    <property type="project" value="GO_Central"/>
</dbReference>
<dbReference type="GO" id="GO:0045335">
    <property type="term" value="C:phagocytic vesicle"/>
    <property type="evidence" value="ECO:0000314"/>
    <property type="project" value="UniProtKB"/>
</dbReference>
<dbReference type="GO" id="GO:0005886">
    <property type="term" value="C:plasma membrane"/>
    <property type="evidence" value="ECO:0000314"/>
    <property type="project" value="UniProtKB"/>
</dbReference>
<dbReference type="GO" id="GO:0016605">
    <property type="term" value="C:PML body"/>
    <property type="evidence" value="ECO:0007669"/>
    <property type="project" value="UniProtKB-SubCell"/>
</dbReference>
<dbReference type="GO" id="GO:1902554">
    <property type="term" value="C:serine/threonine protein kinase complex"/>
    <property type="evidence" value="ECO:0000314"/>
    <property type="project" value="UniProt"/>
</dbReference>
<dbReference type="GO" id="GO:0031931">
    <property type="term" value="C:TORC1 complex"/>
    <property type="evidence" value="ECO:0000314"/>
    <property type="project" value="UniProtKB"/>
</dbReference>
<dbReference type="GO" id="GO:0031932">
    <property type="term" value="C:TORC2 complex"/>
    <property type="evidence" value="ECO:0000314"/>
    <property type="project" value="UniProtKB"/>
</dbReference>
<dbReference type="GO" id="GO:0005524">
    <property type="term" value="F:ATP binding"/>
    <property type="evidence" value="ECO:0007669"/>
    <property type="project" value="UniProtKB-KW"/>
</dbReference>
<dbReference type="GO" id="GO:0042802">
    <property type="term" value="F:identical protein binding"/>
    <property type="evidence" value="ECO:0000353"/>
    <property type="project" value="IntAct"/>
</dbReference>
<dbReference type="GO" id="GO:0000822">
    <property type="term" value="F:inositol hexakisphosphate binding"/>
    <property type="evidence" value="ECO:0000314"/>
    <property type="project" value="UniProtKB"/>
</dbReference>
<dbReference type="GO" id="GO:0051219">
    <property type="term" value="F:phosphoprotein binding"/>
    <property type="evidence" value="ECO:0000353"/>
    <property type="project" value="UniProtKB"/>
</dbReference>
<dbReference type="GO" id="GO:0004672">
    <property type="term" value="F:protein kinase activity"/>
    <property type="evidence" value="ECO:0000314"/>
    <property type="project" value="WormBase"/>
</dbReference>
<dbReference type="GO" id="GO:0106310">
    <property type="term" value="F:protein serine kinase activity"/>
    <property type="evidence" value="ECO:0007669"/>
    <property type="project" value="RHEA"/>
</dbReference>
<dbReference type="GO" id="GO:0004674">
    <property type="term" value="F:protein serine/threonine kinase activity"/>
    <property type="evidence" value="ECO:0000314"/>
    <property type="project" value="UniProtKB"/>
</dbReference>
<dbReference type="GO" id="GO:0004713">
    <property type="term" value="F:protein tyrosine kinase activity"/>
    <property type="evidence" value="ECO:0000314"/>
    <property type="project" value="UniProtKB"/>
</dbReference>
<dbReference type="GO" id="GO:0043022">
    <property type="term" value="F:ribosome binding"/>
    <property type="evidence" value="ECO:0000314"/>
    <property type="project" value="UniProtKB"/>
</dbReference>
<dbReference type="GO" id="GO:0001002">
    <property type="term" value="F:RNA polymerase III type 1 promoter sequence-specific DNA binding"/>
    <property type="evidence" value="ECO:0000314"/>
    <property type="project" value="UniProtKB"/>
</dbReference>
<dbReference type="GO" id="GO:0001003">
    <property type="term" value="F:RNA polymerase III type 2 promoter sequence-specific DNA binding"/>
    <property type="evidence" value="ECO:0000314"/>
    <property type="project" value="UniProtKB"/>
</dbReference>
<dbReference type="GO" id="GO:0001006">
    <property type="term" value="F:RNA polymerase III type 3 promoter sequence-specific DNA binding"/>
    <property type="evidence" value="ECO:0000314"/>
    <property type="project" value="UniProtKB"/>
</dbReference>
<dbReference type="GO" id="GO:0001156">
    <property type="term" value="F:TFIIIC-class transcription factor complex binding"/>
    <property type="evidence" value="ECO:0000314"/>
    <property type="project" value="UniProtKB"/>
</dbReference>
<dbReference type="GO" id="GO:0044325">
    <property type="term" value="F:transmembrane transporter binding"/>
    <property type="evidence" value="ECO:0007669"/>
    <property type="project" value="Ensembl"/>
</dbReference>
<dbReference type="GO" id="GO:0006207">
    <property type="term" value="P:'de novo' pyrimidine nucleobase biosynthetic process"/>
    <property type="evidence" value="ECO:0007669"/>
    <property type="project" value="Ensembl"/>
</dbReference>
<dbReference type="GO" id="GO:0043276">
    <property type="term" value="P:anoikis"/>
    <property type="evidence" value="ECO:0000303"/>
    <property type="project" value="ParkinsonsUK-UCL"/>
</dbReference>
<dbReference type="GO" id="GO:0048266">
    <property type="term" value="P:behavioral response to pain"/>
    <property type="evidence" value="ECO:0007669"/>
    <property type="project" value="Ensembl"/>
</dbReference>
<dbReference type="GO" id="GO:0033173">
    <property type="term" value="P:calcineurin-NFAT signaling cascade"/>
    <property type="evidence" value="ECO:0007669"/>
    <property type="project" value="Ensembl"/>
</dbReference>
<dbReference type="GO" id="GO:0055013">
    <property type="term" value="P:cardiac muscle cell development"/>
    <property type="evidence" value="ECO:0007669"/>
    <property type="project" value="Ensembl"/>
</dbReference>
<dbReference type="GO" id="GO:0060048">
    <property type="term" value="P:cardiac muscle contraction"/>
    <property type="evidence" value="ECO:0007669"/>
    <property type="project" value="Ensembl"/>
</dbReference>
<dbReference type="GO" id="GO:0034198">
    <property type="term" value="P:cellular response to amino acid starvation"/>
    <property type="evidence" value="ECO:0000314"/>
    <property type="project" value="UniProtKB"/>
</dbReference>
<dbReference type="GO" id="GO:0071230">
    <property type="term" value="P:cellular response to amino acid stimulus"/>
    <property type="evidence" value="ECO:0000314"/>
    <property type="project" value="CAFA"/>
</dbReference>
<dbReference type="GO" id="GO:0071456">
    <property type="term" value="P:cellular response to hypoxia"/>
    <property type="evidence" value="ECO:0000250"/>
    <property type="project" value="UniProtKB"/>
</dbReference>
<dbReference type="GO" id="GO:0032869">
    <property type="term" value="P:cellular response to insulin stimulus"/>
    <property type="evidence" value="ECO:0000314"/>
    <property type="project" value="UniProt"/>
</dbReference>
<dbReference type="GO" id="GO:0071233">
    <property type="term" value="P:cellular response to L-leucine"/>
    <property type="evidence" value="ECO:0000314"/>
    <property type="project" value="CAFA"/>
</dbReference>
<dbReference type="GO" id="GO:1990253">
    <property type="term" value="P:cellular response to leucine starvation"/>
    <property type="evidence" value="ECO:0000314"/>
    <property type="project" value="CAFA"/>
</dbReference>
<dbReference type="GO" id="GO:0061431">
    <property type="term" value="P:cellular response to methionine"/>
    <property type="evidence" value="ECO:0000314"/>
    <property type="project" value="UniProt"/>
</dbReference>
<dbReference type="GO" id="GO:0031670">
    <property type="term" value="P:cellular response to nutrient"/>
    <property type="evidence" value="ECO:0000314"/>
    <property type="project" value="UniProt"/>
</dbReference>
<dbReference type="GO" id="GO:0031669">
    <property type="term" value="P:cellular response to nutrient levels"/>
    <property type="evidence" value="ECO:0000314"/>
    <property type="project" value="UniProt"/>
</dbReference>
<dbReference type="GO" id="GO:0071470">
    <property type="term" value="P:cellular response to osmotic stress"/>
    <property type="evidence" value="ECO:0000303"/>
    <property type="project" value="ComplexPortal"/>
</dbReference>
<dbReference type="GO" id="GO:0009267">
    <property type="term" value="P:cellular response to starvation"/>
    <property type="evidence" value="ECO:0000314"/>
    <property type="project" value="UniProtKB"/>
</dbReference>
<dbReference type="GO" id="GO:0007010">
    <property type="term" value="P:cytoskeleton organization"/>
    <property type="evidence" value="ECO:0000303"/>
    <property type="project" value="ComplexPortal"/>
</dbReference>
<dbReference type="GO" id="GO:0006974">
    <property type="term" value="P:DNA damage response"/>
    <property type="evidence" value="ECO:0000303"/>
    <property type="project" value="ComplexPortal"/>
</dbReference>
<dbReference type="GO" id="GO:0006112">
    <property type="term" value="P:energy reserve metabolic process"/>
    <property type="evidence" value="ECO:0007669"/>
    <property type="project" value="Ensembl"/>
</dbReference>
<dbReference type="GO" id="GO:0007281">
    <property type="term" value="P:germ cell development"/>
    <property type="evidence" value="ECO:0007669"/>
    <property type="project" value="Ensembl"/>
</dbReference>
<dbReference type="GO" id="GO:0003007">
    <property type="term" value="P:heart morphogenesis"/>
    <property type="evidence" value="ECO:0007669"/>
    <property type="project" value="Ensembl"/>
</dbReference>
<dbReference type="GO" id="GO:0003179">
    <property type="term" value="P:heart valve morphogenesis"/>
    <property type="evidence" value="ECO:0007669"/>
    <property type="project" value="Ensembl"/>
</dbReference>
<dbReference type="GO" id="GO:0006954">
    <property type="term" value="P:inflammatory response"/>
    <property type="evidence" value="ECO:0007669"/>
    <property type="project" value="Ensembl"/>
</dbReference>
<dbReference type="GO" id="GO:0016236">
    <property type="term" value="P:macroautophagy"/>
    <property type="evidence" value="ECO:0007669"/>
    <property type="project" value="Ensembl"/>
</dbReference>
<dbReference type="GO" id="GO:0035264">
    <property type="term" value="P:multicellular organism growth"/>
    <property type="evidence" value="ECO:0007669"/>
    <property type="project" value="Ensembl"/>
</dbReference>
<dbReference type="GO" id="GO:0043066">
    <property type="term" value="P:negative regulation of apoptotic process"/>
    <property type="evidence" value="ECO:0000303"/>
    <property type="project" value="ComplexPortal"/>
</dbReference>
<dbReference type="GO" id="GO:0010507">
    <property type="term" value="P:negative regulation of autophagy"/>
    <property type="evidence" value="ECO:0000314"/>
    <property type="project" value="UniProtKB"/>
</dbReference>
<dbReference type="GO" id="GO:0070885">
    <property type="term" value="P:negative regulation of calcineurin-NFAT signaling cascade"/>
    <property type="evidence" value="ECO:0007669"/>
    <property type="project" value="Ensembl"/>
</dbReference>
<dbReference type="GO" id="GO:0045792">
    <property type="term" value="P:negative regulation of cell size"/>
    <property type="evidence" value="ECO:0007669"/>
    <property type="project" value="Ensembl"/>
</dbReference>
<dbReference type="GO" id="GO:0046627">
    <property type="term" value="P:negative regulation of insulin receptor signaling pathway"/>
    <property type="evidence" value="ECO:0000250"/>
    <property type="project" value="UniProt"/>
</dbReference>
<dbReference type="GO" id="GO:1905672">
    <property type="term" value="P:negative regulation of lysosome organization"/>
    <property type="evidence" value="ECO:0000314"/>
    <property type="project" value="UniProtKB"/>
</dbReference>
<dbReference type="GO" id="GO:0016242">
    <property type="term" value="P:negative regulation of macroautophagy"/>
    <property type="evidence" value="ECO:0000314"/>
    <property type="project" value="MGI"/>
</dbReference>
<dbReference type="GO" id="GO:1900181">
    <property type="term" value="P:negative regulation of protein localization to nucleus"/>
    <property type="evidence" value="ECO:0000314"/>
    <property type="project" value="UniProtKB"/>
</dbReference>
<dbReference type="GO" id="GO:0019228">
    <property type="term" value="P:neuronal action potential"/>
    <property type="evidence" value="ECO:0007669"/>
    <property type="project" value="Ensembl"/>
</dbReference>
<dbReference type="GO" id="GO:0048709">
    <property type="term" value="P:oligodendrocyte differentiation"/>
    <property type="evidence" value="ECO:0007669"/>
    <property type="project" value="Ensembl"/>
</dbReference>
<dbReference type="GO" id="GO:0030838">
    <property type="term" value="P:positive regulation of actin filament polymerization"/>
    <property type="evidence" value="ECO:0007669"/>
    <property type="project" value="Ensembl"/>
</dbReference>
<dbReference type="GO" id="GO:0030307">
    <property type="term" value="P:positive regulation of cell growth"/>
    <property type="evidence" value="ECO:0000303"/>
    <property type="project" value="ComplexPortal"/>
</dbReference>
<dbReference type="GO" id="GO:1904690">
    <property type="term" value="P:positive regulation of cytoplasmic translational initiation"/>
    <property type="evidence" value="ECO:0000304"/>
    <property type="project" value="ARUK-UCL"/>
</dbReference>
<dbReference type="GO" id="GO:0010718">
    <property type="term" value="P:positive regulation of epithelial to mesenchymal transition"/>
    <property type="evidence" value="ECO:0000315"/>
    <property type="project" value="BHF-UCL"/>
</dbReference>
<dbReference type="GO" id="GO:0045821">
    <property type="term" value="P:positive regulation of glycolytic process"/>
    <property type="evidence" value="ECO:0000303"/>
    <property type="project" value="ComplexPortal"/>
</dbReference>
<dbReference type="GO" id="GO:0051549">
    <property type="term" value="P:positive regulation of keratinocyte migration"/>
    <property type="evidence" value="ECO:0000315"/>
    <property type="project" value="BHF-UCL"/>
</dbReference>
<dbReference type="GO" id="GO:0010592">
    <property type="term" value="P:positive regulation of lamellipodium assembly"/>
    <property type="evidence" value="ECO:0007669"/>
    <property type="project" value="Ensembl"/>
</dbReference>
<dbReference type="GO" id="GO:0046889">
    <property type="term" value="P:positive regulation of lipid biosynthetic process"/>
    <property type="evidence" value="ECO:0000315"/>
    <property type="project" value="UniProtKB"/>
</dbReference>
<dbReference type="GO" id="GO:0010831">
    <property type="term" value="P:positive regulation of myotube differentiation"/>
    <property type="evidence" value="ECO:0007669"/>
    <property type="project" value="Ensembl"/>
</dbReference>
<dbReference type="GO" id="GO:0048714">
    <property type="term" value="P:positive regulation of oligodendrocyte differentiation"/>
    <property type="evidence" value="ECO:0007669"/>
    <property type="project" value="Ensembl"/>
</dbReference>
<dbReference type="GO" id="GO:1905857">
    <property type="term" value="P:positive regulation of pentose-phosphate shunt"/>
    <property type="evidence" value="ECO:0000303"/>
    <property type="project" value="ComplexPortal"/>
</dbReference>
<dbReference type="GO" id="GO:0051897">
    <property type="term" value="P:positive regulation of phosphatidylinositol 3-kinase/protein kinase B signal transduction"/>
    <property type="evidence" value="ECO:0000304"/>
    <property type="project" value="Reactome"/>
</dbReference>
<dbReference type="GO" id="GO:0051496">
    <property type="term" value="P:positive regulation of stress fiber assembly"/>
    <property type="evidence" value="ECO:0007669"/>
    <property type="project" value="Ensembl"/>
</dbReference>
<dbReference type="GO" id="GO:0045945">
    <property type="term" value="P:positive regulation of transcription by RNA polymerase III"/>
    <property type="evidence" value="ECO:0000315"/>
    <property type="project" value="UniProtKB"/>
</dbReference>
<dbReference type="GO" id="GO:1901838">
    <property type="term" value="P:positive regulation of transcription of nucleolar large rRNA by RNA polymerase I"/>
    <property type="evidence" value="ECO:0000315"/>
    <property type="project" value="UniProtKB"/>
</dbReference>
<dbReference type="GO" id="GO:0045727">
    <property type="term" value="P:positive regulation of translation"/>
    <property type="evidence" value="ECO:0000314"/>
    <property type="project" value="UniProtKB"/>
</dbReference>
<dbReference type="GO" id="GO:0045948">
    <property type="term" value="P:positive regulation of translational initiation"/>
    <property type="evidence" value="ECO:0000314"/>
    <property type="project" value="UniProt"/>
</dbReference>
<dbReference type="GO" id="GO:2000060">
    <property type="term" value="P:positive regulation of ubiquitin-dependent protein catabolic process"/>
    <property type="evidence" value="ECO:0000314"/>
    <property type="project" value="UniProtKB"/>
</dbReference>
<dbReference type="GO" id="GO:1903691">
    <property type="term" value="P:positive regulation of wound healing, spreading of epidermal cells"/>
    <property type="evidence" value="ECO:0000315"/>
    <property type="project" value="BHF-UCL"/>
</dbReference>
<dbReference type="GO" id="GO:0009791">
    <property type="term" value="P:post-embryonic development"/>
    <property type="evidence" value="ECO:0007669"/>
    <property type="project" value="Ensembl"/>
</dbReference>
<dbReference type="GO" id="GO:0031648">
    <property type="term" value="P:protein destabilization"/>
    <property type="evidence" value="ECO:0000314"/>
    <property type="project" value="UniProt"/>
</dbReference>
<dbReference type="GO" id="GO:0050821">
    <property type="term" value="P:protein stabilization"/>
    <property type="evidence" value="ECO:0000250"/>
    <property type="project" value="UniProt"/>
</dbReference>
<dbReference type="GO" id="GO:0032956">
    <property type="term" value="P:regulation of actin cytoskeleton organization"/>
    <property type="evidence" value="ECO:0000315"/>
    <property type="project" value="UniProtKB"/>
</dbReference>
<dbReference type="GO" id="GO:2000785">
    <property type="term" value="P:regulation of autophagosome assembly"/>
    <property type="evidence" value="ECO:0000314"/>
    <property type="project" value="UniProt"/>
</dbReference>
<dbReference type="GO" id="GO:0001558">
    <property type="term" value="P:regulation of cell growth"/>
    <property type="evidence" value="ECO:0000314"/>
    <property type="project" value="UniProtKB"/>
</dbReference>
<dbReference type="GO" id="GO:0008361">
    <property type="term" value="P:regulation of cell size"/>
    <property type="evidence" value="ECO:0000315"/>
    <property type="project" value="CAFA"/>
</dbReference>
<dbReference type="GO" id="GO:1900034">
    <property type="term" value="P:regulation of cellular response to heat"/>
    <property type="evidence" value="ECO:0000304"/>
    <property type="project" value="Reactome"/>
</dbReference>
<dbReference type="GO" id="GO:0042752">
    <property type="term" value="P:regulation of circadian rhythm"/>
    <property type="evidence" value="ECO:0000250"/>
    <property type="project" value="UniProtKB"/>
</dbReference>
<dbReference type="GO" id="GO:1904059">
    <property type="term" value="P:regulation of locomotor rhythm"/>
    <property type="evidence" value="ECO:0000250"/>
    <property type="project" value="UniProtKB"/>
</dbReference>
<dbReference type="GO" id="GO:1905671">
    <property type="term" value="P:regulation of lysosome organization"/>
    <property type="evidence" value="ECO:0000314"/>
    <property type="project" value="UniProtKB"/>
</dbReference>
<dbReference type="GO" id="GO:0016241">
    <property type="term" value="P:regulation of macroautophagy"/>
    <property type="evidence" value="ECO:0000304"/>
    <property type="project" value="Reactome"/>
</dbReference>
<dbReference type="GO" id="GO:0090559">
    <property type="term" value="P:regulation of membrane permeability"/>
    <property type="evidence" value="ECO:0007669"/>
    <property type="project" value="Ensembl"/>
</dbReference>
<dbReference type="GO" id="GO:0031641">
    <property type="term" value="P:regulation of myelination"/>
    <property type="evidence" value="ECO:0007669"/>
    <property type="project" value="Ensembl"/>
</dbReference>
<dbReference type="GO" id="GO:0045670">
    <property type="term" value="P:regulation of osteoclast differentiation"/>
    <property type="evidence" value="ECO:0000250"/>
    <property type="project" value="UniProtKB"/>
</dbReference>
<dbReference type="GO" id="GO:1901796">
    <property type="term" value="P:regulation of signal transduction by p53 class mediator"/>
    <property type="evidence" value="ECO:0000304"/>
    <property type="project" value="Reactome"/>
</dbReference>
<dbReference type="GO" id="GO:0043200">
    <property type="term" value="P:response to amino acid"/>
    <property type="evidence" value="ECO:0000314"/>
    <property type="project" value="UniProtKB"/>
</dbReference>
<dbReference type="GO" id="GO:0009408">
    <property type="term" value="P:response to heat"/>
    <property type="evidence" value="ECO:0007669"/>
    <property type="project" value="Ensembl"/>
</dbReference>
<dbReference type="GO" id="GO:0031667">
    <property type="term" value="P:response to nutrient levels"/>
    <property type="evidence" value="ECO:0000314"/>
    <property type="project" value="UniProtKB"/>
</dbReference>
<dbReference type="GO" id="GO:0009615">
    <property type="term" value="P:response to virus"/>
    <property type="evidence" value="ECO:0007669"/>
    <property type="project" value="Ensembl"/>
</dbReference>
<dbReference type="GO" id="GO:0031529">
    <property type="term" value="P:ruffle organization"/>
    <property type="evidence" value="ECO:0007669"/>
    <property type="project" value="Ensembl"/>
</dbReference>
<dbReference type="GO" id="GO:0031295">
    <property type="term" value="P:T cell costimulation"/>
    <property type="evidence" value="ECO:0000304"/>
    <property type="project" value="Reactome"/>
</dbReference>
<dbReference type="GO" id="GO:0002296">
    <property type="term" value="P:T-helper 1 cell lineage commitment"/>
    <property type="evidence" value="ECO:0007669"/>
    <property type="project" value="Ensembl"/>
</dbReference>
<dbReference type="GO" id="GO:0031929">
    <property type="term" value="P:TOR signaling"/>
    <property type="evidence" value="ECO:0000315"/>
    <property type="project" value="UniProtKB"/>
</dbReference>
<dbReference type="GO" id="GO:0038202">
    <property type="term" value="P:TORC1 signaling"/>
    <property type="evidence" value="ECO:0000314"/>
    <property type="project" value="UniProtKB"/>
</dbReference>
<dbReference type="GO" id="GO:0038203">
    <property type="term" value="P:TORC2 signaling"/>
    <property type="evidence" value="ECO:0000314"/>
    <property type="project" value="UniProtKB"/>
</dbReference>
<dbReference type="GO" id="GO:0097700">
    <property type="term" value="P:vascular endothelial cell response to laminar fluid shear stress"/>
    <property type="evidence" value="ECO:0000304"/>
    <property type="project" value="Reactome"/>
</dbReference>
<dbReference type="GO" id="GO:0050882">
    <property type="term" value="P:voluntary musculoskeletal movement"/>
    <property type="evidence" value="ECO:0007669"/>
    <property type="project" value="Ensembl"/>
</dbReference>
<dbReference type="CDD" id="cd05169">
    <property type="entry name" value="PIKKc_TOR"/>
    <property type="match status" value="1"/>
</dbReference>
<dbReference type="FunFam" id="1.10.1070.11:FF:000074">
    <property type="entry name" value="DJ576K7.1 (FK506 binding protein 12-rapamycin associated protein 1)"/>
    <property type="match status" value="1"/>
</dbReference>
<dbReference type="FunFam" id="1.10.1070.11:FF:000058">
    <property type="entry name" value="MTOR isoform 6"/>
    <property type="match status" value="1"/>
</dbReference>
<dbReference type="FunFam" id="1.25.10.10:FF:000060">
    <property type="entry name" value="Serine/threonine-protein kinase mTOR"/>
    <property type="match status" value="1"/>
</dbReference>
<dbReference type="FunFam" id="1.25.10.10:FF:000094">
    <property type="entry name" value="Serine/threonine-protein kinase mTOR"/>
    <property type="match status" value="1"/>
</dbReference>
<dbReference type="FunFam" id="1.25.10.10:FF:000532">
    <property type="entry name" value="Serine/threonine-protein kinase mTOR"/>
    <property type="match status" value="1"/>
</dbReference>
<dbReference type="FunFam" id="1.20.120.150:FF:000001">
    <property type="entry name" value="Serine/threonine-protein kinase TOR"/>
    <property type="match status" value="1"/>
</dbReference>
<dbReference type="FunFam" id="1.25.10.10:FF:000083">
    <property type="entry name" value="Serine/threonine-protein kinase TOR"/>
    <property type="match status" value="1"/>
</dbReference>
<dbReference type="FunFam" id="3.30.1010.10:FF:000004">
    <property type="entry name" value="Serine/threonine-protein kinase TOR"/>
    <property type="match status" value="1"/>
</dbReference>
<dbReference type="Gene3D" id="1.20.120.150">
    <property type="entry name" value="FKBP12-rapamycin binding domain"/>
    <property type="match status" value="1"/>
</dbReference>
<dbReference type="Gene3D" id="1.25.10.10">
    <property type="entry name" value="Leucine-rich Repeat Variant"/>
    <property type="match status" value="4"/>
</dbReference>
<dbReference type="Gene3D" id="1.10.1070.11">
    <property type="entry name" value="Phosphatidylinositol 3-/4-kinase, catalytic domain"/>
    <property type="match status" value="1"/>
</dbReference>
<dbReference type="Gene3D" id="3.30.1010.10">
    <property type="entry name" value="Phosphatidylinositol 3-kinase Catalytic Subunit, Chain A, domain 4"/>
    <property type="match status" value="1"/>
</dbReference>
<dbReference type="Gene3D" id="1.25.40.10">
    <property type="entry name" value="Tetratricopeptide repeat domain"/>
    <property type="match status" value="1"/>
</dbReference>
<dbReference type="IDEAL" id="IID00598"/>
<dbReference type="InterPro" id="IPR011989">
    <property type="entry name" value="ARM-like"/>
</dbReference>
<dbReference type="InterPro" id="IPR016024">
    <property type="entry name" value="ARM-type_fold"/>
</dbReference>
<dbReference type="InterPro" id="IPR050517">
    <property type="entry name" value="DDR_Repair_Kinase"/>
</dbReference>
<dbReference type="InterPro" id="IPR003152">
    <property type="entry name" value="FATC_dom"/>
</dbReference>
<dbReference type="InterPro" id="IPR009076">
    <property type="entry name" value="FRB_dom"/>
</dbReference>
<dbReference type="InterPro" id="IPR036738">
    <property type="entry name" value="FRB_sf"/>
</dbReference>
<dbReference type="InterPro" id="IPR011009">
    <property type="entry name" value="Kinase-like_dom_sf"/>
</dbReference>
<dbReference type="InterPro" id="IPR024585">
    <property type="entry name" value="mTOR_dom"/>
</dbReference>
<dbReference type="InterPro" id="IPR000403">
    <property type="entry name" value="PI3/4_kinase_cat_dom"/>
</dbReference>
<dbReference type="InterPro" id="IPR036940">
    <property type="entry name" value="PI3/4_kinase_cat_sf"/>
</dbReference>
<dbReference type="InterPro" id="IPR018936">
    <property type="entry name" value="PI3/4_kinase_CS"/>
</dbReference>
<dbReference type="InterPro" id="IPR003151">
    <property type="entry name" value="PIK-rel_kinase_FAT"/>
</dbReference>
<dbReference type="InterPro" id="IPR014009">
    <property type="entry name" value="PIK_FAT"/>
</dbReference>
<dbReference type="InterPro" id="IPR026683">
    <property type="entry name" value="TOR_cat"/>
</dbReference>
<dbReference type="InterPro" id="IPR011990">
    <property type="entry name" value="TPR-like_helical_dom_sf"/>
</dbReference>
<dbReference type="PANTHER" id="PTHR11139">
    <property type="entry name" value="ATAXIA TELANGIECTASIA MUTATED ATM -RELATED"/>
    <property type="match status" value="1"/>
</dbReference>
<dbReference type="PANTHER" id="PTHR11139:SF9">
    <property type="entry name" value="SERINE_THREONINE-PROTEIN KINASE MTOR"/>
    <property type="match status" value="1"/>
</dbReference>
<dbReference type="Pfam" id="PF02259">
    <property type="entry name" value="FAT"/>
    <property type="match status" value="1"/>
</dbReference>
<dbReference type="Pfam" id="PF02260">
    <property type="entry name" value="FATC"/>
    <property type="match status" value="1"/>
</dbReference>
<dbReference type="Pfam" id="PF08771">
    <property type="entry name" value="FRB_dom"/>
    <property type="match status" value="1"/>
</dbReference>
<dbReference type="Pfam" id="PF23593">
    <property type="entry name" value="HEAT_ATR"/>
    <property type="match status" value="1"/>
</dbReference>
<dbReference type="Pfam" id="PF11865">
    <property type="entry name" value="mTOR_dom"/>
    <property type="match status" value="1"/>
</dbReference>
<dbReference type="Pfam" id="PF00454">
    <property type="entry name" value="PI3_PI4_kinase"/>
    <property type="match status" value="1"/>
</dbReference>
<dbReference type="SMART" id="SM01346">
    <property type="entry name" value="DUF3385"/>
    <property type="match status" value="1"/>
</dbReference>
<dbReference type="SMART" id="SM01343">
    <property type="entry name" value="FATC"/>
    <property type="match status" value="1"/>
</dbReference>
<dbReference type="SMART" id="SM00146">
    <property type="entry name" value="PI3Kc"/>
    <property type="match status" value="1"/>
</dbReference>
<dbReference type="SMART" id="SM01345">
    <property type="entry name" value="Rapamycin_bind"/>
    <property type="match status" value="1"/>
</dbReference>
<dbReference type="SUPFAM" id="SSF48371">
    <property type="entry name" value="ARM repeat"/>
    <property type="match status" value="2"/>
</dbReference>
<dbReference type="SUPFAM" id="SSF47212">
    <property type="entry name" value="FKBP12-rapamycin-binding domain of FKBP-rapamycin-associated protein (FRAP)"/>
    <property type="match status" value="1"/>
</dbReference>
<dbReference type="SUPFAM" id="SSF56112">
    <property type="entry name" value="Protein kinase-like (PK-like)"/>
    <property type="match status" value="1"/>
</dbReference>
<dbReference type="PROSITE" id="PS51189">
    <property type="entry name" value="FAT"/>
    <property type="match status" value="1"/>
</dbReference>
<dbReference type="PROSITE" id="PS51190">
    <property type="entry name" value="FATC"/>
    <property type="match status" value="1"/>
</dbReference>
<dbReference type="PROSITE" id="PS00915">
    <property type="entry name" value="PI3_4_KINASE_1"/>
    <property type="match status" value="1"/>
</dbReference>
<dbReference type="PROSITE" id="PS00916">
    <property type="entry name" value="PI3_4_KINASE_2"/>
    <property type="match status" value="1"/>
</dbReference>
<dbReference type="PROSITE" id="PS50290">
    <property type="entry name" value="PI3_4_KINASE_3"/>
    <property type="match status" value="1"/>
</dbReference>
<comment type="function">
    <text evidence="1 9 10 11 12 14 16 17 18 19 20 25 27 28 29 30 37 38 43 44 45 47 48 49 52 53 54 55 59 60 61 62 66 69 71 77 78 79 80 82 83 86 87 89 90 91 95 97 100 101 102 103 105">Serine/threonine protein kinase which is a central regulator of cellular metabolism, growth and survival in response to hormones, growth factors, nutrients, energy and stress signals (PubMed:12087098, PubMed:12150925, PubMed:12150926, PubMed:12231510, PubMed:12718876, PubMed:14651849, PubMed:15268862, PubMed:15467718, PubMed:15545625, PubMed:15718470, PubMed:18497260, PubMed:18762023, PubMed:18925875, PubMed:20516213, PubMed:20537536, PubMed:21659604, PubMed:23429703, PubMed:23429704, PubMed:25799227, PubMed:26018084, PubMed:29150432, PubMed:29236692, PubMed:31112131, PubMed:31601708, PubMed:32561715, PubMed:34519269, PubMed:37751742). MTOR directly or indirectly regulates the phosphorylation of at least 800 proteins (PubMed:15268862, PubMed:15467718, PubMed:17517883, PubMed:18372248, PubMed:18497260, PubMed:18925875, PubMed:20516213, PubMed:21576368, PubMed:21659604, PubMed:23429704, PubMed:30171069, PubMed:29236692, PubMed:37751742). Functions as part of 2 structurally and functionally distinct signaling complexes mTORC1 and mTORC2 (mTOR complex 1 and 2) (PubMed:15268862, PubMed:15467718, PubMed:18497260, PubMed:18925875, PubMed:20516213, PubMed:21576368, PubMed:21659604, PubMed:23429704, PubMed:29424687, PubMed:29567957, PubMed:35926713). In response to nutrients, growth factors or amino acids, mTORC1 is recruited to the lysosome membrane and promotes protein, lipid and nucleotide synthesis by phosphorylating key regulators of mRNA translation and ribosome synthesis (PubMed:12087098, PubMed:12150925, PubMed:12150926, PubMed:12231510, PubMed:12718876, PubMed:14651849, PubMed:15268862, PubMed:15467718, PubMed:15545625, PubMed:15718470, PubMed:18497260, PubMed:18762023, PubMed:18925875, PubMed:20516213, PubMed:20537536, PubMed:21659604, PubMed:23429703, PubMed:23429704, PubMed:25799227, PubMed:26018084, PubMed:29150432, PubMed:29236692, PubMed:31112131, PubMed:34519269). This includes phosphorylation of EIF4EBP1 and release of its inhibition toward the elongation initiation factor 4E (eiF4E) (PubMed:24403073, PubMed:29236692). Moreover, phosphorylates and activates RPS6KB1 and RPS6KB2 that promote protein synthesis by modulating the activity of their downstream targets including ribosomal protein S6, eukaryotic translation initiation factor EIF4B, and the inhibitor of translation initiation PDCD4 (PubMed:12087098, PubMed:12150925, PubMed:18925875, PubMed:29150432, PubMed:29236692). Stimulates the pyrimidine biosynthesis pathway, both by acute regulation through RPS6KB1-mediated phosphorylation of the biosynthetic enzyme CAD, and delayed regulation, through transcriptional enhancement of the pentose phosphate pathway which produces 5-phosphoribosyl-1-pyrophosphate (PRPP), an allosteric activator of CAD at a later step in synthesis, this function is dependent on the mTORC1 complex (PubMed:23429703, PubMed:23429704). Regulates ribosome synthesis by activating RNA polymerase III-dependent transcription through phosphorylation and inhibition of MAF1 an RNA polymerase III-repressor (PubMed:20516213). Activates dormant ribosomes by mediating phosphorylation of SERBP1, leading to SERBP1 inactivation and reactivation of translation (PubMed:36691768). In parallel to protein synthesis, also regulates lipid synthesis through SREBF1/SREBP1 and LPIN1 (PubMed:23426360). To maintain energy homeostasis mTORC1 may also regulate mitochondrial biogenesis through regulation of PPARGC1A (By similarity). In the same time, mTORC1 inhibits catabolic pathways: negatively regulates autophagy through phosphorylation of ULK1 (PubMed:32561715). Under nutrient sufficiency, phosphorylates ULK1 at 'Ser-758', disrupting the interaction with AMPK and preventing activation of ULK1 (PubMed:32561715). Also prevents autophagy through phosphorylation of the autophagy inhibitor DAP (PubMed:20537536). Also prevents autophagy by phosphorylating RUBCNL/Pacer under nutrient-rich conditions (PubMed:30704899). Prevents autophagy by mediating phosphorylation of AMBRA1, thereby inhibiting AMBRA1 ability to mediate ubiquitination of ULK1 and interaction between AMBRA1 and PPP2CA (PubMed:23524951, PubMed:25438055). mTORC1 exerts a feedback control on upstream growth factor signaling that includes phosphorylation and activation of GRB10 a INSR-dependent signaling suppressor (PubMed:21659604). Among other potential targets mTORC1 may phosphorylate CLIP1 and regulate microtubules (PubMed:12231510). The mTORC1 complex is inhibited in response to starvation and amino acid depletion (PubMed:12150925, PubMed:12150926, PubMed:24403073, PubMed:31695197). The non-canonical mTORC1 complex, which acts independently of RHEB, specifically mediates phosphorylation of MiT/TFE factors MITF, TFEB and TFE3 in the presence of nutrients, promoting their cytosolic retention and inactivation (PubMed:22343943, PubMed:22576015, PubMed:22692423, PubMed:24448649, PubMed:32612235, PubMed:36608670, PubMed:36697823). Upon starvation or lysosomal stress, inhibition of mTORC1 induces dephosphorylation and nuclear translocation of TFEB and TFE3, promoting their transcription factor activity (PubMed:22343943, PubMed:22576015, PubMed:22692423, PubMed:24448649, PubMed:32612235, PubMed:36608670). The mTORC1 complex regulates pyroptosis in macrophages by promoting GSDMD oligomerization (PubMed:34289345). MTOR phosphorylates RPTOR which in turn inhibits mTORC1 (By similarity). As part of the mTORC2 complex, MTOR transduces signals from growth factors to pathways involved in proliferation, cytoskeletal organization, lipogenesis and anabolic output (PubMed:15268862, PubMed:15467718, PubMed:24670654, PubMed:29424687, PubMed:29567957, PubMed:35926713). In response to growth factors, mTORC2 phosphorylates and activates AGC protein kinase family members, including AKT (AKT1, AKT2 and AKT3), PKC (PRKCA, PRKCB and PRKCE) and SGK1 (PubMed:15268862, PubMed:15467718, PubMed:21376236, PubMed:24670654, PubMed:29424687, PubMed:29567957, PubMed:35926713). In contrast to mTORC1, mTORC2 is nutrient-insensitive (PubMed:15467718). mTORC2 plays a critical role in AKT1 activation by mediating phosphorylation of different sites depending on the context, such as 'Thr-450', 'Ser-473', 'Ser-477' or 'Thr-479', facilitating the phosphorylation of the activation loop of AKT1 on 'Thr-308' by PDPK1/PDK1 which is a prerequisite for full activation (PubMed:15718470, PubMed:21376236, PubMed:24670654, PubMed:29424687, PubMed:29567957). mTORC2 also regulates the phosphorylation of SGK1 at 'Ser-422' (PubMed:18925875). mTORC2 may regulate the actin cytoskeleton, through phosphorylation of PRKCA, PXN and activation of the Rho-type guanine nucleotide exchange factors RHOA and RAC1A or RAC1B (PubMed:15268862). The mTORC2 complex also phosphorylates various proteins involved in insulin signaling, such as FBXW8 and IGF2BP1 (By similarity). May also regulate insulin signaling by acting as a tyrosine protein kinase that catalyzes phosphorylation of IGF1R and INSR; additional evidence are however required to confirm this result in vivo (PubMed:26584640). Regulates osteoclastogenesis by adjusting the expression of CEBPB isoforms (By similarity). Plays an important regulatory role in the circadian clock function; regulates period length and rhythm amplitude of the suprachiasmatic nucleus (SCN) and liver clocks (By similarity).</text>
</comment>
<comment type="catalytic activity">
    <reaction evidence="9 10 12 17 18 20 25 27 30 34 37 38 45 47 48 49 77">
        <text>L-seryl-[protein] + ATP = O-phospho-L-seryl-[protein] + ADP + H(+)</text>
        <dbReference type="Rhea" id="RHEA:17989"/>
        <dbReference type="Rhea" id="RHEA-COMP:9863"/>
        <dbReference type="Rhea" id="RHEA-COMP:11604"/>
        <dbReference type="ChEBI" id="CHEBI:15378"/>
        <dbReference type="ChEBI" id="CHEBI:29999"/>
        <dbReference type="ChEBI" id="CHEBI:30616"/>
        <dbReference type="ChEBI" id="CHEBI:83421"/>
        <dbReference type="ChEBI" id="CHEBI:456216"/>
        <dbReference type="EC" id="2.7.11.1"/>
    </reaction>
</comment>
<comment type="catalytic activity">
    <reaction evidence="9 10 12 17 18 20 30 37 38 45 77 78 105">
        <text>L-threonyl-[protein] + ATP = O-phospho-L-threonyl-[protein] + ADP + H(+)</text>
        <dbReference type="Rhea" id="RHEA:46608"/>
        <dbReference type="Rhea" id="RHEA-COMP:11060"/>
        <dbReference type="Rhea" id="RHEA-COMP:11605"/>
        <dbReference type="ChEBI" id="CHEBI:15378"/>
        <dbReference type="ChEBI" id="CHEBI:30013"/>
        <dbReference type="ChEBI" id="CHEBI:30616"/>
        <dbReference type="ChEBI" id="CHEBI:61977"/>
        <dbReference type="ChEBI" id="CHEBI:456216"/>
        <dbReference type="EC" id="2.7.11.1"/>
    </reaction>
</comment>
<comment type="catalytic activity">
    <reaction evidence="111">
        <text>L-tyrosyl-[protein] + ATP = O-phospho-L-tyrosyl-[protein] + ADP + H(+)</text>
        <dbReference type="Rhea" id="RHEA:10596"/>
        <dbReference type="Rhea" id="RHEA-COMP:10136"/>
        <dbReference type="Rhea" id="RHEA-COMP:20101"/>
        <dbReference type="ChEBI" id="CHEBI:15378"/>
        <dbReference type="ChEBI" id="CHEBI:30616"/>
        <dbReference type="ChEBI" id="CHEBI:46858"/>
        <dbReference type="ChEBI" id="CHEBI:61978"/>
        <dbReference type="ChEBI" id="CHEBI:456216"/>
        <dbReference type="EC" id="2.7.10.2"/>
    </reaction>
    <physiologicalReaction direction="left-to-right" evidence="111">
        <dbReference type="Rhea" id="RHEA:10597"/>
    </physiologicalReaction>
</comment>
<comment type="activity regulation">
    <text evidence="6 14 16 18 19 24 28 32 33 35 43 63 64 78 91 96 97 103 108">The mTORC1 complex is activated in response to nutrients, growth factors or amino acids: activation requires relocalization of the mTORC1 complex to lysosomes that is mediated by the Ragulator complex, SLC38A9, and the Rag GTPases RagA/RRAGA, RagB/RRAGB, RagC/RRAGC and RagD/RRAGD (PubMed:18497260, PubMed:20381137, PubMed:25561175, PubMed:25567906). Activation of mTORC1 by growth factors such as insulin involves AKT1-mediated phosphorylation of TSC1-TSC2, which leads to the activation of the RHEB GTPase a potent activator of the protein kinase activity of mTORC1 (PubMed:14651849, PubMed:15545625, PubMed:29236692). Insulin-stimulated and amino acid-dependent phosphorylation at Ser-1261 promotes autophosphorylation and the activation of mTORC1 (PubMed:19487463). On the other hand, low cellular energy levels can inhibit mTORC1 through activation of PRKAA1 while hypoxia inhibits mTORC1 through a REDD1-dependent mechanism which may also require PRKAA1 (PubMed:14651849, PubMed:15545625). The kinase activity of MTOR within the mTORC1 complex is positively regulated by MLST8 (PubMed:12718876). The kinase activity of MTOR is inhibited by DEPTOR and AKT1S1 (PubMed:17386266, PubMed:19446321, PubMed:29236692, PubMed:34519268, PubMed:34519269). The non-canonical mTORC1 complex is independent of the RHEB GTPase and specifically mediates phosphorylation of MiT/TFE factors TFEB and TFE3 but not other mTORC1 substrates: it is activated by FLCN, which activates Rag GTPases RagC/RRAGC and RagD/RRAGD (PubMed:32612235, PubMed:36697823). MTOR is the target of the immunosuppressive and anti-cancer drug rapamycin which acts in complex with FKBP1A/FKBP12, and specifically inhibits its kinase activity (PubMed:10089303, PubMed:8662507). mTORC2 is also activated by growth factors, but seems to be nutrient-insensitive (PubMed:15467718). mTORC2 associates and is directly activated by ribosomes (PubMed:21376236). mTORC2 may also be regulated by RHEB but in an indirect manner through the PI3K signaling pathway (PubMed:15467718).</text>
</comment>
<comment type="subunit">
    <text evidence="1 7 10 11 12 13 14 17 18 24 26 30 32 36 39 40 41 50 51 56 57 59 65 72 73 76 78 79 80 81 84 85 88 92 93 94 96 97 98 99 100 103">Part of the mechanistic target of rapamycin complex 1 (mTORC1) which contains MTOR, MLST8 and RPTOR (PubMed:12150925, PubMed:12150926, PubMed:12408816, PubMed:12718876, PubMed:18925875, PubMed:20542007, PubMed:23636326, PubMed:24403073, PubMed:26678875, PubMed:27909983, PubMed:29236692, PubMed:31601764, PubMed:34519268, PubMed:34519269, PubMed:36697823). The mTORC1 complex is a 1 Md obligate dimer of two stoichiometric heterotetramers with overall dimensions of 290 A x 210 A x 135 A (PubMed:20542007, PubMed:23636326). It has a rhomboid shape and a central cavity, the dimeric interfaces are formed by interlocking interactions between the two MTOR and the two RPTOR subunits (PubMed:20542007, PubMed:23636326, PubMed:27909983). The MLST8 subunit forms distal foot-like protuberances, and contacts only one MTOR within the complex, while the small AKT1S1/PRAS40 localizes to the midsection of the central core, in close proximity to RPTOR (PubMed:20542007, PubMed:23636326, PubMed:27909983, PubMed:29236692). mTORC1 associates with AKT1S1/PRAS40, which inhibits its activity by blocking MTOR substrate-recruitment site (PubMed:17386266, PubMed:29236692). Component of the mechanistic target of rapamycin complex 2 (mTORC2), consisting in two heterotretramers composed of MTOR, MLST8, RICTOR and MAPKAP1/SIN1 (PubMed:15268862, PubMed:15467718, PubMed:17599906, PubMed:18925875, PubMed:29424687, PubMed:29567957, PubMed:33158864, PubMed:35926713). Interacts with PLPP7 and PML (By similarity). Interacts with PRR5 and RICTOR; the interaction is direct within the mTORC2 complex and interaction with RICTOR is enhanced by deubiquitination of RICTOR by USP9X (PubMed:17599906, PubMed:33378666, PubMed:29424687, PubMed:34519268). mTORC1 and mTORC2 associate with DEPTOR, which regulates their activity (PubMed:19446321, PubMed:34519268, PubMed:34519269). Interacts with WAC; WAC positively regulates MTOR activity by promoting the assembly of the TTT complex composed of TELO2, TTI1 and TTI2 and the RUVBL complex composed of RUVBL1 and RUVBL2 into the TTT-RUVBL complex which leads to the dimerization of the mTORC1 complex and its subsequent activation (PubMed:26812014). Interacts with UBQLN1 (PubMed:11853878). Interacts with TTI1 and TELO2 (PubMed:20427287, PubMed:20801936, PubMed:20810650). Interacts with CLIP1; phosphorylates and regulates CLIP1 (PubMed:12231510). Interacts with NBN (PubMed:23762398). Interacts with HTR6 (PubMed:23027611). Interacts with BRAT1 (PubMed:25657994). Interacts with MEAK7 (via C-terminal domain); the interaction increases upon nutrient stimulation (PubMed:29750193). Interacts with TM4SF5; the interaction is positively regulated by arginine and is negatively regulated by leucine (PubMed:30956113). Interacts with GPR137B (PubMed:31036939). Interacts with NCKAP1L (PubMed:32647003). Interacts with TPCN1 and TPCN2; the interaction is required for TPCN1 and TPCN2 sensitivity to ATP (PubMed:23394946). Interacts with ATP6V1A and with CRYAB, forming a ternary complex (By similarity). Interacts with SLC38A7; this interaction mediates the recruitment of mTORC1 to the lysosome and its subsequent activation (PubMed:35561222). Interacts with TSPAN8 (PubMed:35904232).</text>
</comment>
<comment type="interaction">
    <interactant intactId="EBI-359260">
        <id>P42345</id>
    </interactant>
    <interactant intactId="EBI-296087">
        <id>P31749</id>
        <label>AKT1</label>
    </interactant>
    <organismsDiffer>false</organismsDiffer>
    <experiments>4</experiments>
</comment>
<comment type="interaction">
    <interactant intactId="EBI-359260">
        <id>P42345</id>
    </interactant>
    <interactant intactId="EBI-287195">
        <id>Q07817-1</id>
        <label>BCL2L1</label>
    </interactant>
    <organismsDiffer>false</organismsDiffer>
    <experiments>4</experiments>
</comment>
<comment type="interaction">
    <interactant intactId="EBI-359260">
        <id>P42345</id>
    </interactant>
    <interactant intactId="EBI-2114729">
        <id>Q6UXB4</id>
        <label>CLEC4G</label>
    </interactant>
    <organismsDiffer>false</organismsDiffer>
    <experiments>4</experiments>
</comment>
<comment type="interaction">
    <interactant intactId="EBI-359260">
        <id>P42345</id>
    </interactant>
    <interactant intactId="EBI-2359040">
        <id>Q8TB45</id>
        <label>DEPTOR</label>
    </interactant>
    <organismsDiffer>false</organismsDiffer>
    <experiments>5</experiments>
</comment>
<comment type="interaction">
    <interactant intactId="EBI-359260">
        <id>P42345</id>
    </interactant>
    <interactant intactId="EBI-74090">
        <id>Q13541</id>
        <label>EIF4EBP1</label>
    </interactant>
    <organismsDiffer>false</organismsDiffer>
    <experiments>2</experiments>
</comment>
<comment type="interaction">
    <interactant intactId="EBI-359260">
        <id>P42345</id>
    </interactant>
    <interactant intactId="EBI-1027571">
        <id>P62942</id>
        <label>FKBP1A</label>
    </interactant>
    <organismsDiffer>false</organismsDiffer>
    <experiments>5</experiments>
</comment>
<comment type="interaction">
    <interactant intactId="EBI-359260">
        <id>P42345</id>
    </interactant>
    <interactant intactId="EBI-1237062">
        <id>Q8WUA4</id>
        <label>GTF3C2</label>
    </interactant>
    <organismsDiffer>false</organismsDiffer>
    <experiments>3</experiments>
</comment>
<comment type="interaction">
    <interactant intactId="EBI-359260">
        <id>P42345</id>
    </interactant>
    <interactant intactId="EBI-1387471">
        <id>Q9BVC4</id>
        <label>MLST8</label>
    </interactant>
    <organismsDiffer>false</organismsDiffer>
    <experiments>6</experiments>
</comment>
<comment type="interaction">
    <interactant intactId="EBI-359260">
        <id>P42345</id>
    </interactant>
    <interactant intactId="EBI-16056342">
        <id>Q9BVC4-1</id>
        <label>MLST8</label>
    </interactant>
    <organismsDiffer>false</organismsDiffer>
    <experiments>7</experiments>
</comment>
<comment type="interaction">
    <interactant intactId="EBI-359260">
        <id>P42345</id>
    </interactant>
    <interactant intactId="EBI-371938">
        <id>Q13615</id>
        <label>MTMR3</label>
    </interactant>
    <organismsDiffer>false</organismsDiffer>
    <experiments>3</experiments>
</comment>
<comment type="interaction">
    <interactant intactId="EBI-359260">
        <id>P42345</id>
    </interactant>
    <interactant intactId="EBI-359260">
        <id>P42345</id>
        <label>MTOR</label>
    </interactant>
    <organismsDiffer>false</organismsDiffer>
    <experiments>2</experiments>
</comment>
<comment type="interaction">
    <interactant intactId="EBI-359260">
        <id>P42345</id>
    </interactant>
    <interactant intactId="EBI-473814">
        <id>Q9Y4G2</id>
        <label>PLEKHM1</label>
    </interactant>
    <organismsDiffer>false</organismsDiffer>
    <experiments>6</experiments>
</comment>
<comment type="interaction">
    <interactant intactId="EBI-359260">
        <id>P42345</id>
    </interactant>
    <interactant intactId="EBI-1046542">
        <id>Q8TCU6</id>
        <label>PREX1</label>
    </interactant>
    <organismsDiffer>false</organismsDiffer>
    <experiments>11</experiments>
</comment>
<comment type="interaction">
    <interactant intactId="EBI-359260">
        <id>P42345</id>
    </interactant>
    <interactant intactId="EBI-716845">
        <id>P62820</id>
        <label>RAB1A</label>
    </interactant>
    <organismsDiffer>false</organismsDiffer>
    <experiments>4</experiments>
</comment>
<comment type="interaction">
    <interactant intactId="EBI-359260">
        <id>P42345</id>
    </interactant>
    <interactant intactId="EBI-1055287">
        <id>Q15382</id>
        <label>RHEB</label>
    </interactant>
    <organismsDiffer>false</organismsDiffer>
    <experiments>2</experiments>
</comment>
<comment type="interaction">
    <interactant intactId="EBI-359260">
        <id>P42345</id>
    </interactant>
    <interactant intactId="EBI-1387196">
        <id>Q6R327</id>
        <label>RICTOR</label>
    </interactant>
    <organismsDiffer>false</organismsDiffer>
    <experiments>37</experiments>
</comment>
<comment type="interaction">
    <interactant intactId="EBI-359260">
        <id>P42345</id>
    </interactant>
    <interactant intactId="EBI-1567928">
        <id>Q8N122</id>
        <label>RPTOR</label>
    </interactant>
    <organismsDiffer>false</organismsDiffer>
    <experiments>48</experiments>
</comment>
<comment type="interaction">
    <interactant intactId="EBI-359260">
        <id>P42345</id>
    </interactant>
    <interactant intactId="EBI-1802965">
        <id>Q96EB6</id>
        <label>SIRT1</label>
    </interactant>
    <organismsDiffer>false</organismsDiffer>
    <experiments>2</experiments>
</comment>
<comment type="interaction">
    <interactant intactId="EBI-359260">
        <id>P42345</id>
    </interactant>
    <interactant intactId="EBI-19125949">
        <id>O14894</id>
        <label>TM4SF5</label>
    </interactant>
    <organismsDiffer>false</organismsDiffer>
    <experiments>7</experiments>
</comment>
<comment type="interaction">
    <interactant intactId="EBI-359260">
        <id>P42345</id>
    </interactant>
    <interactant intactId="EBI-6138615">
        <id>Q92544</id>
        <label>TM9SF4</label>
    </interactant>
    <organismsDiffer>false</organismsDiffer>
    <experiments>4</experiments>
</comment>
<comment type="interaction">
    <interactant intactId="EBI-359260">
        <id>P42345</id>
    </interactant>
    <interactant intactId="EBI-5239949">
        <id>Q8NHX9</id>
        <label>TPCN2</label>
    </interactant>
    <organismsDiffer>false</organismsDiffer>
    <experiments>2</experiments>
</comment>
<comment type="interaction">
    <interactant intactId="EBI-359260">
        <id>P42345</id>
    </interactant>
    <interactant intactId="EBI-908831">
        <id>O75385</id>
        <label>ULK1</label>
    </interactant>
    <organismsDiffer>false</organismsDiffer>
    <experiments>7</experiments>
</comment>
<comment type="interaction">
    <interactant intactId="EBI-359260">
        <id>P42345</id>
    </interactant>
    <interactant intactId="EBI-347088">
        <id>P63104</id>
        <label>YWHAZ</label>
    </interactant>
    <organismsDiffer>false</organismsDiffer>
    <experiments>3</experiments>
</comment>
<comment type="subcellular location">
    <subcellularLocation>
        <location evidence="28 35 81 84 86 88 104">Lysosome membrane</location>
        <topology evidence="84 86">Peripheral membrane protein</topology>
        <orientation evidence="84 86">Cytoplasmic side</orientation>
    </subcellularLocation>
    <subcellularLocation>
        <location evidence="15">Endoplasmic reticulum membrane</location>
        <topology evidence="15">Peripheral membrane protein</topology>
        <orientation evidence="15">Cytoplasmic side</orientation>
    </subcellularLocation>
    <subcellularLocation>
        <location evidence="15">Golgi apparatus membrane</location>
        <topology evidence="15">Peripheral membrane protein</topology>
        <orientation evidence="15">Cytoplasmic side</orientation>
    </subcellularLocation>
    <subcellularLocation>
        <location evidence="46">Cell membrane</location>
        <topology evidence="15">Peripheral membrane protein</topology>
    </subcellularLocation>
    <subcellularLocation>
        <location evidence="8 15">Mitochondrion outer membrane</location>
        <topology evidence="8 15">Peripheral membrane protein</topology>
        <orientation evidence="8 15">Cytoplasmic side</orientation>
    </subcellularLocation>
    <subcellularLocation>
        <location evidence="8 28">Cytoplasm</location>
    </subcellularLocation>
    <subcellularLocation>
        <location evidence="1">Nucleus</location>
    </subcellularLocation>
    <subcellularLocation>
        <location evidence="1">Nucleus</location>
        <location evidence="1">PML body</location>
    </subcellularLocation>
    <subcellularLocation>
        <location evidence="109">Microsome membrane</location>
    </subcellularLocation>
    <subcellularLocation>
        <location evidence="74">Cytoplasmic vesicle</location>
        <location evidence="74">Phagosome</location>
    </subcellularLocation>
    <text evidence="1 28 35 46 81 84">Shuttles between cytoplasm and nucleus. Accumulates in the nucleus in response to hypoxia (By similarity). Targeting to lysosomes depends on amino acid availability and RRAGA and RRAGB (PubMed:18497260, PubMed:20381137). Lysosome targeting also depends on interaction with MEAK7. Translocates to the lysosome membrane in the presence of TM4SF5 (PubMed:30956113). The mTORC2 complex localizes to membranes: mTORC2 is active at the plasma membrane, endoplasmic reticulum membrane and lysosomes (PubMed:21867682).</text>
</comment>
<comment type="tissue specificity">
    <text evidence="13 107">Expressed in numerous tissues, with highest levels in testis.</text>
</comment>
<comment type="domain">
    <text evidence="56">The kinase domain (PI3K/PI4K) is intrinsically active but has a highly restricted catalytic center.</text>
</comment>
<comment type="domain">
    <text evidence="56">The FAT domain forms three discontinuous subdomains of alpha-helical TPR repeats plus a single subdomain of HEAT repeats. The four domains pack sequentially to form a C-shaped a-solenoid that clamps onto the kinase domain (PubMed:23636326).</text>
</comment>
<comment type="PTM">
    <text evidence="1 18 22 31 33 34 44 58 77 109">Autophosphorylates when part of mTORC1 or mTORC2 (PubMed:15467718, PubMed:20022946, PubMed:9434772). Phosphorylation at Ser-1261, Ser-2159 and Thr-2164 promotes autophosphorylation (PubMed:19487463). Phosphorylated at Ser-2448 by RPS6KB1 (PubMed:15899889, PubMed:15905173, PubMed:19145465). Phosphorylation in the kinase domain modulates the interactions of MTOR with RPTOR and AKT1S1/PRAS40 and leads to increased intrinsic mTORC1 kinase activity (PubMed:15905173, PubMed:19145465, PubMed:21576368). Phosphorylation at Ser-2159 by TBK1 in response to growth factors and pathogen recognition receptors promotes mTORC1 activity (PubMed:29150432). Phosphorylation at Ser-2159 by TBK1 in response to EGF growth factor promotes mTORC2 activity, leading to AKT1 phosphorylation and activation (By similarity). Phosphorylation at Thr-2173 in the ATP-binding region by AKT1 strongly reduces kinase activity (PubMed:24247430).</text>
</comment>
<comment type="PTM">
    <text evidence="106">Ubiquitinated at Lys-2066 by the SCF(FBXO22) complex via 'Lys-27'-linked ubiquitination prevents mTORC1 substrate recruitment.</text>
</comment>
<comment type="disease" evidence="67 70 75">
    <disease id="DI-04576">
        <name>Smith-Kingsmore syndrome</name>
        <acronym>SKS</acronym>
        <description>An autosomal dominant syndrome characterized by intellectual disability, macrocephaly, seizures, umbilical hernia, and facial dysmorphic features.</description>
        <dbReference type="MIM" id="616638"/>
    </disease>
    <text>The disease is caused by variants affecting the gene represented in this entry.</text>
</comment>
<comment type="disease" evidence="66 68 69 75">
    <disease id="DI-04980">
        <name>Focal cortical dysplasia 2</name>
        <acronym>FCORD2</acronym>
        <description>A form of focal cortical dysplasia, a malformation of cortical development that results in medically refractory epilepsy in the pediatric population and in adults. FCORD2 is a severe form, with onset usually in childhood, characterized by disrupted cortical lamination and specific cytological abnormalities. It is classified in 2 subtypes: type IIA characterized by dysmorphic neurons and lack of balloon cells; type IIB with dysmorphic neurons and balloon cells.</description>
        <dbReference type="MIM" id="607341"/>
    </disease>
    <text>The disease is caused by variants affecting the gene represented in this entry.</text>
</comment>
<comment type="similarity">
    <text evidence="110">Belongs to the PI3/PI4-kinase family.</text>
</comment>
<comment type="sequence caution" evidence="110">
    <conflict type="frameshift">
        <sequence resource="EMBL-CDS" id="AAC39933"/>
    </conflict>
</comment>
<comment type="sequence caution" evidence="110">
    <conflict type="erroneous initiation">
        <sequence resource="EMBL-CDS" id="BAE06077"/>
    </conflict>
    <text>Extended N-terminus.</text>
</comment>
<comment type="online information" name="Atlas of Genetics and Cytogenetics in Oncology and Haematology">
    <link uri="https://atlasgeneticsoncology.org/gene/40639/FRAP1"/>
</comment>
<comment type="online information" name="Wikipedia">
    <link uri="https://en.wikipedia.org/wiki/Mammalian_target_of_rapamycin"/>
    <text>Mammalian target of rapamycin entry</text>
</comment>
<accession>P42345</accession>
<accession>Q4LE76</accession>
<accession>Q5TER1</accession>
<accession>Q6LE87</accession>
<accession>Q96QG3</accession>
<accession>Q9Y4I3</accession>
<proteinExistence type="evidence at protein level"/>
<feature type="chain" id="PRO_0000088808" description="Serine/threonine-protein kinase mTOR">
    <location>
        <begin position="1"/>
        <end position="2549"/>
    </location>
</feature>
<feature type="repeat" description="HEAT 1">
    <location>
        <begin position="16"/>
        <end position="53"/>
    </location>
</feature>
<feature type="repeat" description="HEAT 2">
    <location>
        <begin position="55"/>
        <end position="99"/>
    </location>
</feature>
<feature type="repeat" description="HEAT 3">
    <location>
        <begin position="100"/>
        <end position="137"/>
    </location>
</feature>
<feature type="repeat" description="HEAT 4">
    <location>
        <begin position="138"/>
        <end position="179"/>
    </location>
</feature>
<feature type="repeat" description="HEAT 5">
    <location>
        <begin position="180"/>
        <end position="220"/>
    </location>
</feature>
<feature type="repeat" description="HEAT 6">
    <location>
        <begin position="222"/>
        <end position="276"/>
    </location>
</feature>
<feature type="repeat" description="HEAT 7">
    <location>
        <begin position="277"/>
        <end position="313"/>
    </location>
</feature>
<feature type="repeat" description="HEAT 8">
    <location>
        <begin position="314"/>
        <end position="364"/>
    </location>
</feature>
<feature type="repeat" description="HEAT 9">
    <location>
        <begin position="365"/>
        <end position="409"/>
    </location>
</feature>
<feature type="repeat" description="HEAT 10">
    <location>
        <begin position="410"/>
        <end position="445"/>
    </location>
</feature>
<feature type="repeat" description="HEAT 11">
    <location>
        <begin position="446"/>
        <end position="494"/>
    </location>
</feature>
<feature type="repeat" description="HEAT 12">
    <location>
        <begin position="495"/>
        <end position="529"/>
    </location>
</feature>
<feature type="repeat" description="HEAT 13">
    <location>
        <begin position="530"/>
        <end position="563"/>
    </location>
</feature>
<feature type="repeat" description="HEAT 14">
    <location>
        <begin position="564"/>
        <end position="596"/>
    </location>
</feature>
<feature type="repeat" description="HEAT 15">
    <location>
        <begin position="597"/>
        <end position="636"/>
    </location>
</feature>
<feature type="repeat" description="HEAT 16">
    <location>
        <begin position="637"/>
        <end position="683"/>
    </location>
</feature>
<feature type="repeat" description="HEAT 17">
    <location>
        <begin position="686"/>
        <end position="724"/>
    </location>
</feature>
<feature type="repeat" description="HEAT 18">
    <location>
        <begin position="727"/>
        <end position="766"/>
    </location>
</feature>
<feature type="repeat" description="HEAT 19">
    <location>
        <begin position="769"/>
        <end position="811"/>
    </location>
</feature>
<feature type="repeat" description="HEAT 20">
    <location>
        <begin position="814"/>
        <end position="853"/>
    </location>
</feature>
<feature type="repeat" description="HEAT 21">
    <location>
        <begin position="857"/>
        <end position="893"/>
    </location>
</feature>
<feature type="repeat" description="HEAT 22">
    <location>
        <begin position="894"/>
        <end position="942"/>
    </location>
</feature>
<feature type="repeat" description="HEAT 23">
    <location>
        <begin position="943"/>
        <end position="988"/>
    </location>
</feature>
<feature type="repeat" description="HEAT 24">
    <location>
        <begin position="989"/>
        <end position="1027"/>
    </location>
</feature>
<feature type="repeat" description="HEAT 25">
    <location>
        <begin position="1029"/>
        <end position="1068"/>
    </location>
</feature>
<feature type="repeat" description="HEAT 26">
    <location>
        <begin position="1069"/>
        <end position="1105"/>
    </location>
</feature>
<feature type="repeat" description="HEAT 27">
    <location>
        <begin position="1106"/>
        <end position="1144"/>
    </location>
</feature>
<feature type="repeat" description="HEAT 28">
    <location>
        <begin position="1145"/>
        <end position="1188"/>
    </location>
</feature>
<feature type="repeat" description="HEAT 29">
    <location>
        <begin position="1189"/>
        <end position="1225"/>
    </location>
</feature>
<feature type="repeat" description="HEAT 30">
    <location>
        <begin position="1226"/>
        <end position="1273"/>
    </location>
</feature>
<feature type="repeat" description="HEAT 31">
    <location>
        <begin position="1274"/>
        <end position="1311"/>
    </location>
</feature>
<feature type="repeat" description="HEAT 32">
    <location>
        <begin position="1312"/>
        <end position="1345"/>
    </location>
</feature>
<feature type="repeat" description="TPR 1">
    <location>
        <begin position="1346"/>
        <end position="1382"/>
    </location>
</feature>
<feature type="domain" description="FAT" evidence="3">
    <location>
        <begin position="1382"/>
        <end position="1982"/>
    </location>
</feature>
<feature type="repeat" description="TPR 2">
    <location>
        <begin position="1383"/>
        <end position="1408"/>
    </location>
</feature>
<feature type="repeat" description="TPR 3">
    <location>
        <begin position="1409"/>
        <end position="1442"/>
    </location>
</feature>
<feature type="repeat" description="TPR 4">
    <location>
        <begin position="1443"/>
        <end position="1473"/>
    </location>
</feature>
<feature type="repeat" description="TPR 5">
    <location>
        <begin position="1474"/>
        <end position="1507"/>
    </location>
</feature>
<feature type="repeat" description="TPR 6">
    <location>
        <begin position="1508"/>
        <end position="1541"/>
    </location>
</feature>
<feature type="repeat" description="TPR 7">
    <location>
        <begin position="1542"/>
        <end position="1574"/>
    </location>
</feature>
<feature type="repeat" description="TPR 8">
    <location>
        <begin position="1575"/>
        <end position="1614"/>
    </location>
</feature>
<feature type="repeat" description="TPR 9">
    <location>
        <begin position="1615"/>
        <end position="1649"/>
    </location>
</feature>
<feature type="repeat" description="TPR 10">
    <location>
        <begin position="1650"/>
        <end position="1693"/>
    </location>
</feature>
<feature type="repeat" description="TPR 11">
    <location>
        <begin position="1694"/>
        <end position="1731"/>
    </location>
</feature>
<feature type="repeat" description="TPR 12">
    <location>
        <begin position="1732"/>
        <end position="1786"/>
    </location>
</feature>
<feature type="repeat" description="TPR 13">
    <location>
        <begin position="1787"/>
        <end position="1846"/>
    </location>
</feature>
<feature type="repeat" description="TPR 14">
    <location>
        <begin position="1898"/>
        <end position="1930"/>
    </location>
</feature>
<feature type="repeat" description="TPR 15">
    <location>
        <begin position="1931"/>
        <end position="1970"/>
    </location>
</feature>
<feature type="repeat" description="TPR 16">
    <location>
        <begin position="1971"/>
        <end position="2005"/>
    </location>
</feature>
<feature type="domain" description="PI3K/PI4K catalytic" evidence="2">
    <location>
        <begin position="2156"/>
        <end position="2469"/>
    </location>
</feature>
<feature type="domain" description="FATC" evidence="3 4">
    <location>
        <begin position="2517"/>
        <end position="2549"/>
    </location>
</feature>
<feature type="region of interest" description="Interaction with NBN" evidence="57">
    <location>
        <begin position="1"/>
        <end position="651"/>
    </location>
</feature>
<feature type="region of interest" description="Disordered" evidence="5">
    <location>
        <begin position="1812"/>
        <end position="1867"/>
    </location>
</feature>
<feature type="region of interest" description="Sufficient for interaction with the FKBP1A/rapamycin complex" evidence="1">
    <location>
        <begin position="2012"/>
        <end position="2144"/>
    </location>
</feature>
<feature type="region of interest" description="G-loop" evidence="2">
    <location>
        <begin position="2162"/>
        <end position="2168"/>
    </location>
</feature>
<feature type="region of interest" description="Interaction with MLST8">
    <location>
        <begin position="2258"/>
        <end position="2296"/>
    </location>
</feature>
<feature type="region of interest" description="Catalytic loop" evidence="2">
    <location>
        <begin position="2335"/>
        <end position="2343"/>
    </location>
</feature>
<feature type="region of interest" description="Activation loop" evidence="2">
    <location>
        <begin position="2355"/>
        <end position="2380"/>
    </location>
</feature>
<feature type="compositionally biased region" description="Low complexity" evidence="5">
    <location>
        <begin position="1820"/>
        <end position="1860"/>
    </location>
</feature>
<feature type="binding site" evidence="93 123">
    <location>
        <position position="1662"/>
    </location>
    <ligand>
        <name>1D-myo-inositol hexakisphosphate</name>
        <dbReference type="ChEBI" id="CHEBI:58130"/>
    </ligand>
</feature>
<feature type="binding site" evidence="93 123">
    <location>
        <position position="1702"/>
    </location>
    <ligand>
        <name>1D-myo-inositol hexakisphosphate</name>
        <dbReference type="ChEBI" id="CHEBI:58130"/>
    </ligand>
</feature>
<feature type="binding site" evidence="93 123">
    <location>
        <position position="1749"/>
    </location>
    <ligand>
        <name>1D-myo-inositol hexakisphosphate</name>
        <dbReference type="ChEBI" id="CHEBI:58130"/>
    </ligand>
</feature>
<feature type="binding site" evidence="78 119 120">
    <location>
        <position position="2165"/>
    </location>
    <ligand>
        <name>ATP</name>
        <dbReference type="ChEBI" id="CHEBI:30616"/>
    </ligand>
</feature>
<feature type="binding site" evidence="78 119 120">
    <location>
        <position position="2167"/>
    </location>
    <ligand>
        <name>ATP</name>
        <dbReference type="ChEBI" id="CHEBI:30616"/>
    </ligand>
</feature>
<feature type="binding site" evidence="78 119 120">
    <location>
        <position position="2185"/>
    </location>
    <ligand>
        <name>ATP</name>
        <dbReference type="ChEBI" id="CHEBI:30616"/>
    </ligand>
</feature>
<feature type="binding site" evidence="78 120">
    <location>
        <position position="2187"/>
    </location>
    <ligand>
        <name>ATP</name>
        <dbReference type="ChEBI" id="CHEBI:30616"/>
    </ligand>
</feature>
<feature type="binding site" evidence="78 119 120">
    <location>
        <position position="2190"/>
    </location>
    <ligand>
        <name>ATP</name>
        <dbReference type="ChEBI" id="CHEBI:30616"/>
    </ligand>
</feature>
<feature type="binding site" evidence="78 119 120">
    <location>
        <position position="2225"/>
    </location>
    <ligand>
        <name>ATP</name>
        <dbReference type="ChEBI" id="CHEBI:30616"/>
    </ligand>
</feature>
<feature type="binding site" evidence="78 119 120">
    <location>
        <position position="2238"/>
    </location>
    <ligand>
        <name>ATP</name>
        <dbReference type="ChEBI" id="CHEBI:30616"/>
    </ligand>
</feature>
<feature type="binding site" evidence="78 119 120">
    <location>
        <position position="2239"/>
    </location>
    <ligand>
        <name>ATP</name>
        <dbReference type="ChEBI" id="CHEBI:30616"/>
    </ligand>
</feature>
<feature type="binding site" evidence="78 119 120">
    <location>
        <position position="2240"/>
    </location>
    <ligand>
        <name>ATP</name>
        <dbReference type="ChEBI" id="CHEBI:30616"/>
    </ligand>
</feature>
<feature type="binding site" evidence="78 119 120">
    <location>
        <position position="2245"/>
    </location>
    <ligand>
        <name>ATP</name>
        <dbReference type="ChEBI" id="CHEBI:30616"/>
    </ligand>
</feature>
<feature type="binding site" evidence="78 120">
    <location>
        <position position="2343"/>
    </location>
    <ligand>
        <name>Mg(2+)</name>
        <dbReference type="ChEBI" id="CHEBI:18420"/>
        <label>1</label>
    </ligand>
</feature>
<feature type="binding site" evidence="78 119 120">
    <location>
        <position position="2345"/>
    </location>
    <ligand>
        <name>ATP</name>
        <dbReference type="ChEBI" id="CHEBI:30616"/>
    </ligand>
</feature>
<feature type="binding site" evidence="78 119 120">
    <location>
        <position position="2356"/>
    </location>
    <ligand>
        <name>ATP</name>
        <dbReference type="ChEBI" id="CHEBI:30616"/>
    </ligand>
</feature>
<feature type="binding site" evidence="78 120">
    <location>
        <position position="2357"/>
    </location>
    <ligand>
        <name>Mg(2+)</name>
        <dbReference type="ChEBI" id="CHEBI:18420"/>
        <label>1</label>
    </ligand>
</feature>
<feature type="modified residue" description="N-acetylmethionine" evidence="140">
    <location>
        <position position="1"/>
    </location>
</feature>
<feature type="modified residue" description="Phosphoserine" evidence="136 137 139">
    <location>
        <position position="567"/>
    </location>
</feature>
<feature type="modified residue" description="Phosphothreonine" evidence="139">
    <location>
        <position position="1162"/>
    </location>
</feature>
<feature type="modified residue" description="N6-acetyllysine" evidence="138">
    <location>
        <position position="1218"/>
    </location>
</feature>
<feature type="modified residue" description="Phosphoserine" evidence="33 141">
    <location>
        <position position="1261"/>
    </location>
</feature>
<feature type="modified residue" description="Phosphoserine; by TBK1" evidence="44 77">
    <location>
        <position position="2159"/>
    </location>
</feature>
<feature type="modified residue" description="Phosphothreonine" evidence="44">
    <location>
        <position position="2164"/>
    </location>
</feature>
<feature type="modified residue" description="Phosphothreonine; by PKB/AKT1" evidence="58">
    <location>
        <position position="2173"/>
    </location>
</feature>
<feature type="modified residue" description="Phosphothreonine; by RPS6KB1" evidence="22">
    <location>
        <position position="2446"/>
    </location>
</feature>
<feature type="modified residue" description="Phosphoserine; by RPS6KB1" evidence="21 22 31 142">
    <location>
        <position position="2448"/>
    </location>
</feature>
<feature type="modified residue" description="Phosphoserine" evidence="135">
    <location>
        <position position="2478"/>
    </location>
</feature>
<feature type="modified residue" description="Phosphoserine; by autocatalysis" evidence="34 44 135">
    <location>
        <position position="2481"/>
    </location>
</feature>
<feature type="cross-link" description="Glycyl lysine isopeptide (Lys-Gly) (interchain with G-Cter in ubiquitin)" evidence="106">
    <location>
        <position position="2066"/>
    </location>
</feature>
<feature type="sequence variant" id="VAR_041537" description="In a lung large cell carcinoma sample; somatic mutation; dbSNP:rs748801456." evidence="23">
    <original>A</original>
    <variation>S</variation>
    <location>
        <position position="8"/>
    </location>
</feature>
<feature type="sequence variant" id="VAR_041538" description="In a metastatic melanoma sample; somatic mutation." evidence="23">
    <original>M</original>
    <variation>T</variation>
    <location>
        <position position="135"/>
    </location>
</feature>
<feature type="sequence variant" id="VAR_078824" description="In FCORD2; uncertain significance; somatic mutation; dbSNP:rs913197212." evidence="66">
    <original>R</original>
    <variation>H</variation>
    <location>
        <position position="624"/>
    </location>
</feature>
<feature type="sequence variant" id="VAR_041539" description="In dbSNP:rs56164650." evidence="23">
    <original>M</original>
    <variation>V</variation>
    <location>
        <position position="1083"/>
    </location>
</feature>
<feature type="sequence variant" id="VAR_041540" description="In dbSNP:rs28730685." evidence="23">
    <original>A</original>
    <variation>V</variation>
    <location>
        <position position="1134"/>
    </location>
</feature>
<feature type="sequence variant" id="VAR_041541" description="In dbSNP:rs55975118." evidence="23">
    <original>S</original>
    <variation>F</variation>
    <location>
        <position position="1178"/>
    </location>
</feature>
<feature type="sequence variant" id="VAR_078825" description="Found in a patient with focal epilepsy; uncertain significance; dbSNP:rs975577894." evidence="75">
    <original>D</original>
    <variation>E</variation>
    <location>
        <position position="1376"/>
    </location>
</feature>
<feature type="sequence variant" id="VAR_078826" description="In FCORD2; somatic mutation." evidence="66">
    <original>Y</original>
    <variation>D</variation>
    <location>
        <position position="1450"/>
    </location>
</feature>
<feature type="sequence variant" id="VAR_078827" description="In FCORD2; somatic mutation; dbSNP:rs1085307114." evidence="68">
    <original>W</original>
    <variation>G</variation>
    <location>
        <position position="1456"/>
    </location>
</feature>
<feature type="sequence variant" id="VAR_078828" description="In FCORD2; somatic mutation; increased TOR signaling; dbSNP:rs1644347782." evidence="69">
    <original>A</original>
    <variation>D</variation>
    <location>
        <position position="1459"/>
    </location>
</feature>
<feature type="sequence variant" id="VAR_078829" description="In FCORD2; uncertain significance; somatic mutation; dbSNP:rs1644347846." evidence="75">
    <original>A</original>
    <variation>S</variation>
    <location>
        <position position="1459"/>
    </location>
</feature>
<feature type="sequence variant" id="VAR_078830" description="In FCORD2; somatic mutation; increased TOR signaling; dbSNP:rs1057519779." evidence="69 75">
    <original>L</original>
    <variation>P</variation>
    <location>
        <position position="1460"/>
    </location>
</feature>
<feature type="sequence variant" id="VAR_078831" description="In FCORD2; somatic mutation; increased TOR signaling; increased kinase activity; dbSNP:rs1057519914." evidence="66">
    <original>C</original>
    <variation>R</variation>
    <location>
        <position position="1483"/>
    </location>
</feature>
<feature type="sequence variant" id="VAR_078832" description="In SKS; dbSNP:rs2100566800." evidence="75">
    <original>W</original>
    <variation>R</variation>
    <location>
        <position position="1490"/>
    </location>
</feature>
<feature type="sequence variant" id="VAR_078833" description="In SKS; dbSNP:rs869312671." evidence="75">
    <original>M</original>
    <variation>I</variation>
    <location>
        <position position="1595"/>
    </location>
</feature>
<feature type="sequence variant" id="VAR_078834" description="In FCORD2; uncertain significance; somatic mutation; dbSNP:rs587777895." evidence="66">
    <original>R</original>
    <variation>H</variation>
    <location>
        <position position="1709"/>
    </location>
</feature>
<feature type="sequence variant" id="VAR_075072" description="In SKS; results in increased mTOR signaling; dbSNP:rs863225264." evidence="67 70">
    <original>E</original>
    <variation>K</variation>
    <location>
        <position position="1799"/>
    </location>
</feature>
<feature type="sequence variant" id="VAR_078835" description="In SKS; dbSNP:rs369088781." evidence="75">
    <original>A</original>
    <variation>T</variation>
    <location>
        <position position="1832"/>
    </location>
</feature>
<feature type="sequence variant" id="VAR_078836" description="In SKS; dbSNP:rs869312666." evidence="75">
    <original>F</original>
    <variation>C</variation>
    <location>
        <position position="1888"/>
    </location>
</feature>
<feature type="sequence variant" id="VAR_078837" description="In FCORD2; somatic mutation; dbSNP:rs587777893." evidence="66">
    <original>T</original>
    <variation>K</variation>
    <location>
        <position position="1977"/>
    </location>
</feature>
<feature type="sequence variant" id="VAR_041542" description="In an ovarian mucinous carcinoma sample; somatic mutation; dbSNP:rs2100412651." evidence="23">
    <original>M</original>
    <variation>V</variation>
    <location>
        <position position="2011"/>
    </location>
</feature>
<feature type="sequence variant" id="VAR_078838" description="In FCORD2; somatic mutation; dbSNP:rs1642723200." evidence="66">
    <original>R</original>
    <variation>C</variation>
    <location>
        <position position="2193"/>
    </location>
</feature>
<feature type="sequence variant" id="VAR_078839" description="In FCORD2; somatic mutation; increased TOR signaling; dbSNP:rs587777894." evidence="66 69 75">
    <original>S</original>
    <variation>F</variation>
    <location>
        <position position="2215"/>
    </location>
</feature>
<feature type="sequence variant" id="VAR_041543" description="In FCORD2; also found in a colorectal adenocarcinoma sample; somatic mutation; increased TOR signaling; dbSNP:rs587777894." evidence="23 69 75">
    <original>S</original>
    <variation>Y</variation>
    <location>
        <position position="2215"/>
    </location>
</feature>
<feature type="sequence variant" id="VAR_064733" description="Found in a renal cell carcinoma sample; somatic mutation; dbSNP:rs2100381099." evidence="42">
    <original>L</original>
    <variation>F</variation>
    <location>
        <position position="2220"/>
    </location>
</feature>
<feature type="sequence variant" id="VAR_078840" description="In SKS; dbSNP:rs878855328." evidence="75">
    <original>M</original>
    <variation>I</variation>
    <location>
        <position position="2327"/>
    </location>
</feature>
<feature type="sequence variant" id="VAR_064734" description="Found in a renal cell carcinoma sample; somatic mutation; dbSNP:rs2100316251." evidence="42">
    <original>V</original>
    <variation>A</variation>
    <location>
        <position position="2406"/>
    </location>
</feature>
<feature type="sequence variant" id="VAR_078841" description="In FCORD2; somatic mutation; increased TOR signaling; increased kinase activity; dbSNP:rs1085307113." evidence="66">
    <original>L</original>
    <variation>P</variation>
    <location>
        <position position="2427"/>
    </location>
</feature>
<feature type="sequence variant" id="VAR_078842" description="In FCORD2; somatic mutation; increased TOR signaling; increased kinase activity; dbSNP:rs1085307113." evidence="66">
    <original>L</original>
    <variation>Q</variation>
    <location>
        <position position="2427"/>
    </location>
</feature>
<feature type="sequence variant" id="VAR_041544" description="In a glioblastoma multiforme sample; somatic mutation." evidence="23">
    <original>P</original>
    <variation>L</variation>
    <location>
        <position position="2476"/>
    </location>
</feature>
<feature type="sequence variant" id="VAR_078843" description="Found in a patient with non-lesional nocturnal frontal epilepsy; uncertain significance; dbSNP:rs968817513." evidence="75">
    <original>I</original>
    <variation>V</variation>
    <location>
        <position position="2501"/>
    </location>
</feature>
<feature type="mutagenesis site" description="Complete loss ubiquitination by the SCF(FBXO22) complex." evidence="106">
    <original>K</original>
    <variation>R</variation>
    <location>
        <position position="2066"/>
    </location>
</feature>
<feature type="mutagenesis site" description="Reduces mTORC1-associated S-2481 autophosphorylation; when associated with A-2164. Reduced activity of the mTORC1 complex." evidence="44 77">
    <original>S</original>
    <variation>A</variation>
    <location>
        <position position="2159"/>
    </location>
</feature>
<feature type="mutagenesis site" description="Mimics phosphorylation; leading to stronger phosphorylation of RPS6KB1; when associated with E-2164. Increased activity of the mTORC1 complex." evidence="44 77">
    <original>S</original>
    <variation>D</variation>
    <location>
        <position position="2159"/>
    </location>
</feature>
<feature type="mutagenesis site" description="Reduces mTORC1-associated S-2481 autophosphorylation; when associated with A-2159." evidence="44">
    <original>T</original>
    <variation>A</variation>
    <location>
        <position position="2164"/>
    </location>
</feature>
<feature type="mutagenesis site" description="Stronger phosphorylation of RPS6KB1; when associated with D-2159." evidence="44">
    <original>T</original>
    <variation>E</variation>
    <location>
        <position position="2164"/>
    </location>
</feature>
<feature type="mutagenesis site" description="Increased mTOR kinase activity." evidence="58">
    <original>T</original>
    <variation>A</variation>
    <location>
        <position position="2173"/>
    </location>
</feature>
<feature type="mutagenesis site" description="Barely detectable kinase activity." evidence="56">
    <original>H</original>
    <variation>A</variation>
    <location>
        <position position="2340"/>
    </location>
</feature>
<feature type="mutagenesis site" description="Kinase-dead mutant, loss of interaction with TM4SF5 and loss of lysosome membrane localization; when associated with I-2364." evidence="84">
    <original>D</original>
    <variation>E</variation>
    <location>
        <position position="2357"/>
    </location>
</feature>
<feature type="mutagenesis site" description="Kinase-dead mutant, loss of interaction with TM4SF5 and loss of lysosome membrane localization; when associated with E-2357." evidence="84">
    <original>V</original>
    <variation>I</variation>
    <location>
        <position position="2364"/>
    </location>
</feature>
<feature type="sequence conflict" description="In Ref. 2; AAC39933." evidence="110" ref="2">
    <original>K</original>
    <variation>N</variation>
    <location>
        <position position="353"/>
    </location>
</feature>
<feature type="sequence conflict" description="In Ref. 2; AAC39933." evidence="110" ref="2">
    <original>S</original>
    <variation>N</variation>
    <location>
        <position position="359"/>
    </location>
</feature>
<feature type="sequence conflict" description="In Ref. 2; AAC39933." evidence="110" ref="2">
    <original>D</original>
    <variation>N</variation>
    <location>
        <position position="364"/>
    </location>
</feature>
<feature type="sequence conflict" description="In Ref. 2; AAC39933." evidence="110" ref="2">
    <original>M</original>
    <variation>L</variation>
    <location>
        <position position="390"/>
    </location>
</feature>
<feature type="sequence conflict" description="In Ref. 2; AAC39933." evidence="110" ref="2">
    <original>R</original>
    <variation>L</variation>
    <location>
        <position position="430"/>
    </location>
</feature>
<feature type="sequence conflict" description="In Ref. 2; AAC39933." evidence="110" ref="2">
    <original>VLD</original>
    <variation>GVE</variation>
    <location>
        <begin position="455"/>
        <end position="457"/>
    </location>
</feature>
<feature type="sequence conflict" description="In Ref. 2; AAC39933." evidence="110" ref="2">
    <original>A</original>
    <variation>G</variation>
    <location>
        <position position="461"/>
    </location>
</feature>
<feature type="sequence conflict" description="In Ref. 2; AAC39933." evidence="110" ref="2">
    <original>VFT</original>
    <variation>FFN</variation>
    <location>
        <begin position="482"/>
        <end position="484"/>
    </location>
</feature>
<feature type="sequence conflict" description="In Ref. 2; AAC39933." evidence="110" ref="2">
    <original>L</original>
    <variation>V</variation>
    <location>
        <position position="489"/>
    </location>
</feature>
<feature type="sequence conflict" description="In Ref. 2; AAC39933." evidence="110" ref="2">
    <original>L</original>
    <variation>I</variation>
    <location>
        <position position="513"/>
    </location>
</feature>
<feature type="sequence conflict" description="In Ref. 2; AAC39933." evidence="110" ref="2">
    <original>L</original>
    <variation>V</variation>
    <location>
        <position position="539"/>
    </location>
</feature>
<feature type="sequence conflict" description="In Ref. 2; AAC39933." evidence="110" ref="2">
    <original>R</original>
    <variation>C</variation>
    <location>
        <position position="553"/>
    </location>
</feature>
<feature type="sequence conflict" description="In Ref. 3; BAE06077." evidence="110" ref="3">
    <original>P</original>
    <variation>L</variation>
    <location>
        <position position="857"/>
    </location>
</feature>
<feature type="sequence conflict" description="In Ref. 2; AAC39933." evidence="110" ref="2">
    <original>I</original>
    <variation>S</variation>
    <location>
        <position position="1075"/>
    </location>
</feature>
<feature type="helix" evidence="153">
    <location>
        <begin position="19"/>
        <end position="29"/>
    </location>
</feature>
<feature type="helix" evidence="153">
    <location>
        <begin position="38"/>
        <end position="52"/>
    </location>
</feature>
<feature type="helix" evidence="153">
    <location>
        <begin position="61"/>
        <end position="73"/>
    </location>
</feature>
<feature type="helix" evidence="153">
    <location>
        <begin position="83"/>
        <end position="93"/>
    </location>
</feature>
<feature type="turn" evidence="153">
    <location>
        <begin position="94"/>
        <end position="96"/>
    </location>
</feature>
<feature type="helix" evidence="153">
    <location>
        <begin position="102"/>
        <end position="114"/>
    </location>
</feature>
<feature type="strand" evidence="153">
    <location>
        <begin position="115"/>
        <end position="117"/>
    </location>
</feature>
<feature type="helix" evidence="153">
    <location>
        <begin position="123"/>
        <end position="134"/>
    </location>
</feature>
<feature type="helix" evidence="153">
    <location>
        <begin position="141"/>
        <end position="155"/>
    </location>
</feature>
<feature type="helix" evidence="153">
    <location>
        <begin position="165"/>
        <end position="178"/>
    </location>
</feature>
<feature type="helix" evidence="153">
    <location>
        <begin position="180"/>
        <end position="183"/>
    </location>
</feature>
<feature type="helix" evidence="152">
    <location>
        <begin position="184"/>
        <end position="186"/>
    </location>
</feature>
<feature type="helix" evidence="153">
    <location>
        <begin position="188"/>
        <end position="197"/>
    </location>
</feature>
<feature type="helix" evidence="153">
    <location>
        <begin position="204"/>
        <end position="222"/>
    </location>
</feature>
<feature type="helix" evidence="153">
    <location>
        <begin position="234"/>
        <end position="245"/>
    </location>
</feature>
<feature type="helix" evidence="153">
    <location>
        <begin position="259"/>
        <end position="275"/>
    </location>
</feature>
<feature type="helix" evidence="153">
    <location>
        <begin position="277"/>
        <end position="288"/>
    </location>
</feature>
<feature type="helix" evidence="153">
    <location>
        <begin position="357"/>
        <end position="360"/>
    </location>
</feature>
<feature type="helix" evidence="153">
    <location>
        <begin position="362"/>
        <end position="375"/>
    </location>
</feature>
<feature type="strand" evidence="151">
    <location>
        <begin position="376"/>
        <end position="378"/>
    </location>
</feature>
<feature type="helix" evidence="152">
    <location>
        <begin position="380"/>
        <end position="382"/>
    </location>
</feature>
<feature type="helix" evidence="153">
    <location>
        <begin position="387"/>
        <end position="402"/>
    </location>
</feature>
<feature type="helix" evidence="152">
    <location>
        <begin position="404"/>
        <end position="409"/>
    </location>
</feature>
<feature type="helix" evidence="153">
    <location>
        <begin position="413"/>
        <end position="424"/>
    </location>
</feature>
<feature type="helix" evidence="153">
    <location>
        <begin position="427"/>
        <end position="443"/>
    </location>
</feature>
<feature type="strand" evidence="153">
    <location>
        <begin position="446"/>
        <end position="448"/>
    </location>
</feature>
<feature type="helix" evidence="153">
    <location>
        <begin position="449"/>
        <end position="451"/>
    </location>
</feature>
<feature type="helix" evidence="153">
    <location>
        <begin position="452"/>
        <end position="462"/>
    </location>
</feature>
<feature type="turn" evidence="151">
    <location>
        <begin position="463"/>
        <end position="465"/>
    </location>
</feature>
<feature type="helix" evidence="153">
    <location>
        <begin position="479"/>
        <end position="490"/>
    </location>
</feature>
<feature type="helix" evidence="152">
    <location>
        <begin position="495"/>
        <end position="497"/>
    </location>
</feature>
<feature type="helix" evidence="153">
    <location>
        <begin position="499"/>
        <end position="510"/>
    </location>
</feature>
<feature type="helix" evidence="153">
    <location>
        <begin position="517"/>
        <end position="527"/>
    </location>
</feature>
<feature type="strand" evidence="148">
    <location>
        <begin position="530"/>
        <end position="532"/>
    </location>
</feature>
<feature type="helix" evidence="153">
    <location>
        <begin position="533"/>
        <end position="548"/>
    </location>
</feature>
<feature type="helix" evidence="153">
    <location>
        <begin position="580"/>
        <end position="588"/>
    </location>
</feature>
<feature type="helix" evidence="153">
    <location>
        <begin position="601"/>
        <end position="611"/>
    </location>
</feature>
<feature type="helix" evidence="153">
    <location>
        <begin position="616"/>
        <end position="629"/>
    </location>
</feature>
<feature type="strand" evidence="153">
    <location>
        <begin position="646"/>
        <end position="648"/>
    </location>
</feature>
<feature type="helix" evidence="153">
    <location>
        <begin position="649"/>
        <end position="665"/>
    </location>
</feature>
<feature type="strand" evidence="153">
    <location>
        <begin position="667"/>
        <end position="669"/>
    </location>
</feature>
<feature type="helix" evidence="153">
    <location>
        <begin position="670"/>
        <end position="677"/>
    </location>
</feature>
<feature type="helix" evidence="148">
    <location>
        <begin position="681"/>
        <end position="683"/>
    </location>
</feature>
<feature type="turn" evidence="153">
    <location>
        <begin position="685"/>
        <end position="688"/>
    </location>
</feature>
<feature type="helix" evidence="153">
    <location>
        <begin position="690"/>
        <end position="699"/>
    </location>
</feature>
<feature type="strand" evidence="153">
    <location>
        <begin position="703"/>
        <end position="705"/>
    </location>
</feature>
<feature type="helix" evidence="153">
    <location>
        <begin position="706"/>
        <end position="717"/>
    </location>
</feature>
<feature type="strand" evidence="153">
    <location>
        <begin position="718"/>
        <end position="721"/>
    </location>
</feature>
<feature type="helix" evidence="153">
    <location>
        <begin position="723"/>
        <end position="742"/>
    </location>
</feature>
<feature type="helix" evidence="153">
    <location>
        <begin position="749"/>
        <end position="762"/>
    </location>
</feature>
<feature type="helix" evidence="153">
    <location>
        <begin position="765"/>
        <end position="767"/>
    </location>
</feature>
<feature type="helix" evidence="153">
    <location>
        <begin position="769"/>
        <end position="771"/>
    </location>
</feature>
<feature type="helix" evidence="153">
    <location>
        <begin position="772"/>
        <end position="783"/>
    </location>
</feature>
<feature type="helix" evidence="153">
    <location>
        <begin position="792"/>
        <end position="808"/>
    </location>
</feature>
<feature type="strand" evidence="153">
    <location>
        <begin position="811"/>
        <end position="813"/>
    </location>
</feature>
<feature type="turn" evidence="149">
    <location>
        <begin position="814"/>
        <end position="816"/>
    </location>
</feature>
<feature type="helix" evidence="153">
    <location>
        <begin position="817"/>
        <end position="828"/>
    </location>
</feature>
<feature type="helix" evidence="153">
    <location>
        <begin position="831"/>
        <end position="833"/>
    </location>
</feature>
<feature type="helix" evidence="153">
    <location>
        <begin position="838"/>
        <end position="851"/>
    </location>
</feature>
<feature type="helix" evidence="153">
    <location>
        <begin position="856"/>
        <end position="860"/>
    </location>
</feature>
<feature type="helix" evidence="153">
    <location>
        <begin position="864"/>
        <end position="870"/>
    </location>
</feature>
<feature type="helix" evidence="153">
    <location>
        <begin position="871"/>
        <end position="873"/>
    </location>
</feature>
<feature type="helix" evidence="153">
    <location>
        <begin position="878"/>
        <end position="891"/>
    </location>
</feature>
<feature type="helix" evidence="153">
    <location>
        <begin position="896"/>
        <end position="902"/>
    </location>
</feature>
<feature type="helix" evidence="153">
    <location>
        <begin position="934"/>
        <end position="937"/>
    </location>
</feature>
<feature type="helix" evidence="153">
    <location>
        <begin position="943"/>
        <end position="958"/>
    </location>
</feature>
<feature type="helix" evidence="153">
    <location>
        <begin position="964"/>
        <end position="982"/>
    </location>
</feature>
<feature type="helix" evidence="153">
    <location>
        <begin position="986"/>
        <end position="989"/>
    </location>
</feature>
<feature type="helix" evidence="153">
    <location>
        <begin position="990"/>
        <end position="1002"/>
    </location>
</feature>
<feature type="turn" evidence="153">
    <location>
        <begin position="1006"/>
        <end position="1008"/>
    </location>
</feature>
<feature type="helix" evidence="153">
    <location>
        <begin position="1009"/>
        <end position="1023"/>
    </location>
</feature>
<feature type="helix" evidence="153">
    <location>
        <begin position="1024"/>
        <end position="1030"/>
    </location>
</feature>
<feature type="helix" evidence="153">
    <location>
        <begin position="1031"/>
        <end position="1040"/>
    </location>
</feature>
<feature type="helix" evidence="153">
    <location>
        <begin position="1046"/>
        <end position="1062"/>
    </location>
</feature>
<feature type="helix" evidence="153">
    <location>
        <begin position="1065"/>
        <end position="1069"/>
    </location>
</feature>
<feature type="helix" evidence="153">
    <location>
        <begin position="1071"/>
        <end position="1083"/>
    </location>
</feature>
<feature type="helix" evidence="151">
    <location>
        <begin position="1088"/>
        <end position="1090"/>
    </location>
</feature>
<feature type="helix" evidence="153">
    <location>
        <begin position="1091"/>
        <end position="1103"/>
    </location>
</feature>
<feature type="helix" evidence="152">
    <location>
        <begin position="1104"/>
        <end position="1107"/>
    </location>
</feature>
<feature type="turn" evidence="153">
    <location>
        <begin position="1108"/>
        <end position="1110"/>
    </location>
</feature>
<feature type="helix" evidence="153">
    <location>
        <begin position="1111"/>
        <end position="1123"/>
    </location>
</feature>
<feature type="strand" evidence="153">
    <location>
        <begin position="1125"/>
        <end position="1127"/>
    </location>
</feature>
<feature type="helix" evidence="153">
    <location>
        <begin position="1129"/>
        <end position="1142"/>
    </location>
</feature>
<feature type="turn" evidence="153">
    <location>
        <begin position="1143"/>
        <end position="1145"/>
    </location>
</feature>
<feature type="helix" evidence="149">
    <location>
        <begin position="1150"/>
        <end position="1152"/>
    </location>
</feature>
<feature type="helix" evidence="153">
    <location>
        <begin position="1153"/>
        <end position="1163"/>
    </location>
</feature>
<feature type="strand" evidence="149">
    <location>
        <begin position="1167"/>
        <end position="1169"/>
    </location>
</feature>
<feature type="helix" evidence="153">
    <location>
        <begin position="1170"/>
        <end position="1182"/>
    </location>
</feature>
<feature type="helix" evidence="153">
    <location>
        <begin position="1185"/>
        <end position="1191"/>
    </location>
</feature>
<feature type="helix" evidence="153">
    <location>
        <begin position="1192"/>
        <end position="1202"/>
    </location>
</feature>
<feature type="helix" evidence="153">
    <location>
        <begin position="1207"/>
        <end position="1218"/>
    </location>
</feature>
<feature type="strand" evidence="149">
    <location>
        <begin position="1222"/>
        <end position="1226"/>
    </location>
</feature>
<feature type="helix" evidence="149">
    <location>
        <begin position="1229"/>
        <end position="1237"/>
    </location>
</feature>
<feature type="helix" evidence="153">
    <location>
        <begin position="1263"/>
        <end position="1269"/>
    </location>
</feature>
<feature type="helix" evidence="153">
    <location>
        <begin position="1277"/>
        <end position="1293"/>
    </location>
</feature>
<feature type="helix" evidence="153">
    <location>
        <begin position="1298"/>
        <end position="1301"/>
    </location>
</feature>
<feature type="helix" evidence="153">
    <location>
        <begin position="1304"/>
        <end position="1309"/>
    </location>
</feature>
<feature type="turn" evidence="153">
    <location>
        <begin position="1311"/>
        <end position="1315"/>
    </location>
</feature>
<feature type="helix" evidence="153">
    <location>
        <begin position="1318"/>
        <end position="1328"/>
    </location>
</feature>
<feature type="helix" evidence="153">
    <location>
        <begin position="1331"/>
        <end position="1347"/>
    </location>
</feature>
<feature type="helix" evidence="153">
    <location>
        <begin position="1351"/>
        <end position="1366"/>
    </location>
</feature>
<feature type="strand" evidence="153">
    <location>
        <begin position="1367"/>
        <end position="1369"/>
    </location>
</feature>
<feature type="turn" evidence="153">
    <location>
        <begin position="1375"/>
        <end position="1379"/>
    </location>
</feature>
<feature type="helix" evidence="153">
    <location>
        <begin position="1380"/>
        <end position="1390"/>
    </location>
</feature>
<feature type="helix" evidence="153">
    <location>
        <begin position="1393"/>
        <end position="1406"/>
    </location>
</feature>
<feature type="helix" evidence="153">
    <location>
        <begin position="1410"/>
        <end position="1422"/>
    </location>
</feature>
<feature type="helix" evidence="153">
    <location>
        <begin position="1426"/>
        <end position="1439"/>
    </location>
</feature>
<feature type="turn" evidence="153">
    <location>
        <begin position="1441"/>
        <end position="1444"/>
    </location>
</feature>
<feature type="helix" evidence="153">
    <location>
        <begin position="1447"/>
        <end position="1452"/>
    </location>
</feature>
<feature type="helix" evidence="153">
    <location>
        <begin position="1456"/>
        <end position="1469"/>
    </location>
</feature>
<feature type="helix" evidence="153">
    <location>
        <begin position="1474"/>
        <end position="1487"/>
    </location>
</feature>
<feature type="helix" evidence="153">
    <location>
        <begin position="1490"/>
        <end position="1499"/>
    </location>
</feature>
<feature type="strand" evidence="149">
    <location>
        <begin position="1501"/>
        <end position="1504"/>
    </location>
</feature>
<feature type="helix" evidence="153">
    <location>
        <begin position="1506"/>
        <end position="1523"/>
    </location>
</feature>
<feature type="helix" evidence="153">
    <location>
        <begin position="1526"/>
        <end position="1533"/>
    </location>
</feature>
<feature type="strand" evidence="147">
    <location>
        <begin position="1538"/>
        <end position="1540"/>
    </location>
</feature>
<feature type="helix" evidence="153">
    <location>
        <begin position="1541"/>
        <end position="1553"/>
    </location>
</feature>
<feature type="helix" evidence="153">
    <location>
        <begin position="1557"/>
        <end position="1579"/>
    </location>
</feature>
<feature type="helix" evidence="153">
    <location>
        <begin position="1584"/>
        <end position="1586"/>
    </location>
</feature>
<feature type="helix" evidence="153">
    <location>
        <begin position="1587"/>
        <end position="1602"/>
    </location>
</feature>
<feature type="turn" evidence="153">
    <location>
        <begin position="1603"/>
        <end position="1605"/>
    </location>
</feature>
<feature type="strand" evidence="145">
    <location>
        <begin position="1606"/>
        <end position="1608"/>
    </location>
</feature>
<feature type="helix" evidence="153">
    <location>
        <begin position="1609"/>
        <end position="1611"/>
    </location>
</feature>
<feature type="helix" evidence="153">
    <location>
        <begin position="1612"/>
        <end position="1623"/>
    </location>
</feature>
<feature type="helix" evidence="153">
    <location>
        <begin position="1630"/>
        <end position="1640"/>
    </location>
</feature>
<feature type="turn" evidence="153">
    <location>
        <begin position="1641"/>
        <end position="1643"/>
    </location>
</feature>
<feature type="helix" evidence="153">
    <location>
        <begin position="1646"/>
        <end position="1648"/>
    </location>
</feature>
<feature type="helix" evidence="153">
    <location>
        <begin position="1650"/>
        <end position="1662"/>
    </location>
</feature>
<feature type="helix" evidence="153">
    <location>
        <begin position="1666"/>
        <end position="1677"/>
    </location>
</feature>
<feature type="turn" evidence="153">
    <location>
        <begin position="1681"/>
        <end position="1683"/>
    </location>
</feature>
<feature type="strand" evidence="149">
    <location>
        <begin position="1685"/>
        <end position="1687"/>
    </location>
</feature>
<feature type="strand" evidence="152">
    <location>
        <begin position="1691"/>
        <end position="1693"/>
    </location>
</feature>
<feature type="helix" evidence="153">
    <location>
        <begin position="1694"/>
        <end position="1706"/>
    </location>
</feature>
<feature type="helix" evidence="153">
    <location>
        <begin position="1710"/>
        <end position="1730"/>
    </location>
</feature>
<feature type="helix" evidence="153">
    <location>
        <begin position="1737"/>
        <end position="1758"/>
    </location>
</feature>
<feature type="strand" evidence="153">
    <location>
        <begin position="1759"/>
        <end position="1762"/>
    </location>
</feature>
<feature type="turn" evidence="153">
    <location>
        <begin position="1766"/>
        <end position="1768"/>
    </location>
</feature>
<feature type="helix" evidence="153">
    <location>
        <begin position="1769"/>
        <end position="1782"/>
    </location>
</feature>
<feature type="turn" evidence="147">
    <location>
        <begin position="1783"/>
        <end position="1785"/>
    </location>
</feature>
<feature type="helix" evidence="153">
    <location>
        <begin position="1787"/>
        <end position="1809"/>
    </location>
</feature>
<feature type="turn" evidence="153">
    <location>
        <begin position="1810"/>
        <end position="1813"/>
    </location>
</feature>
<feature type="helix" evidence="153">
    <location>
        <begin position="1868"/>
        <end position="1877"/>
    </location>
</feature>
<feature type="turn" evidence="153">
    <location>
        <begin position="1878"/>
        <end position="1880"/>
    </location>
</feature>
<feature type="helix" evidence="153">
    <location>
        <begin position="1881"/>
        <end position="1893"/>
    </location>
</feature>
<feature type="strand" evidence="153">
    <location>
        <begin position="1896"/>
        <end position="1898"/>
    </location>
</feature>
<feature type="helix" evidence="153">
    <location>
        <begin position="1900"/>
        <end position="1913"/>
    </location>
</feature>
<feature type="helix" evidence="153">
    <location>
        <begin position="1917"/>
        <end position="1929"/>
    </location>
</feature>
<feature type="helix" evidence="153">
    <location>
        <begin position="1933"/>
        <end position="1935"/>
    </location>
</feature>
<feature type="helix" evidence="150">
    <location>
        <begin position="1936"/>
        <end position="1938"/>
    </location>
</feature>
<feature type="helix" evidence="153">
    <location>
        <begin position="1939"/>
        <end position="1943"/>
    </location>
</feature>
<feature type="turn" evidence="153">
    <location>
        <begin position="1944"/>
        <end position="1947"/>
    </location>
</feature>
<feature type="helix" evidence="153">
    <location>
        <begin position="1951"/>
        <end position="1966"/>
    </location>
</feature>
<feature type="turn" evidence="153">
    <location>
        <begin position="1970"/>
        <end position="1972"/>
    </location>
</feature>
<feature type="helix" evidence="153">
    <location>
        <begin position="1973"/>
        <end position="1980"/>
    </location>
</feature>
<feature type="helix" evidence="153">
    <location>
        <begin position="1985"/>
        <end position="1999"/>
    </location>
</feature>
<feature type="helix" evidence="153">
    <location>
        <begin position="2005"/>
        <end position="2019"/>
    </location>
</feature>
<feature type="strand" evidence="143">
    <location>
        <begin position="2020"/>
        <end position="2022"/>
    </location>
</feature>
<feature type="helix" evidence="144">
    <location>
        <begin position="2025"/>
        <end position="2039"/>
    </location>
</feature>
<feature type="helix" evidence="144">
    <location>
        <begin position="2044"/>
        <end position="2058"/>
    </location>
</feature>
<feature type="helix" evidence="144">
    <location>
        <begin position="2065"/>
        <end position="2091"/>
    </location>
</feature>
<feature type="helix" evidence="144">
    <location>
        <begin position="2094"/>
        <end position="2111"/>
    </location>
</feature>
<feature type="helix" evidence="153">
    <location>
        <begin position="2115"/>
        <end position="2117"/>
    </location>
</feature>
<feature type="strand" evidence="153">
    <location>
        <begin position="2120"/>
        <end position="2122"/>
    </location>
</feature>
<feature type="helix" evidence="153">
    <location>
        <begin position="2123"/>
        <end position="2126"/>
    </location>
</feature>
<feature type="helix" evidence="153">
    <location>
        <begin position="2128"/>
        <end position="2132"/>
    </location>
</feature>
<feature type="strand" evidence="149">
    <location>
        <begin position="2137"/>
        <end position="2139"/>
    </location>
</feature>
<feature type="turn" evidence="147">
    <location>
        <begin position="2141"/>
        <end position="2143"/>
    </location>
</feature>
<feature type="strand" evidence="153">
    <location>
        <begin position="2146"/>
        <end position="2148"/>
    </location>
</feature>
<feature type="strand" evidence="153">
    <location>
        <begin position="2152"/>
        <end position="2156"/>
    </location>
</feature>
<feature type="strand" evidence="153">
    <location>
        <begin position="2158"/>
        <end position="2162"/>
    </location>
</feature>
<feature type="strand" evidence="153">
    <location>
        <begin position="2164"/>
        <end position="2167"/>
    </location>
</feature>
<feature type="strand" evidence="153">
    <location>
        <begin position="2170"/>
        <end position="2179"/>
    </location>
</feature>
<feature type="strand" evidence="153">
    <location>
        <begin position="2181"/>
        <end position="2187"/>
    </location>
</feature>
<feature type="helix" evidence="153">
    <location>
        <begin position="2194"/>
        <end position="2210"/>
    </location>
</feature>
<feature type="helix" evidence="153">
    <location>
        <begin position="2213"/>
        <end position="2216"/>
    </location>
</feature>
<feature type="turn" evidence="153">
    <location>
        <begin position="2217"/>
        <end position="2219"/>
    </location>
</feature>
<feature type="strand" evidence="153">
    <location>
        <begin position="2227"/>
        <end position="2229"/>
    </location>
</feature>
<feature type="strand" evidence="153">
    <location>
        <begin position="2231"/>
        <end position="2233"/>
    </location>
</feature>
<feature type="strand" evidence="153">
    <location>
        <begin position="2235"/>
        <end position="2238"/>
    </location>
</feature>
<feature type="strand" evidence="153">
    <location>
        <begin position="2241"/>
        <end position="2245"/>
    </location>
</feature>
<feature type="helix" evidence="153">
    <location>
        <begin position="2246"/>
        <end position="2256"/>
    </location>
</feature>
<feature type="helix" evidence="153">
    <location>
        <begin position="2263"/>
        <end position="2271"/>
    </location>
</feature>
<feature type="turn" evidence="153">
    <location>
        <begin position="2273"/>
        <end position="2277"/>
    </location>
</feature>
<feature type="helix" evidence="153">
    <location>
        <begin position="2280"/>
        <end position="2292"/>
    </location>
</feature>
<feature type="helix" evidence="153">
    <location>
        <begin position="2298"/>
        <end position="2305"/>
    </location>
</feature>
<feature type="strand" evidence="153">
    <location>
        <begin position="2308"/>
        <end position="2310"/>
    </location>
</feature>
<feature type="helix" evidence="153">
    <location>
        <begin position="2311"/>
        <end position="2334"/>
    </location>
</feature>
<feature type="helix" evidence="153">
    <location>
        <begin position="2341"/>
        <end position="2343"/>
    </location>
</feature>
<feature type="strand" evidence="153">
    <location>
        <begin position="2344"/>
        <end position="2350"/>
    </location>
</feature>
<feature type="strand" evidence="153">
    <location>
        <begin position="2353"/>
        <end position="2355"/>
    </location>
</feature>
<feature type="strand" evidence="153">
    <location>
        <begin position="2362"/>
        <end position="2364"/>
    </location>
</feature>
<feature type="turn" evidence="153">
    <location>
        <begin position="2365"/>
        <end position="2367"/>
    </location>
</feature>
<feature type="strand" evidence="153">
    <location>
        <begin position="2369"/>
        <end position="2371"/>
    </location>
</feature>
<feature type="helix" evidence="153">
    <location>
        <begin position="2381"/>
        <end position="2385"/>
    </location>
</feature>
<feature type="turn" evidence="153">
    <location>
        <begin position="2392"/>
        <end position="2394"/>
    </location>
</feature>
<feature type="helix" evidence="153">
    <location>
        <begin position="2395"/>
        <end position="2409"/>
    </location>
</feature>
<feature type="helix" evidence="153">
    <location>
        <begin position="2411"/>
        <end position="2422"/>
    </location>
</feature>
<feature type="turn" evidence="153">
    <location>
        <begin position="2425"/>
        <end position="2428"/>
    </location>
</feature>
<feature type="helix" evidence="153">
    <location>
        <begin position="2429"/>
        <end position="2432"/>
    </location>
</feature>
<feature type="helix" evidence="147">
    <location>
        <begin position="2433"/>
        <end position="2435"/>
    </location>
</feature>
<feature type="helix" evidence="153">
    <location>
        <begin position="2493"/>
        <end position="2509"/>
    </location>
</feature>
<feature type="strand" evidence="146">
    <location>
        <begin position="2512"/>
        <end position="2516"/>
    </location>
</feature>
<feature type="helix" evidence="153">
    <location>
        <begin position="2521"/>
        <end position="2532"/>
    </location>
</feature>
<feature type="helix" evidence="153">
    <location>
        <begin position="2535"/>
        <end position="2539"/>
    </location>
</feature>
<feature type="helix" evidence="153">
    <location>
        <begin position="2543"/>
        <end position="2545"/>
    </location>
</feature>
<evidence type="ECO:0000250" key="1">
    <source>
        <dbReference type="UniProtKB" id="Q9JLN9"/>
    </source>
</evidence>
<evidence type="ECO:0000255" key="2">
    <source>
        <dbReference type="PROSITE-ProRule" id="PRU00269"/>
    </source>
</evidence>
<evidence type="ECO:0000255" key="3">
    <source>
        <dbReference type="PROSITE-ProRule" id="PRU00534"/>
    </source>
</evidence>
<evidence type="ECO:0000255" key="4">
    <source>
        <dbReference type="PROSITE-ProRule" id="PRU00535"/>
    </source>
</evidence>
<evidence type="ECO:0000256" key="5">
    <source>
        <dbReference type="SAM" id="MobiDB-lite"/>
    </source>
</evidence>
<evidence type="ECO:0000269" key="6">
    <source>
    </source>
</evidence>
<evidence type="ECO:0000269" key="7">
    <source>
    </source>
</evidence>
<evidence type="ECO:0000269" key="8">
    <source>
    </source>
</evidence>
<evidence type="ECO:0000269" key="9">
    <source>
    </source>
</evidence>
<evidence type="ECO:0000269" key="10">
    <source>
    </source>
</evidence>
<evidence type="ECO:0000269" key="11">
    <source>
    </source>
</evidence>
<evidence type="ECO:0000269" key="12">
    <source>
    </source>
</evidence>
<evidence type="ECO:0000269" key="13">
    <source>
    </source>
</evidence>
<evidence type="ECO:0000269" key="14">
    <source>
    </source>
</evidence>
<evidence type="ECO:0000269" key="15">
    <source>
    </source>
</evidence>
<evidence type="ECO:0000269" key="16">
    <source>
    </source>
</evidence>
<evidence type="ECO:0000269" key="17">
    <source>
    </source>
</evidence>
<evidence type="ECO:0000269" key="18">
    <source>
    </source>
</evidence>
<evidence type="ECO:0000269" key="19">
    <source>
    </source>
</evidence>
<evidence type="ECO:0000269" key="20">
    <source>
    </source>
</evidence>
<evidence type="ECO:0000269" key="21">
    <source>
    </source>
</evidence>
<evidence type="ECO:0000269" key="22">
    <source>
    </source>
</evidence>
<evidence type="ECO:0000269" key="23">
    <source>
    </source>
</evidence>
<evidence type="ECO:0000269" key="24">
    <source>
    </source>
</evidence>
<evidence type="ECO:0000269" key="25">
    <source>
    </source>
</evidence>
<evidence type="ECO:0000269" key="26">
    <source>
    </source>
</evidence>
<evidence type="ECO:0000269" key="27">
    <source>
    </source>
</evidence>
<evidence type="ECO:0000269" key="28">
    <source>
    </source>
</evidence>
<evidence type="ECO:0000269" key="29">
    <source>
    </source>
</evidence>
<evidence type="ECO:0000269" key="30">
    <source>
    </source>
</evidence>
<evidence type="ECO:0000269" key="31">
    <source>
    </source>
</evidence>
<evidence type="ECO:0000269" key="32">
    <source>
    </source>
</evidence>
<evidence type="ECO:0000269" key="33">
    <source>
    </source>
</evidence>
<evidence type="ECO:0000269" key="34">
    <source>
    </source>
</evidence>
<evidence type="ECO:0000269" key="35">
    <source>
    </source>
</evidence>
<evidence type="ECO:0000269" key="36">
    <source>
    </source>
</evidence>
<evidence type="ECO:0000269" key="37">
    <source>
    </source>
</evidence>
<evidence type="ECO:0000269" key="38">
    <source>
    </source>
</evidence>
<evidence type="ECO:0000269" key="39">
    <source>
    </source>
</evidence>
<evidence type="ECO:0000269" key="40">
    <source>
    </source>
</evidence>
<evidence type="ECO:0000269" key="41">
    <source>
    </source>
</evidence>
<evidence type="ECO:0000269" key="42">
    <source>
    </source>
</evidence>
<evidence type="ECO:0000269" key="43">
    <source>
    </source>
</evidence>
<evidence type="ECO:0000269" key="44">
    <source>
    </source>
</evidence>
<evidence type="ECO:0000269" key="45">
    <source>
    </source>
</evidence>
<evidence type="ECO:0000269" key="46">
    <source>
    </source>
</evidence>
<evidence type="ECO:0000269" key="47">
    <source>
    </source>
</evidence>
<evidence type="ECO:0000269" key="48">
    <source>
    </source>
</evidence>
<evidence type="ECO:0000269" key="49">
    <source>
    </source>
</evidence>
<evidence type="ECO:0000269" key="50">
    <source>
    </source>
</evidence>
<evidence type="ECO:0000269" key="51">
    <source>
    </source>
</evidence>
<evidence type="ECO:0000269" key="52">
    <source>
    </source>
</evidence>
<evidence type="ECO:0000269" key="53">
    <source>
    </source>
</evidence>
<evidence type="ECO:0000269" key="54">
    <source>
    </source>
</evidence>
<evidence type="ECO:0000269" key="55">
    <source>
    </source>
</evidence>
<evidence type="ECO:0000269" key="56">
    <source>
    </source>
</evidence>
<evidence type="ECO:0000269" key="57">
    <source>
    </source>
</evidence>
<evidence type="ECO:0000269" key="58">
    <source>
    </source>
</evidence>
<evidence type="ECO:0000269" key="59">
    <source>
    </source>
</evidence>
<evidence type="ECO:0000269" key="60">
    <source>
    </source>
</evidence>
<evidence type="ECO:0000269" key="61">
    <source>
    </source>
</evidence>
<evidence type="ECO:0000269" key="62">
    <source>
    </source>
</evidence>
<evidence type="ECO:0000269" key="63">
    <source>
    </source>
</evidence>
<evidence type="ECO:0000269" key="64">
    <source>
    </source>
</evidence>
<evidence type="ECO:0000269" key="65">
    <source>
    </source>
</evidence>
<evidence type="ECO:0000269" key="66">
    <source>
    </source>
</evidence>
<evidence type="ECO:0000269" key="67">
    <source>
    </source>
</evidence>
<evidence type="ECO:0000269" key="68">
    <source>
    </source>
</evidence>
<evidence type="ECO:0000269" key="69">
    <source>
    </source>
</evidence>
<evidence type="ECO:0000269" key="70">
    <source>
    </source>
</evidence>
<evidence type="ECO:0000269" key="71">
    <source>
    </source>
</evidence>
<evidence type="ECO:0000269" key="72">
    <source>
    </source>
</evidence>
<evidence type="ECO:0000269" key="73">
    <source>
    </source>
</evidence>
<evidence type="ECO:0000269" key="74">
    <source>
    </source>
</evidence>
<evidence type="ECO:0000269" key="75">
    <source>
    </source>
</evidence>
<evidence type="ECO:0000269" key="76">
    <source>
    </source>
</evidence>
<evidence type="ECO:0000269" key="77">
    <source>
    </source>
</evidence>
<evidence type="ECO:0000269" key="78">
    <source>
    </source>
</evidence>
<evidence type="ECO:0000269" key="79">
    <source>
    </source>
</evidence>
<evidence type="ECO:0000269" key="80">
    <source>
    </source>
</evidence>
<evidence type="ECO:0000269" key="81">
    <source>
    </source>
</evidence>
<evidence type="ECO:0000269" key="82">
    <source>
    </source>
</evidence>
<evidence type="ECO:0000269" key="83">
    <source>
    </source>
</evidence>
<evidence type="ECO:0000269" key="84">
    <source>
    </source>
</evidence>
<evidence type="ECO:0000269" key="85">
    <source>
    </source>
</evidence>
<evidence type="ECO:0000269" key="86">
    <source>
    </source>
</evidence>
<evidence type="ECO:0000269" key="87">
    <source>
    </source>
</evidence>
<evidence type="ECO:0000269" key="88">
    <source>
    </source>
</evidence>
<evidence type="ECO:0000269" key="89">
    <source>
    </source>
</evidence>
<evidence type="ECO:0000269" key="90">
    <source>
    </source>
</evidence>
<evidence type="ECO:0000269" key="91">
    <source>
    </source>
</evidence>
<evidence type="ECO:0000269" key="92">
    <source>
    </source>
</evidence>
<evidence type="ECO:0000269" key="93">
    <source>
    </source>
</evidence>
<evidence type="ECO:0000269" key="94">
    <source>
    </source>
</evidence>
<evidence type="ECO:0000269" key="95">
    <source>
    </source>
</evidence>
<evidence type="ECO:0000269" key="96">
    <source>
    </source>
</evidence>
<evidence type="ECO:0000269" key="97">
    <source>
    </source>
</evidence>
<evidence type="ECO:0000269" key="98">
    <source>
    </source>
</evidence>
<evidence type="ECO:0000269" key="99">
    <source>
    </source>
</evidence>
<evidence type="ECO:0000269" key="100">
    <source>
    </source>
</evidence>
<evidence type="ECO:0000269" key="101">
    <source>
    </source>
</evidence>
<evidence type="ECO:0000269" key="102">
    <source>
    </source>
</evidence>
<evidence type="ECO:0000269" key="103">
    <source>
    </source>
</evidence>
<evidence type="ECO:0000269" key="104">
    <source>
    </source>
</evidence>
<evidence type="ECO:0000269" key="105">
    <source>
    </source>
</evidence>
<evidence type="ECO:0000269" key="106">
    <source>
    </source>
</evidence>
<evidence type="ECO:0000269" key="107">
    <source>
    </source>
</evidence>
<evidence type="ECO:0000269" key="108">
    <source>
    </source>
</evidence>
<evidence type="ECO:0000269" key="109">
    <source>
    </source>
</evidence>
<evidence type="ECO:0000305" key="110"/>
<evidence type="ECO:0000305" key="111">
    <source>
    </source>
</evidence>
<evidence type="ECO:0000312" key="112">
    <source>
        <dbReference type="HGNC" id="HGNC:3942"/>
    </source>
</evidence>
<evidence type="ECO:0007744" key="113">
    <source>
        <dbReference type="PDB" id="5FLC"/>
    </source>
</evidence>
<evidence type="ECO:0007744" key="114">
    <source>
        <dbReference type="PDB" id="5H64"/>
    </source>
</evidence>
<evidence type="ECO:0007744" key="115">
    <source>
        <dbReference type="PDB" id="5WBH"/>
    </source>
</evidence>
<evidence type="ECO:0007744" key="116">
    <source>
        <dbReference type="PDB" id="5WBU"/>
    </source>
</evidence>
<evidence type="ECO:0007744" key="117">
    <source>
        <dbReference type="PDB" id="5WBY"/>
    </source>
</evidence>
<evidence type="ECO:0007744" key="118">
    <source>
        <dbReference type="PDB" id="5ZCS"/>
    </source>
</evidence>
<evidence type="ECO:0007744" key="119">
    <source>
        <dbReference type="PDB" id="6BCU"/>
    </source>
</evidence>
<evidence type="ECO:0007744" key="120">
    <source>
        <dbReference type="PDB" id="6BCX"/>
    </source>
</evidence>
<evidence type="ECO:0007744" key="121">
    <source>
        <dbReference type="PDB" id="6SB0"/>
    </source>
</evidence>
<evidence type="ECO:0007744" key="122">
    <source>
        <dbReference type="PDB" id="6SB2"/>
    </source>
</evidence>
<evidence type="ECO:0007744" key="123">
    <source>
        <dbReference type="PDB" id="6ZWM"/>
    </source>
</evidence>
<evidence type="ECO:0007744" key="124">
    <source>
        <dbReference type="PDB" id="6ZWO"/>
    </source>
</evidence>
<evidence type="ECO:0007744" key="125">
    <source>
        <dbReference type="PDB" id="7OWG"/>
    </source>
</evidence>
<evidence type="ECO:0007744" key="126">
    <source>
        <dbReference type="PDB" id="7PE7"/>
    </source>
</evidence>
<evidence type="ECO:0007744" key="127">
    <source>
        <dbReference type="PDB" id="7PE8"/>
    </source>
</evidence>
<evidence type="ECO:0007744" key="128">
    <source>
        <dbReference type="PDB" id="7PE9"/>
    </source>
</evidence>
<evidence type="ECO:0007744" key="129">
    <source>
        <dbReference type="PDB" id="7PEA"/>
    </source>
</evidence>
<evidence type="ECO:0007744" key="130">
    <source>
        <dbReference type="PDB" id="7PEB"/>
    </source>
</evidence>
<evidence type="ECO:0007744" key="131">
    <source>
        <dbReference type="PDB" id="7PEC"/>
    </source>
</evidence>
<evidence type="ECO:0007744" key="132">
    <source>
        <dbReference type="PDB" id="7TZO"/>
    </source>
</evidence>
<evidence type="ECO:0007744" key="133">
    <source>
        <dbReference type="PDB" id="7UXC"/>
    </source>
</evidence>
<evidence type="ECO:0007744" key="134">
    <source>
        <dbReference type="PDB" id="7UXH"/>
    </source>
</evidence>
<evidence type="ECO:0007744" key="135">
    <source>
    </source>
</evidence>
<evidence type="ECO:0007744" key="136">
    <source>
    </source>
</evidence>
<evidence type="ECO:0007744" key="137">
    <source>
    </source>
</evidence>
<evidence type="ECO:0007744" key="138">
    <source>
    </source>
</evidence>
<evidence type="ECO:0007744" key="139">
    <source>
    </source>
</evidence>
<evidence type="ECO:0007744" key="140">
    <source>
    </source>
</evidence>
<evidence type="ECO:0007744" key="141">
    <source>
    </source>
</evidence>
<evidence type="ECO:0007744" key="142">
    <source>
    </source>
</evidence>
<evidence type="ECO:0007829" key="143">
    <source>
        <dbReference type="PDB" id="2NPU"/>
    </source>
</evidence>
<evidence type="ECO:0007829" key="144">
    <source>
        <dbReference type="PDB" id="4DRI"/>
    </source>
</evidence>
<evidence type="ECO:0007829" key="145">
    <source>
        <dbReference type="PDB" id="4JSP"/>
    </source>
</evidence>
<evidence type="ECO:0007829" key="146">
    <source>
        <dbReference type="PDB" id="4JT5"/>
    </source>
</evidence>
<evidence type="ECO:0007829" key="147">
    <source>
        <dbReference type="PDB" id="5WBY"/>
    </source>
</evidence>
<evidence type="ECO:0007829" key="148">
    <source>
        <dbReference type="PDB" id="6ZWM"/>
    </source>
</evidence>
<evidence type="ECO:0007829" key="149">
    <source>
        <dbReference type="PDB" id="6ZWO"/>
    </source>
</evidence>
<evidence type="ECO:0007829" key="150">
    <source>
        <dbReference type="PDB" id="7PE7"/>
    </source>
</evidence>
<evidence type="ECO:0007829" key="151">
    <source>
        <dbReference type="PDB" id="7PE8"/>
    </source>
</evidence>
<evidence type="ECO:0007829" key="152">
    <source>
        <dbReference type="PDB" id="7UXC"/>
    </source>
</evidence>
<evidence type="ECO:0007829" key="153">
    <source>
        <dbReference type="PDB" id="8ERA"/>
    </source>
</evidence>
<gene>
    <name evidence="112" type="primary">MTOR</name>
    <name type="synonym">FRAP</name>
    <name type="synonym">FRAP1</name>
    <name type="synonym">FRAP2</name>
    <name type="synonym">RAFT1</name>
    <name type="synonym">RAPT1</name>
</gene>
<protein>
    <recommendedName>
        <fullName evidence="110">Serine/threonine-protein kinase mTOR</fullName>
        <ecNumber evidence="17 18 20 30 47 48 49">2.7.11.1</ecNumber>
    </recommendedName>
    <alternativeName>
        <fullName>FK506-binding protein 12-rapamycin complex-associated protein 1</fullName>
    </alternativeName>
    <alternativeName>
        <fullName>FKBP12-rapamycin complex-associated protein</fullName>
    </alternativeName>
    <alternativeName>
        <fullName>Mammalian target of rapamycin</fullName>
        <shortName>mTOR</shortName>
    </alternativeName>
    <alternativeName>
        <fullName>Mechanistic target of rapamycin</fullName>
    </alternativeName>
    <alternativeName>
        <fullName>Rapamycin and FKBP12 target 1</fullName>
    </alternativeName>
    <alternativeName>
        <fullName>Rapamycin target protein 1</fullName>
    </alternativeName>
    <alternativeName>
        <fullName evidence="110">Tyrosine-protein kinase mTOR</fullName>
        <ecNumber evidence="111">2.7.10.2</ecNumber>
    </alternativeName>
</protein>
<reference key="1">
    <citation type="journal article" date="1994" name="Nature">
        <title>A mammalian protein targeted by G1-arresting rapamycin-receptor complex.</title>
        <authorList>
            <person name="Brown E.J."/>
            <person name="Albers M.W."/>
            <person name="Shin T.B."/>
            <person name="Ichikawa K."/>
            <person name="Keith C.T."/>
            <person name="Lane W.S."/>
            <person name="Schreiber S.L."/>
        </authorList>
    </citation>
    <scope>NUCLEOTIDE SEQUENCE [MRNA]</scope>
    <source>
        <tissue>Brain</tissue>
    </source>
</reference>
<reference key="2">
    <citation type="journal article" date="1998" name="Genomics">
        <title>Molecular cloning and expression analysis of five novel genes in chromosome 1p36.</title>
        <authorList>
            <person name="Onyango P."/>
            <person name="Lubyova B."/>
            <person name="Gardellin P."/>
            <person name="Kurzbauer R."/>
            <person name="Weith A."/>
        </authorList>
    </citation>
    <scope>NUCLEOTIDE SEQUENCE [MRNA]</scope>
</reference>
<reference key="3">
    <citation type="submission" date="2005-03" db="EMBL/GenBank/DDBJ databases">
        <title>Preparation of a set of expression-ready clones of mammalian long cDNAs encoding large proteins by the ORF trap cloning method.</title>
        <authorList>
            <person name="Nakajima D."/>
            <person name="Saito K."/>
            <person name="Yamakawa H."/>
            <person name="Kikuno R.F."/>
            <person name="Nakayama M."/>
            <person name="Ohara R."/>
            <person name="Okazaki N."/>
            <person name="Koga H."/>
            <person name="Nagase T."/>
            <person name="Ohara O."/>
        </authorList>
    </citation>
    <scope>NUCLEOTIDE SEQUENCE [LARGE SCALE MRNA]</scope>
</reference>
<reference key="4">
    <citation type="journal article" date="2006" name="Nature">
        <title>The DNA sequence and biological annotation of human chromosome 1.</title>
        <authorList>
            <person name="Gregory S.G."/>
            <person name="Barlow K.F."/>
            <person name="McLay K.E."/>
            <person name="Kaul R."/>
            <person name="Swarbreck D."/>
            <person name="Dunham A."/>
            <person name="Scott C.E."/>
            <person name="Howe K.L."/>
            <person name="Woodfine K."/>
            <person name="Spencer C.C.A."/>
            <person name="Jones M.C."/>
            <person name="Gillson C."/>
            <person name="Searle S."/>
            <person name="Zhou Y."/>
            <person name="Kokocinski F."/>
            <person name="McDonald L."/>
            <person name="Evans R."/>
            <person name="Phillips K."/>
            <person name="Atkinson A."/>
            <person name="Cooper R."/>
            <person name="Jones C."/>
            <person name="Hall R.E."/>
            <person name="Andrews T.D."/>
            <person name="Lloyd C."/>
            <person name="Ainscough R."/>
            <person name="Almeida J.P."/>
            <person name="Ambrose K.D."/>
            <person name="Anderson F."/>
            <person name="Andrew R.W."/>
            <person name="Ashwell R.I.S."/>
            <person name="Aubin K."/>
            <person name="Babbage A.K."/>
            <person name="Bagguley C.L."/>
            <person name="Bailey J."/>
            <person name="Beasley H."/>
            <person name="Bethel G."/>
            <person name="Bird C.P."/>
            <person name="Bray-Allen S."/>
            <person name="Brown J.Y."/>
            <person name="Brown A.J."/>
            <person name="Buckley D."/>
            <person name="Burton J."/>
            <person name="Bye J."/>
            <person name="Carder C."/>
            <person name="Chapman J.C."/>
            <person name="Clark S.Y."/>
            <person name="Clarke G."/>
            <person name="Clee C."/>
            <person name="Cobley V."/>
            <person name="Collier R.E."/>
            <person name="Corby N."/>
            <person name="Coville G.J."/>
            <person name="Davies J."/>
            <person name="Deadman R."/>
            <person name="Dunn M."/>
            <person name="Earthrowl M."/>
            <person name="Ellington A.G."/>
            <person name="Errington H."/>
            <person name="Frankish A."/>
            <person name="Frankland J."/>
            <person name="French L."/>
            <person name="Garner P."/>
            <person name="Garnett J."/>
            <person name="Gay L."/>
            <person name="Ghori M.R.J."/>
            <person name="Gibson R."/>
            <person name="Gilby L.M."/>
            <person name="Gillett W."/>
            <person name="Glithero R.J."/>
            <person name="Grafham D.V."/>
            <person name="Griffiths C."/>
            <person name="Griffiths-Jones S."/>
            <person name="Grocock R."/>
            <person name="Hammond S."/>
            <person name="Harrison E.S.I."/>
            <person name="Hart E."/>
            <person name="Haugen E."/>
            <person name="Heath P.D."/>
            <person name="Holmes S."/>
            <person name="Holt K."/>
            <person name="Howden P.J."/>
            <person name="Hunt A.R."/>
            <person name="Hunt S.E."/>
            <person name="Hunter G."/>
            <person name="Isherwood J."/>
            <person name="James R."/>
            <person name="Johnson C."/>
            <person name="Johnson D."/>
            <person name="Joy A."/>
            <person name="Kay M."/>
            <person name="Kershaw J.K."/>
            <person name="Kibukawa M."/>
            <person name="Kimberley A.M."/>
            <person name="King A."/>
            <person name="Knights A.J."/>
            <person name="Lad H."/>
            <person name="Laird G."/>
            <person name="Lawlor S."/>
            <person name="Leongamornlert D.A."/>
            <person name="Lloyd D.M."/>
            <person name="Loveland J."/>
            <person name="Lovell J."/>
            <person name="Lush M.J."/>
            <person name="Lyne R."/>
            <person name="Martin S."/>
            <person name="Mashreghi-Mohammadi M."/>
            <person name="Matthews L."/>
            <person name="Matthews N.S.W."/>
            <person name="McLaren S."/>
            <person name="Milne S."/>
            <person name="Mistry S."/>
            <person name="Moore M.J.F."/>
            <person name="Nickerson T."/>
            <person name="O'Dell C.N."/>
            <person name="Oliver K."/>
            <person name="Palmeiri A."/>
            <person name="Palmer S.A."/>
            <person name="Parker A."/>
            <person name="Patel D."/>
            <person name="Pearce A.V."/>
            <person name="Peck A.I."/>
            <person name="Pelan S."/>
            <person name="Phelps K."/>
            <person name="Phillimore B.J."/>
            <person name="Plumb R."/>
            <person name="Rajan J."/>
            <person name="Raymond C."/>
            <person name="Rouse G."/>
            <person name="Saenphimmachak C."/>
            <person name="Sehra H.K."/>
            <person name="Sheridan E."/>
            <person name="Shownkeen R."/>
            <person name="Sims S."/>
            <person name="Skuce C.D."/>
            <person name="Smith M."/>
            <person name="Steward C."/>
            <person name="Subramanian S."/>
            <person name="Sycamore N."/>
            <person name="Tracey A."/>
            <person name="Tromans A."/>
            <person name="Van Helmond Z."/>
            <person name="Wall M."/>
            <person name="Wallis J.M."/>
            <person name="White S."/>
            <person name="Whitehead S.L."/>
            <person name="Wilkinson J.E."/>
            <person name="Willey D.L."/>
            <person name="Williams H."/>
            <person name="Wilming L."/>
            <person name="Wray P.W."/>
            <person name="Wu Z."/>
            <person name="Coulson A."/>
            <person name="Vaudin M."/>
            <person name="Sulston J.E."/>
            <person name="Durbin R.M."/>
            <person name="Hubbard T."/>
            <person name="Wooster R."/>
            <person name="Dunham I."/>
            <person name="Carter N.P."/>
            <person name="McVean G."/>
            <person name="Ross M.T."/>
            <person name="Harrow J."/>
            <person name="Olson M.V."/>
            <person name="Beck S."/>
            <person name="Rogers J."/>
            <person name="Bentley D.R."/>
        </authorList>
    </citation>
    <scope>NUCLEOTIDE SEQUENCE [LARGE SCALE GENOMIC DNA]</scope>
</reference>
<reference key="5">
    <citation type="journal article" date="2004" name="Genome Res.">
        <title>The status, quality, and expansion of the NIH full-length cDNA project: the Mammalian Gene Collection (MGC).</title>
        <authorList>
            <consortium name="The MGC Project Team"/>
        </authorList>
    </citation>
    <scope>NUCLEOTIDE SEQUENCE [LARGE SCALE MRNA]</scope>
    <source>
        <tissue>Cerebellum</tissue>
    </source>
</reference>
<reference key="6">
    <citation type="journal article" date="2001" name="Genes Immun.">
        <title>The human gene for mannan-binding lectin-associated serine protease-2 (MASP-2), the effector component of the lectin route of complement activation, is part of a tightly linked gene cluster on chromosome 1p36.2-3.</title>
        <authorList>
            <person name="Stover C."/>
            <person name="Endo Y."/>
            <person name="Takahashi M."/>
            <person name="Lynch N."/>
            <person name="Constantinescu C."/>
            <person name="Vorup-Jensen T."/>
            <person name="Thiel S."/>
            <person name="Friedl H."/>
            <person name="Hankeln T."/>
            <person name="Hall R."/>
            <person name="Gregory S."/>
            <person name="Fujita T."/>
            <person name="Schwaeble W."/>
        </authorList>
    </citation>
    <scope>NUCLEOTIDE SEQUENCE [GENOMIC DNA] OF 1362-2549</scope>
</reference>
<reference key="7">
    <citation type="journal article" date="1994" name="Proc. Natl. Acad. Sci. U.S.A.">
        <title>RAPT1, a mammalian homolog of yeast Tor, interacts with the FKBP12/rapamycin complex.</title>
        <authorList>
            <person name="Chiu M.I."/>
            <person name="Katz H."/>
            <person name="Berlin V."/>
        </authorList>
    </citation>
    <scope>NUCLEOTIDE SEQUENCE [MRNA] OF 1987-2146</scope>
    <scope>TISSUE SPECIFICITY</scope>
    <source>
        <tissue>B-cell</tissue>
    </source>
</reference>
<reference key="8">
    <citation type="journal article" date="1997" name="Biochem. Biophys. Res. Commun.">
        <title>Expression, enzyme activity, and subcellular localization of mammalian target of rapamycin in insulin-responsive cells.</title>
        <authorList>
            <person name="Withers D.J."/>
            <person name="Ouwens D.M."/>
            <person name="Nave B.T."/>
            <person name="van der Zon G.C.M."/>
            <person name="Alarcon C.M."/>
            <person name="Cardenas M.E."/>
            <person name="Heitman J."/>
            <person name="Maassen J.A."/>
            <person name="Shepherd P.R."/>
        </authorList>
    </citation>
    <scope>SUBCELLULAR LOCATION</scope>
    <scope>AUTOPHOSPHORYLATION</scope>
</reference>
<reference key="9">
    <citation type="journal article" date="2002" name="Biochim. Biophys. Acta">
        <title>Characterization of ubiquilin 1, an mTOR-interacting protein.</title>
        <authorList>
            <person name="Wu S."/>
            <person name="Mikhailov A."/>
            <person name="Kallo-Hosein H."/>
            <person name="Hara K."/>
            <person name="Yonezawa K."/>
            <person name="Avruch J."/>
        </authorList>
    </citation>
    <scope>INTERACTION WITH UBQLN1</scope>
</reference>
<reference key="10">
    <citation type="journal article" date="2002" name="Cell">
        <title>mTOR interacts with raptor to form a nutrient-sensitive complex that signals to the growth machinery.</title>
        <authorList>
            <person name="Kim D.-H."/>
            <person name="Sarbassov D.D."/>
            <person name="Ali S.M."/>
            <person name="King J.E."/>
            <person name="Latek R.R."/>
            <person name="Erdjument-Bromage H."/>
            <person name="Tempst P."/>
            <person name="Sabatini D.M."/>
        </authorList>
    </citation>
    <scope>FUNCTION IN NUTRIENT-DEPENDENT CELL GROWTH</scope>
    <scope>CATALYTIC ACTIVITY</scope>
    <scope>FUNCTION IN PHOSPHORYLATION OF RPS6KB1</scope>
    <scope>INTERACTION WITH RPTOR</scope>
</reference>
<reference key="11">
    <citation type="journal article" date="2002" name="Cell">
        <title>Raptor, a binding partner of target of rapamycin (TOR), mediates TOR action.</title>
        <authorList>
            <person name="Hara K."/>
            <person name="Maruki Y."/>
            <person name="Long X."/>
            <person name="Yoshino K."/>
            <person name="Oshiro N."/>
            <person name="Hidayat S."/>
            <person name="Tokunaga C."/>
            <person name="Avruch J."/>
            <person name="Yonezawa K."/>
        </authorList>
    </citation>
    <scope>FUNCTION</scope>
    <scope>INTERACTION WITH RPTOR</scope>
</reference>
<reference key="12">
    <citation type="journal article" date="2002" name="EMBO Rep.">
        <title>The FKBP12-rapamycin-associated protein (FRAP) is a CLIP-170 kinase.</title>
        <authorList>
            <person name="Choi J.H."/>
            <person name="Bertram P.G."/>
            <person name="Drenan R."/>
            <person name="Carvalho J."/>
            <person name="Zhou H.H."/>
            <person name="Zheng X.F."/>
        </authorList>
    </citation>
    <scope>INTERACTION WITH CLIP1</scope>
    <scope>FUNCTION IN PHOSPHORYLATION OF CLIP1</scope>
    <scope>CATALYTIC ACTIVITY</scope>
</reference>
<reference key="13">
    <citation type="journal article" date="2002" name="J. Biol. Chem.">
        <title>Regulation of ribosomal S6 kinase 2 by mammalian target of rapamycin.</title>
        <authorList>
            <person name="Park I.H."/>
            <person name="Bachmann R."/>
            <person name="Shirazi H."/>
            <person name="Chen J."/>
        </authorList>
    </citation>
    <scope>FUNCTION IN PHOSPHORYLATION OF RPS6KB2</scope>
    <scope>CATALYTIC ACTIVITY</scope>
</reference>
<reference key="14">
    <citation type="journal article" date="2002" name="Mol. Cell">
        <title>Two TOR complexes, only one of which is rapamycin sensitive, have distinct roles in cell growth control.</title>
        <authorList>
            <person name="Loewith R."/>
            <person name="Jacinto E."/>
            <person name="Wullschleger S."/>
            <person name="Lorberg A."/>
            <person name="Crespo J.L."/>
            <person name="Bonenfant D."/>
            <person name="Oppliger W."/>
            <person name="Jenoe P."/>
            <person name="Hall M.N."/>
        </authorList>
    </citation>
    <scope>INTERACTION WITH MLST8 AND RPTOR</scope>
    <scope>IDENTIFICATION IN THE MTORC1 COMPLEX</scope>
    <scope>TISSUE SPECIFICITY</scope>
</reference>
<reference key="15">
    <citation type="journal article" date="2002" name="Proc. Natl. Acad. Sci. U.S.A.">
        <title>FKBP12-rapamycin-associated protein associates with mitochondria and senses osmotic stress via mitochondrial dysfunction.</title>
        <authorList>
            <person name="Desai B.N."/>
            <person name="Myers B.R."/>
            <person name="Schreiber S.L."/>
        </authorList>
    </citation>
    <scope>SUBCELLULAR LOCATION</scope>
</reference>
<reference key="16">
    <citation type="journal article" date="2003" name="Cell">
        <title>TSC2 mediates cellular energy response to control cell growth and survival.</title>
        <authorList>
            <person name="Inoki K."/>
            <person name="Zhu T."/>
            <person name="Guan K.L."/>
        </authorList>
    </citation>
    <scope>ACTIVITY REGULATION</scope>
    <scope>FUNCTION IN RESPONSE TO LOW CELLULAR ENERGY</scope>
</reference>
<reference key="17">
    <citation type="journal article" date="2003" name="Mol. Cell">
        <title>GbetaL, a positive regulator of the rapamycin-sensitive pathway required for the nutrient-sensitive interaction between raptor and mTOR.</title>
        <authorList>
            <person name="Kim D.-H."/>
            <person name="Sarbassov D.D."/>
            <person name="Ali S.M."/>
            <person name="Latek R.R."/>
            <person name="Guntur K.V.P."/>
            <person name="Erdjument-Bromage H."/>
            <person name="Tempst P."/>
            <person name="Sabatini D.M."/>
        </authorList>
    </citation>
    <scope>FUNCTION</scope>
    <scope>ACTIVITY REGULATION</scope>
    <scope>INTERACTION WITH MLST8</scope>
</reference>
<reference key="18">
    <citation type="journal article" date="2004" name="Curr. Biol.">
        <title>Rictor, a novel binding partner of mTOR, defines a rapamycin-insensitive and raptor-independent pathway that regulates the cytoskeleton.</title>
        <authorList>
            <person name="Sarbassov D.D."/>
            <person name="Ali S.M."/>
            <person name="Kim D.-H."/>
            <person name="Guertin D.A."/>
            <person name="Latek R.R."/>
            <person name="Erdjument-Bromage H."/>
            <person name="Tempst P."/>
            <person name="Sabatini D.M."/>
        </authorList>
    </citation>
    <scope>FUNCTION IN PHOSPHORYLATION OF PRKCA</scope>
    <scope>CATALYTIC ACTIVITY</scope>
    <scope>FUNCTION IN REGULATION OF THE ACTIN CYTOSKELETON</scope>
    <scope>IDENTIFICATION IN THE MTORC2 COMPLEX</scope>
    <scope>INTERACTION WITH RICTOR</scope>
</reference>
<reference key="19">
    <citation type="journal article" date="2004" name="Genes Dev.">
        <title>Regulation of mTOR function in response to hypoxia by REDD1 and the TSC1/TSC2 tumor suppressor complex.</title>
        <authorList>
            <person name="Brugarolas J."/>
            <person name="Lei K."/>
            <person name="Hurley R.L."/>
            <person name="Manning B.D."/>
            <person name="Reiling J.H."/>
            <person name="Hafen E."/>
            <person name="Witters L.A."/>
            <person name="Ellisen L.W."/>
            <person name="Kaelin W.G. Jr."/>
        </authorList>
    </citation>
    <scope>ACTIVITY REGULATION</scope>
    <scope>FUNCTION IN RESPONSE TO HYPOXIA</scope>
</reference>
<reference key="20">
    <citation type="journal article" date="2004" name="J. Biol. Chem.">
        <title>FKBP12-rapamycin-associated protein or mammalian target of rapamycin (FRAP/mTOR) localization in the endoplasmic reticulum and the Golgi apparatus.</title>
        <authorList>
            <person name="Drenan R.M."/>
            <person name="Liu X."/>
            <person name="Bertram P.G."/>
            <person name="Zheng X.F.S."/>
        </authorList>
    </citation>
    <scope>SUBCELLULAR LOCATION</scope>
</reference>
<reference key="21">
    <citation type="journal article" date="2004" name="Nat. Cell Biol.">
        <title>Mammalian TOR complex 2 controls the actin cytoskeleton and is rapamycin insensitive.</title>
        <authorList>
            <person name="Jacinto E."/>
            <person name="Loewith R."/>
            <person name="Schmidt A."/>
            <person name="Lin S."/>
            <person name="Ruegg M.A."/>
            <person name="Hall A."/>
            <person name="Hall M.N."/>
        </authorList>
    </citation>
    <scope>FUNCTION IN REGULATION OF THE ACTIN CYTOSKELETON</scope>
    <scope>CATALYTIC ACTIVITY</scope>
    <scope>FUNCTION IN PHOSPHORYLATION OF PXN</scope>
    <scope>IDENTIFICATION IN THE MTORC2 COMPLEX</scope>
    <scope>INTERACTION WITH RICTOR</scope>
    <scope>AUTOPHOSPHORYLATION</scope>
    <scope>ACTIVITY REGULATION</scope>
</reference>
<reference key="22">
    <citation type="journal article" date="2005" name="J. Biol. Chem.">
        <title>Phosphorylation of mammalian target of rapamycin (mTOR) at Ser-2448 is mediated by p70S6 kinase.</title>
        <authorList>
            <person name="Chiang G.G."/>
            <person name="Abraham R.T."/>
        </authorList>
    </citation>
    <scope>PHOSPHORYLATION AT SER-2448</scope>
</reference>
<reference key="23">
    <citation type="journal article" date="2005" name="J. Biol. Chem.">
        <title>Identification of S6 kinase 1 as a novel mammalian target of rapamycin (mTOR)-phosphorylating kinase.</title>
        <authorList>
            <person name="Holz M.K."/>
            <person name="Blenis J."/>
        </authorList>
    </citation>
    <scope>PHOSPHORYLATION AT THR-2446 AND SER-2448</scope>
</reference>
<reference key="24">
    <citation type="journal article" date="2005" name="Science">
        <title>Phosphorylation and regulation of Akt/PKB by the rictor-mTOR complex.</title>
        <authorList>
            <person name="Sarbassov D.D."/>
            <person name="Guertin D.A."/>
            <person name="Ali S.M."/>
            <person name="Sabatini D.M."/>
        </authorList>
    </citation>
    <scope>FUNCTION IN PHOSPHORYLATION OF AKT1</scope>
    <scope>CATALYTIC ACTIVITY</scope>
</reference>
<reference key="25">
    <citation type="journal article" date="2007" name="J. Biol. Chem.">
        <title>The proline-rich Akt substrate of 40 kDa (PRAS40) is a physiological substrate of mammalian target of rapamycin complex 1.</title>
        <authorList>
            <person name="Oshiro N."/>
            <person name="Takahashi R."/>
            <person name="Yoshino K."/>
            <person name="Tanimura K."/>
            <person name="Nakashima A."/>
            <person name="Eguchi S."/>
            <person name="Miyamoto T."/>
            <person name="Hara K."/>
            <person name="Takehana K."/>
            <person name="Avruch J."/>
            <person name="Kikkawa U."/>
            <person name="Yonezawa K."/>
        </authorList>
    </citation>
    <scope>FUNCTION</scope>
    <scope>CATALYTIC ACTIVITY</scope>
</reference>
<reference key="26">
    <citation type="journal article" date="2007" name="J. Biol. Chem.">
        <title>PRR5, a novel component of mTOR complex 2, regulates platelet-derived growth factor receptor beta expression and signaling.</title>
        <authorList>
            <person name="Woo S.-Y."/>
            <person name="Kim D.-H."/>
            <person name="Jun C.-B."/>
            <person name="Kim Y.-M."/>
            <person name="Haar E.V."/>
            <person name="Lee S.-I."/>
            <person name="Hegg J.W."/>
            <person name="Bandhakavi S."/>
            <person name="Griffin T.J."/>
            <person name="Kim D.-H."/>
        </authorList>
    </citation>
    <scope>IDENTIFICATION IN THE MTORC2 COMPLEX</scope>
    <scope>INTERACTION WITH PRR5</scope>
</reference>
<reference key="27">
    <citation type="journal article" date="2007" name="Mol. Cell">
        <title>PRAS40 is an insulin-regulated inhibitor of the mTORC1 protein kinase.</title>
        <authorList>
            <person name="Sancak Y."/>
            <person name="Thoreen C.C."/>
            <person name="Peterson T.R."/>
            <person name="Lindquist R.A."/>
            <person name="Kang S.A."/>
            <person name="Spooner E."/>
            <person name="Carr S.A."/>
            <person name="Sabatini D.M."/>
        </authorList>
    </citation>
    <scope>INTERACTION WITH AKT1S1</scope>
    <scope>ACTIVITY REGULATION</scope>
</reference>
<reference key="28">
    <citation type="journal article" date="2008" name="Biochem. J.">
        <title>mTOR complex 2 (mTORC2) controls hydrophobic motif phosphorylation and activation of serum- and glucocorticoid-induced protein kinase 1 (SGK1).</title>
        <authorList>
            <person name="Garcia-Martinez J.M."/>
            <person name="Alessi D.R."/>
        </authorList>
    </citation>
    <scope>IDENTIFICATION IN THE MTORC1 AND MTORC2 COMPLEXES</scope>
    <scope>CATALYTIC ACTIVITY</scope>
    <scope>FUNCTION IN PHOSPHORYLATION OF RPS6KB1 AND SGK1</scope>
</reference>
<reference key="29">
    <citation type="journal article" date="2008" name="Cell Metab.">
        <title>SREBP activity is regulated by mTORC1 and contributes to Akt-dependent cell growth.</title>
        <authorList>
            <person name="Porstmann T."/>
            <person name="Santos C.R."/>
            <person name="Griffiths B."/>
            <person name="Cully M."/>
            <person name="Wu M."/>
            <person name="Leevers S."/>
            <person name="Griffiths J.R."/>
            <person name="Chung Y.L."/>
            <person name="Schulze A."/>
        </authorList>
    </citation>
    <scope>FUNCTION IN LIPID SYNTHESIS AND CELL GROWTH</scope>
</reference>
<reference key="30">
    <citation type="journal article" date="2008" name="J. Biol. Chem.">
        <title>Regulation of proline-rich Akt substrate of 40 kDa (PRAS40) function by mammalian target of rapamycin complex 1 (mTORC1)-mediated phosphorylation.</title>
        <authorList>
            <person name="Wang L."/>
            <person name="Harris T.E."/>
            <person name="Lawrence J.C. Jr."/>
        </authorList>
    </citation>
    <scope>FUNCTION</scope>
    <scope>CATALYTIC ACTIVITY</scope>
</reference>
<reference key="31">
    <citation type="journal article" date="2008" name="Mol. Cell">
        <title>Kinase-selective enrichment enables quantitative phosphoproteomics of the kinome across the cell cycle.</title>
        <authorList>
            <person name="Daub H."/>
            <person name="Olsen J.V."/>
            <person name="Bairlein M."/>
            <person name="Gnad F."/>
            <person name="Oppermann F.S."/>
            <person name="Korner R."/>
            <person name="Greff Z."/>
            <person name="Keri G."/>
            <person name="Stemmann O."/>
            <person name="Mann M."/>
        </authorList>
    </citation>
    <scope>PHOSPHORYLATION [LARGE SCALE ANALYSIS] AT SER-567</scope>
    <scope>IDENTIFICATION BY MASS SPECTROMETRY [LARGE SCALE ANALYSIS]</scope>
    <source>
        <tissue>Cervix carcinoma</tissue>
    </source>
</reference>
<reference key="32">
    <citation type="journal article" date="2008" name="Proc. Natl. Acad. Sci. U.S.A.">
        <title>A quantitative atlas of mitotic phosphorylation.</title>
        <authorList>
            <person name="Dephoure N."/>
            <person name="Zhou C."/>
            <person name="Villen J."/>
            <person name="Beausoleil S.A."/>
            <person name="Bakalarski C.E."/>
            <person name="Elledge S.J."/>
            <person name="Gygi S.P."/>
        </authorList>
    </citation>
    <scope>PHOSPHORYLATION [LARGE SCALE ANALYSIS] AT SER-2478 AND SER-2481</scope>
    <scope>IDENTIFICATION BY MASS SPECTROMETRY [LARGE SCALE ANALYSIS]</scope>
    <source>
        <tissue>Cervix carcinoma</tissue>
    </source>
</reference>
<reference key="33">
    <citation type="journal article" date="2008" name="Science">
        <title>The Rag GTPases bind raptor and mediate amino acid signaling to mTORC1.</title>
        <authorList>
            <person name="Sancak Y."/>
            <person name="Peterson T.R."/>
            <person name="Shaul Y.D."/>
            <person name="Lindquist R.A."/>
            <person name="Thoreen C.C."/>
            <person name="Bar-Peled L."/>
            <person name="Sabatini D.M."/>
        </authorList>
    </citation>
    <scope>FUNCTION</scope>
    <scope>ACTIVITY REGULATION</scope>
    <scope>SUBCELLULAR LOCATION</scope>
</reference>
<reference key="34">
    <citation type="journal article" date="2009" name="Cell">
        <title>DEPTOR is an mTOR inhibitor frequently overexpressed in multiple myeloma cells and required for their survival.</title>
        <authorList>
            <person name="Peterson T.R."/>
            <person name="Laplante M."/>
            <person name="Thoreen C.C."/>
            <person name="Sancak Y."/>
            <person name="Kang S.A."/>
            <person name="Kuehl W.M."/>
            <person name="Gray N.S."/>
            <person name="Sabatini D.M."/>
        </authorList>
    </citation>
    <scope>INTERACTION WITH DEPTOR</scope>
    <scope>ACTIVITY REGULATION</scope>
</reference>
<reference key="35">
    <citation type="journal article" date="2009" name="Mol. Cell. Biol.">
        <title>Site-specific mTOR phosphorylation promotes mTORC1-mediated signaling and cell growth.</title>
        <authorList>
            <person name="Acosta-Jaquez H.A."/>
            <person name="Keller J.A."/>
            <person name="Foster K.G."/>
            <person name="Ekim B."/>
            <person name="Soliman G.A."/>
            <person name="Feener E.P."/>
            <person name="Ballif B.A."/>
            <person name="Fingar D.C."/>
        </authorList>
    </citation>
    <scope>PHOSPHORYLATION AT SER-1261</scope>
    <scope>ACTIVITY REGULATION</scope>
</reference>
<reference key="36">
    <citation type="journal article" date="2009" name="Mol. Cell. Proteomics">
        <title>Large-scale proteomics analysis of the human kinome.</title>
        <authorList>
            <person name="Oppermann F.S."/>
            <person name="Gnad F."/>
            <person name="Olsen J.V."/>
            <person name="Hornberger R."/>
            <person name="Greff Z."/>
            <person name="Keri G."/>
            <person name="Mann M."/>
            <person name="Daub H."/>
        </authorList>
    </citation>
    <scope>PHOSPHORYLATION [LARGE SCALE ANALYSIS] AT SER-567</scope>
    <scope>IDENTIFICATION BY MASS SPECTROMETRY [LARGE SCALE ANALYSIS]</scope>
</reference>
<reference key="37">
    <citation type="journal article" date="2009" name="Science">
        <title>Lysine acetylation targets protein complexes and co-regulates major cellular functions.</title>
        <authorList>
            <person name="Choudhary C."/>
            <person name="Kumar C."/>
            <person name="Gnad F."/>
            <person name="Nielsen M.L."/>
            <person name="Rehman M."/>
            <person name="Walther T.C."/>
            <person name="Olsen J.V."/>
            <person name="Mann M."/>
        </authorList>
    </citation>
    <scope>ACETYLATION [LARGE SCALE ANALYSIS] AT LYS-1218</scope>
    <scope>IDENTIFICATION BY MASS SPECTROMETRY [LARGE SCALE ANALYSIS]</scope>
</reference>
<reference key="38">
    <citation type="journal article" date="2010" name="Amino Acids">
        <title>mTOR phosphorylated at S2448 binds to raptor and rictor.</title>
        <authorList>
            <person name="Rosner M."/>
            <person name="Siegel N."/>
            <person name="Valli A."/>
            <person name="Fuchs C."/>
            <person name="Hengstschlager M."/>
        </authorList>
    </citation>
    <scope>PHOSPHORYLATION AT SER-2448</scope>
</reference>
<reference key="39">
    <citation type="journal article" date="2010" name="Cell">
        <title>Ragulator-Rag complex targets mTORC1 to the lysosomal surface and is necessary for its activation by amino acids.</title>
        <authorList>
            <person name="Sancak Y."/>
            <person name="Bar-Peled L."/>
            <person name="Zoncu R."/>
            <person name="Markhard A.L."/>
            <person name="Nada S."/>
            <person name="Sabatini D.M."/>
        </authorList>
    </citation>
    <scope>SUBCELLULAR LOCATION</scope>
    <scope>ACTIVITY REGULATION</scope>
</reference>
<reference key="40">
    <citation type="journal article" date="2010" name="Curr. Biol.">
        <title>DAP1, a novel substrate of mTOR, negatively regulates autophagy.</title>
        <authorList>
            <person name="Koren I."/>
            <person name="Reem E."/>
            <person name="Kimchi A."/>
        </authorList>
    </citation>
    <scope>FUNCTION IN PHOSPHORYLATION OF DAP</scope>
    <scope>FUNCTION IN AUTOPHAGY</scope>
    <scope>CATALYTIC ACTIVITY</scope>
</reference>
<reference key="41">
    <citation type="journal article" date="2010" name="J. Biol. Chem.">
        <title>mTOR Ser-2481 autophosphorylation monitors mTORC-specific catalytic activity and clarifies rapamycin mechanism of action.</title>
        <authorList>
            <person name="Soliman G.A."/>
            <person name="Acosta-Jaquez H.A."/>
            <person name="Dunlop E.A."/>
            <person name="Ekim B."/>
            <person name="Maj N.E."/>
            <person name="Tee A.R."/>
            <person name="Fingar D.C."/>
        </authorList>
    </citation>
    <scope>FUNCTION</scope>
    <scope>CATALYTIC ACTIVITY</scope>
    <scope>PHOSPHORYLATION AT SER-2481</scope>
</reference>
<reference key="42">
    <citation type="journal article" date="2011" name="Cell">
        <title>Activation of mTORC2 by association with the ribosome.</title>
        <authorList>
            <person name="Zinzalla V."/>
            <person name="Stracka D."/>
            <person name="Oppliger W."/>
            <person name="Hall M.N."/>
        </authorList>
    </citation>
    <scope>FUNCTION</scope>
    <scope>ACTIVITY REGULATION</scope>
</reference>
<reference key="43">
    <citation type="journal article" date="2010" name="Genes Dev.">
        <title>A genetic screen identifies the Triple T complex required for DNA damage signaling and ATM and ATR stability.</title>
        <authorList>
            <person name="Hurov K.E."/>
            <person name="Cotta-Ramusino C."/>
            <person name="Elledge S.J."/>
        </authorList>
    </citation>
    <scope>INTERACTION WITH TTI1</scope>
</reference>
<reference key="44">
    <citation type="journal article" date="2010" name="Genes Dev.">
        <title>Tel2 structure and function in the Hsp90-dependent maturation of mTOR and ATR complexes.</title>
        <authorList>
            <person name="Takai H."/>
            <person name="Xie Y."/>
            <person name="de Lange T."/>
            <person name="Pavletich N.P."/>
        </authorList>
    </citation>
    <scope>INTERACTION WITH TELO2</scope>
</reference>
<reference key="45">
    <citation type="journal article" date="2010" name="J. Biol. Chem.">
        <title>Tti1 and Tel2 are critical factors in mammalian target of rapamycin complex assembly.</title>
        <authorList>
            <person name="Kaizuka T."/>
            <person name="Hara T."/>
            <person name="Oshiro N."/>
            <person name="Kikkawa U."/>
            <person name="Yonezawa K."/>
            <person name="Takehana K."/>
            <person name="Iemura S."/>
            <person name="Natsume T."/>
            <person name="Mizushima N."/>
        </authorList>
    </citation>
    <scope>INTERACTION WITH TELO2 AND TTI1</scope>
</reference>
<reference key="46">
    <citation type="journal article" date="2010" name="Mol. Cell. Biol.">
        <title>mTORC1 directly phosphorylates and regulates human MAF1.</title>
        <authorList>
            <person name="Michels A.A."/>
            <person name="Robitaille A.M."/>
            <person name="Buczynski-Ruchonnet D."/>
            <person name="Hodroj W."/>
            <person name="Reina J.H."/>
            <person name="Hall M.N."/>
            <person name="Hernandez N."/>
        </authorList>
    </citation>
    <scope>FUNCTION IN REGULATION OF RNA POLYMERASE III TRANSCRIPTION</scope>
    <scope>FUNCTION IN PHOSPHORYLATION OF MAF1</scope>
    <scope>CATALYTIC ACTIVITY</scope>
</reference>
<reference key="47">
    <citation type="journal article" date="2010" name="Sci. Signal.">
        <title>Quantitative phosphoproteomics reveals widespread full phosphorylation site occupancy during mitosis.</title>
        <authorList>
            <person name="Olsen J.V."/>
            <person name="Vermeulen M."/>
            <person name="Santamaria A."/>
            <person name="Kumar C."/>
            <person name="Miller M.L."/>
            <person name="Jensen L.J."/>
            <person name="Gnad F."/>
            <person name="Cox J."/>
            <person name="Jensen T.S."/>
            <person name="Nigg E.A."/>
            <person name="Brunak S."/>
            <person name="Mann M."/>
        </authorList>
    </citation>
    <scope>PHOSPHORYLATION [LARGE SCALE ANALYSIS] AT SER-567 AND THR-1162</scope>
    <scope>IDENTIFICATION BY MASS SPECTROMETRY [LARGE SCALE ANALYSIS]</scope>
    <source>
        <tissue>Cervix carcinoma</tissue>
    </source>
</reference>
<reference key="48">
    <citation type="journal article" date="2011" name="Biochem. Biophys. Res. Commun.">
        <title>Endoplasmic reticulum is a main localization site of mTORC2.</title>
        <authorList>
            <person name="Boulbes D.R."/>
            <person name="Shaiken T."/>
            <person name="Sarbassov D.D."/>
        </authorList>
    </citation>
    <scope>SUBCELLULAR LOCATION</scope>
</reference>
<reference key="49">
    <citation type="journal article" date="2011" name="BMC Syst. Biol.">
        <title>Initial characterization of the human central proteome.</title>
        <authorList>
            <person name="Burkard T.R."/>
            <person name="Planyavsky M."/>
            <person name="Kaupe I."/>
            <person name="Breitwieser F.P."/>
            <person name="Buerckstuemmer T."/>
            <person name="Bennett K.L."/>
            <person name="Superti-Furga G."/>
            <person name="Colinge J."/>
        </authorList>
    </citation>
    <scope>IDENTIFICATION BY MASS SPECTROMETRY [LARGE SCALE ANALYSIS]</scope>
</reference>
<reference key="50">
    <citation type="journal article" date="2011" name="Mol. Cell. Biol.">
        <title>mTOR kinase domain phosphorylation promotes mTORC1 signaling, cell growth, and cell cycle progression.</title>
        <authorList>
            <person name="Ekim B."/>
            <person name="Magnuson B."/>
            <person name="Acosta-Jaquez H.A."/>
            <person name="Keller J.A."/>
            <person name="Feener E.P."/>
            <person name="Fingar D.C."/>
        </authorList>
    </citation>
    <scope>PHOSPHORYLATION AT SER-2159; THR-2164 AND SER-2481</scope>
    <scope>MUTAGENESIS OF SER-2159 AND THR-2164</scope>
</reference>
<reference key="51">
    <citation type="journal article" date="2011" name="Sci. Signal.">
        <title>System-wide temporal characterization of the proteome and phosphoproteome of human embryonic stem cell differentiation.</title>
        <authorList>
            <person name="Rigbolt K.T."/>
            <person name="Prokhorova T.A."/>
            <person name="Akimov V."/>
            <person name="Henningsen J."/>
            <person name="Johansen P.T."/>
            <person name="Kratchmarova I."/>
            <person name="Kassem M."/>
            <person name="Mann M."/>
            <person name="Olsen J.V."/>
            <person name="Blagoev B."/>
        </authorList>
    </citation>
    <scope>IDENTIFICATION BY MASS SPECTROMETRY [LARGE SCALE ANALYSIS]</scope>
</reference>
<reference key="52">
    <citation type="journal article" date="2011" name="Science">
        <title>The mTOR-regulated phosphoproteome reveals a mechanism of mTORC1-mediated inhibition of growth factor signaling.</title>
        <authorList>
            <person name="Hsu P.P."/>
            <person name="Kang S.A."/>
            <person name="Rameseder J."/>
            <person name="Zhang Y."/>
            <person name="Ottina K.A."/>
            <person name="Lim D."/>
            <person name="Peterson T.R."/>
            <person name="Choi Y."/>
            <person name="Gray N.S."/>
            <person name="Yaffe M.B."/>
            <person name="Marto J.A."/>
            <person name="Sabatini D.M."/>
        </authorList>
    </citation>
    <scope>FUNCTION IN PHOSPHORYLATION OF GRB10</scope>
    <scope>CATALYTIC ACTIVITY</scope>
    <scope>FUNCTION IN INSR-DEPENDENT SIGNALING</scope>
</reference>
<reference key="53">
    <citation type="journal article" date="2012" name="Autophagy">
        <title>MTORC1 functions as a transcriptional regulator of autophagy by preventing nuclear transport of TFEB.</title>
        <authorList>
            <person name="Martina J.A."/>
            <person name="Chen Y."/>
            <person name="Gucek M."/>
            <person name="Puertollano R."/>
        </authorList>
    </citation>
    <scope>FUNCTION</scope>
    <scope>CATALYTIC ACTIVITY</scope>
</reference>
<reference key="54">
    <citation type="journal article" date="2012" name="EMBO J.">
        <title>A lysosome-to-nucleus signalling mechanism senses and regulates the lysosome via mTOR and TFEB.</title>
        <authorList>
            <person name="Settembre C."/>
            <person name="Zoncu R."/>
            <person name="Medina D.L."/>
            <person name="Vetrini F."/>
            <person name="Erdin S."/>
            <person name="Erdin S."/>
            <person name="Huynh T."/>
            <person name="Ferron M."/>
            <person name="Karsenty G."/>
            <person name="Vellard M.C."/>
            <person name="Facchinetti V."/>
            <person name="Sabatini D.M."/>
            <person name="Ballabio A."/>
        </authorList>
    </citation>
    <scope>FUNCTION</scope>
    <scope>CATALYTIC ACTIVITY</scope>
</reference>
<reference key="55">
    <citation type="journal article" date="2012" name="Sci. Signal.">
        <title>The transcription factor TFEB links mTORC1 signaling to transcriptional control of lysosome homeostasis.</title>
        <authorList>
            <person name="Roczniak-Ferguson A."/>
            <person name="Petit C.S."/>
            <person name="Froehlich F."/>
            <person name="Qian S."/>
            <person name="Ky J."/>
            <person name="Angarola B."/>
            <person name="Walther T.C."/>
            <person name="Ferguson S.M."/>
        </authorList>
    </citation>
    <scope>FUNCTION</scope>
    <scope>CATALYTIC ACTIVITY</scope>
</reference>
<reference key="56">
    <citation type="journal article" date="2012" name="EMBO Mol. Med.">
        <title>5-HT(6) receptor recruitment of mTOR as a mechanism for perturbed cognition in schizophrenia.</title>
        <authorList>
            <person name="Meffre J."/>
            <person name="Chaumont-Dubel S."/>
            <person name="Mannoury la Cour C."/>
            <person name="Loiseau F."/>
            <person name="Watson D.J."/>
            <person name="Dekeyne A."/>
            <person name="Seveno M."/>
            <person name="Rivet J.M."/>
            <person name="Gaven F."/>
            <person name="Deleris P."/>
            <person name="Herve D."/>
            <person name="Fone K.C."/>
            <person name="Bockaert J."/>
            <person name="Millan M.J."/>
            <person name="Marin P."/>
        </authorList>
    </citation>
    <scope>INTERACTION WITH HTR6</scope>
</reference>
<reference key="57">
    <citation type="journal article" date="2012" name="Proc. Natl. Acad. Sci. U.S.A.">
        <title>N-terminal acetylome analyses and functional insights of the N-terminal acetyltransferase NatB.</title>
        <authorList>
            <person name="Van Damme P."/>
            <person name="Lasa M."/>
            <person name="Polevoda B."/>
            <person name="Gazquez C."/>
            <person name="Elosegui-Artola A."/>
            <person name="Kim D.S."/>
            <person name="De Juan-Pardo E."/>
            <person name="Demeyer K."/>
            <person name="Hole K."/>
            <person name="Larrea E."/>
            <person name="Timmerman E."/>
            <person name="Prieto J."/>
            <person name="Arnesen T."/>
            <person name="Sherman F."/>
            <person name="Gevaert K."/>
            <person name="Aldabe R."/>
        </authorList>
    </citation>
    <scope>ACETYLATION [LARGE SCALE ANALYSIS] AT MET-1</scope>
    <scope>IDENTIFICATION BY MASS SPECTROMETRY [LARGE SCALE ANALYSIS]</scope>
</reference>
<reference key="58">
    <citation type="journal article" date="2013" name="Cell">
        <title>mTOR regulates lysosomal ATP-sensitive two-pore Na(+) channels to adapt to metabolic state.</title>
        <authorList>
            <person name="Cang C."/>
            <person name="Zhou Y."/>
            <person name="Navarro B."/>
            <person name="Seo Y.J."/>
            <person name="Aranda K."/>
            <person name="Shi L."/>
            <person name="Battaglia-Hsu S."/>
            <person name="Nissim I."/>
            <person name="Clapham D.E."/>
            <person name="Ren D."/>
        </authorList>
    </citation>
    <scope>FUNCTION</scope>
    <scope>INTERACTION WITH TPCN1 AND TPCN2</scope>
</reference>
<reference key="59">
    <citation type="journal article" date="2013" name="J. Biol. Chem.">
        <title>Phosphorylation of lipin 1 and charge on the phosphatidic acid head group control its phosphatidic acid phosphatase activity and membrane association.</title>
        <authorList>
            <person name="Eaton J.M."/>
            <person name="Mullins G.R."/>
            <person name="Brindley D.N."/>
            <person name="Harris T.E."/>
        </authorList>
    </citation>
    <scope>FUNCTION</scope>
</reference>
<reference key="60">
    <citation type="journal article" date="2013" name="J. Cancer Biol. Res.">
        <title>The potential role of BRCA1-associated ATM activator-1 (BRAT1) in regulation of mTOR.</title>
        <authorList>
            <person name="So E.Y."/>
            <person name="Ouchi T."/>
        </authorList>
    </citation>
    <scope>INTERACTION WITH BRAT1</scope>
</reference>
<reference key="61">
    <citation type="journal article" date="2013" name="J. Cell Biol.">
        <title>Phosphorylation of the TOR ATP binding domain by AGC kinase constitutes a novel mode of TOR inhibition.</title>
        <authorList>
            <person name="Halova L."/>
            <person name="Du W."/>
            <person name="Kirkham S."/>
            <person name="Smith D.L."/>
            <person name="Petersen J."/>
        </authorList>
    </citation>
    <scope>PHOSPHORYLATION AT THR-2173</scope>
    <scope>MUTAGENESIS OF THR-2173</scope>
</reference>
<reference key="62">
    <citation type="journal article" date="2013" name="J. Proteome Res.">
        <title>Toward a comprehensive characterization of a human cancer cell phosphoproteome.</title>
        <authorList>
            <person name="Zhou H."/>
            <person name="Di Palma S."/>
            <person name="Preisinger C."/>
            <person name="Peng M."/>
            <person name="Polat A.N."/>
            <person name="Heck A.J."/>
            <person name="Mohammed S."/>
        </authorList>
    </citation>
    <scope>PHOSPHORYLATION [LARGE SCALE ANALYSIS] AT SER-1261</scope>
    <scope>IDENTIFICATION BY MASS SPECTROMETRY [LARGE SCALE ANALYSIS]</scope>
    <source>
        <tissue>Cervix carcinoma</tissue>
        <tissue>Erythroleukemia</tissue>
    </source>
</reference>
<reference key="63">
    <citation type="journal article" date="2013" name="Nat. Cell Biol.">
        <title>mTOR inhibits autophagy by controlling ULK1 ubiquitylation, self-association and function through AMBRA1 and TRAF6.</title>
        <authorList>
            <person name="Nazio F."/>
            <person name="Strappazzon F."/>
            <person name="Antonioli M."/>
            <person name="Bielli P."/>
            <person name="Cianfanelli V."/>
            <person name="Bordi M."/>
            <person name="Gretzmeier C."/>
            <person name="Dengjel J."/>
            <person name="Piacentini M."/>
            <person name="Fimia G.M."/>
            <person name="Cecconi F."/>
        </authorList>
    </citation>
    <scope>FUNCTION IN PHOSPHORYLATION OF AMBRA1</scope>
</reference>
<reference key="64">
    <citation type="journal article" date="2013" name="PLoS ONE">
        <title>Interaction between NBS1 and the mTOR/Rictor/SIN1 complex through specific domains.</title>
        <authorList>
            <person name="Wang J.Q."/>
            <person name="Chen J.H."/>
            <person name="Chen Y.C."/>
            <person name="Chen M.Y."/>
            <person name="Hsieh C.Y."/>
            <person name="Teng S.C."/>
            <person name="Wu K.J."/>
        </authorList>
    </citation>
    <scope>INTERACTION WITH NBN</scope>
</reference>
<reference key="65">
    <citation type="journal article" date="2013" name="Science">
        <title>Quantitative phosphoproteomics reveal mTORC1 activates de novo pyrimidine synthesis.</title>
        <authorList>
            <person name="Robitaille A.M."/>
            <person name="Christen S."/>
            <person name="Shimobayashi M."/>
            <person name="Cornu M."/>
            <person name="Fava L.L."/>
            <person name="Moes S."/>
            <person name="Prescianotto-Baschong C."/>
            <person name="Sauer U."/>
            <person name="Jenoe P."/>
            <person name="Hall M.N."/>
        </authorList>
    </citation>
    <scope>FUNCTION</scope>
    <scope>REGULATION OF PYRIMIDINE SYNTHESIS</scope>
</reference>
<reference key="66">
    <citation type="journal article" date="2013" name="Science">
        <title>Stimulation of de novo pyrimidine synthesis by growth signaling through mTOR and S6K1.</title>
        <authorList>
            <person name="Ben-Sahra I."/>
            <person name="Howell J.J."/>
            <person name="Asara J.M."/>
            <person name="Manning B.D."/>
        </authorList>
    </citation>
    <scope>FUNCTION</scope>
    <scope>REGULATION OF PYRIMIDINE SYNTHESIS</scope>
</reference>
<reference key="67">
    <citation type="journal article" date="2014" name="J. Biol. Chem.">
        <title>Characterization of the Raptor/4E-BP1 interaction by chemical cross-linking coupled with mass spectrometry analysis.</title>
        <authorList>
            <person name="Coffman K."/>
            <person name="Yang B."/>
            <person name="Lu J."/>
            <person name="Tetlow A.L."/>
            <person name="Pelliccio E."/>
            <person name="Lu S."/>
            <person name="Guo D.C."/>
            <person name="Tang C."/>
            <person name="Dong M.Q."/>
            <person name="Tamanoi F."/>
        </authorList>
    </citation>
    <scope>FUNCTION</scope>
    <scope>IDENTIFICATION IN THE MTORC1 COMPLEX</scope>
</reference>
<reference key="68">
    <citation type="journal article" date="2014" name="J. Proteomics">
        <title>An enzyme assisted RP-RPLC approach for in-depth analysis of human liver phosphoproteome.</title>
        <authorList>
            <person name="Bian Y."/>
            <person name="Song C."/>
            <person name="Cheng K."/>
            <person name="Dong M."/>
            <person name="Wang F."/>
            <person name="Huang J."/>
            <person name="Sun D."/>
            <person name="Wang L."/>
            <person name="Ye M."/>
            <person name="Zou H."/>
        </authorList>
    </citation>
    <scope>PHOSPHORYLATION [LARGE SCALE ANALYSIS] AT SER-2448</scope>
    <scope>IDENTIFICATION BY MASS SPECTROMETRY [LARGE SCALE ANALYSIS]</scope>
    <source>
        <tissue>Liver</tissue>
    </source>
</reference>
<reference key="69">
    <citation type="journal article" date="2014" name="Nature">
        <title>Cell-cycle-regulated activation of Akt kinase by phosphorylation at its carboxyl terminus.</title>
        <authorList>
            <person name="Liu P."/>
            <person name="Begley M."/>
            <person name="Michowski W."/>
            <person name="Inuzuka H."/>
            <person name="Ginzberg M."/>
            <person name="Gao D."/>
            <person name="Tsou P."/>
            <person name="Gan W."/>
            <person name="Papa A."/>
            <person name="Kim B.M."/>
            <person name="Wan L."/>
            <person name="Singh A."/>
            <person name="Zhai B."/>
            <person name="Yuan M."/>
            <person name="Wang Z."/>
            <person name="Gygi S.P."/>
            <person name="Lee T.H."/>
            <person name="Lu K.P."/>
            <person name="Toker A."/>
            <person name="Pandolfi P.P."/>
            <person name="Asara J.M."/>
            <person name="Kirschner M.W."/>
            <person name="Sicinski P."/>
            <person name="Cantley L."/>
            <person name="Wei W."/>
        </authorList>
    </citation>
    <scope>FUNCTION</scope>
</reference>
<reference key="70">
    <citation type="journal article" date="2014" name="Sci. Signal.">
        <title>The nutrient-responsive transcription factor TFE3 promotes autophagy, lysosomal biogenesis, and clearance of cellular debris.</title>
        <authorList>
            <person name="Martina J.A."/>
            <person name="Diab H.I."/>
            <person name="Lishu L."/>
            <person name="Jeong-A L."/>
            <person name="Patange S."/>
            <person name="Raben N."/>
            <person name="Puertollano R."/>
        </authorList>
    </citation>
    <scope>FUNCTION</scope>
</reference>
<reference key="71">
    <citation type="journal article" date="2015" name="Am. J. Med. Genet. A">
        <title>A germline MTOR mutation in Aboriginal Australian siblings with intellectual disability, dysmorphism, macrocephaly, and small thoraces.</title>
        <authorList>
            <person name="Baynam G."/>
            <person name="Overkov A."/>
            <person name="Davis M."/>
            <person name="Mina K."/>
            <person name="Schofield L."/>
            <person name="Allcock R."/>
            <person name="Laing N."/>
            <person name="Cook M."/>
            <person name="Dawkins H."/>
            <person name="Goldblatt J."/>
        </authorList>
    </citation>
    <scope>INVOLVEMENT IN SKS</scope>
    <scope>VARIANT SKS LYS-1799</scope>
    <scope>CHARACTERIZATION OF VARIANT SKS LYS-1799</scope>
</reference>
<reference key="72">
    <citation type="journal article" date="2015" name="Ann. Neurol.">
        <title>Somatic mutations in the MTOR gene cause focal cortical dysplasia type IIb.</title>
        <authorList>
            <person name="Nakashima M."/>
            <person name="Saitsu H."/>
            <person name="Takei N."/>
            <person name="Tohyama J."/>
            <person name="Kato M."/>
            <person name="Kitaura H."/>
            <person name="Shiina M."/>
            <person name="Shirozu H."/>
            <person name="Masuda H."/>
            <person name="Watanabe K."/>
            <person name="Ohba C."/>
            <person name="Tsurusaki Y."/>
            <person name="Miyake N."/>
            <person name="Zheng Y."/>
            <person name="Sato T."/>
            <person name="Takebayashi H."/>
            <person name="Ogata K."/>
            <person name="Kameyama S."/>
            <person name="Kakita A."/>
            <person name="Matsumoto N."/>
        </authorList>
    </citation>
    <scope>FUNCTION</scope>
    <scope>INVOLVEMENT IN FCORD2</scope>
    <scope>VARIANTS FCORD2 ASP-1459; PRO-1460; PHE-2215 AND TYR-2215</scope>
    <scope>CHARACTERIZATION OF VARIANTS FCORD2 ASP-1459; PRO-1460; PHE-2215 AND TYR-2215</scope>
</reference>
<reference key="73">
    <citation type="journal article" date="2015" name="BMC Med. Genet.">
        <title>Germline activating MTOR mutation arising through gonadal mosaicism in two brothers with megalencephaly and neurodevelopmental abnormalities.</title>
        <authorList>
            <person name="Mroske C."/>
            <person name="Rasmussen K."/>
            <person name="Shinde D.N."/>
            <person name="Huether R."/>
            <person name="Powis Z."/>
            <person name="Lu H.M."/>
            <person name="Baxter R.M."/>
            <person name="McPherson E."/>
            <person name="Tang S."/>
        </authorList>
    </citation>
    <scope>INVOLVEMENT IN SKS</scope>
    <scope>VARIANT SKS LYS-1799</scope>
    <scope>CHARACTERIZATION OF VARIANT SKS LYS-1799</scope>
</reference>
<reference key="74">
    <citation type="journal article" date="2015" name="Nat. Cell Biol.">
        <title>AMBRA1 links autophagy to cell proliferation and tumorigenesis by promoting c-Myc dephosphorylation and degradation.</title>
        <authorList>
            <person name="Cianfanelli V."/>
            <person name="Fuoco C."/>
            <person name="Lorente M."/>
            <person name="Salazar M."/>
            <person name="Quondamatteo F."/>
            <person name="Gherardini P.F."/>
            <person name="De Zio D."/>
            <person name="Nazio F."/>
            <person name="Antonioli M."/>
            <person name="D'Orazio M."/>
            <person name="Skobo T."/>
            <person name="Bordi M."/>
            <person name="Rohde M."/>
            <person name="Dalla Valle L."/>
            <person name="Helmer-Citterich M."/>
            <person name="Gretzmeier C."/>
            <person name="Dengjel J."/>
            <person name="Fimia G.M."/>
            <person name="Piacentini M."/>
            <person name="Di Bartolomeo S."/>
            <person name="Velasco G."/>
            <person name="Cecconi F."/>
        </authorList>
    </citation>
    <scope>FUNCTION IN PHOSPHORYLATION OF AMBRA1</scope>
</reference>
<reference key="75">
    <citation type="journal article" date="2015" name="Nat. Cell Biol.">
        <authorList>
            <person name="Cianfanelli V."/>
            <person name="Fuoco C."/>
            <person name="Lorente M."/>
            <person name="Salazar M."/>
            <person name="Quondamatteo F."/>
            <person name="Gherardini P.F."/>
            <person name="De Zio D."/>
            <person name="Nazio F."/>
            <person name="Antonioli M."/>
            <person name="D'Orazio M."/>
            <person name="Skobo T."/>
            <person name="Bordi M."/>
            <person name="Rohde M."/>
            <person name="Dalla Valle L."/>
            <person name="Helmer-Citterich M."/>
            <person name="Gretzmeier C."/>
            <person name="Dengjel J."/>
            <person name="Fimia G.M."/>
            <person name="Piacentini M."/>
            <person name="Di Bartolomeo S."/>
            <person name="Velasco G."/>
            <person name="Cecconi F."/>
        </authorList>
    </citation>
    <scope>ERRATUM OF PUBMED:25438055</scope>
</reference>
<reference key="76">
    <citation type="journal article" date="2015" name="Nat. Med.">
        <title>Brain somatic mutations in MTOR cause focal cortical dysplasia type II leading to intractable epilepsy.</title>
        <authorList>
            <person name="Lim J.S."/>
            <person name="Kim W.I."/>
            <person name="Kang H.C."/>
            <person name="Kim S.H."/>
            <person name="Park A.H."/>
            <person name="Park E.K."/>
            <person name="Cho Y.W."/>
            <person name="Kim S."/>
            <person name="Kim H.M."/>
            <person name="Kim J.A."/>
            <person name="Kim J."/>
            <person name="Rhee H."/>
            <person name="Kang S.G."/>
            <person name="Kim H.D."/>
            <person name="Kim D."/>
            <person name="Kim D.S."/>
            <person name="Lee J.H."/>
        </authorList>
    </citation>
    <scope>FUNCTION</scope>
    <scope>INVOLVEMENT IN FCORD2</scope>
    <scope>VARIANTS FCORD2 HIS-624; ASP-1450; ARG-1483; HIS-1709; LYS-1977; CYS-2193; PHE-2215; GLN-2427 AND PRO-2427</scope>
    <scope>CHARACTERIZATION OF VARIANTS FCORD2 ARG-1483; GLN-2427 AND PRO-2427</scope>
</reference>
<reference key="77">
    <citation type="journal article" date="2015" name="Nature">
        <title>SLC38A9 is a component of the lysosomal amino acid sensing machinery that controls mTORC1.</title>
        <authorList>
            <person name="Rebsamen M."/>
            <person name="Pochini L."/>
            <person name="Stasyk T."/>
            <person name="de Araujo M.E."/>
            <person name="Galluccio M."/>
            <person name="Kandasamy R.K."/>
            <person name="Snijder B."/>
            <person name="Fauster A."/>
            <person name="Rudashevskaya E.L."/>
            <person name="Bruckner M."/>
            <person name="Scorzoni S."/>
            <person name="Filipek P.A."/>
            <person name="Huber K.V."/>
            <person name="Bigenzahn J.W."/>
            <person name="Heinz L.X."/>
            <person name="Kraft C."/>
            <person name="Bennett K.L."/>
            <person name="Indiveri C."/>
            <person name="Huber L.A."/>
            <person name="Superti-Furga G."/>
        </authorList>
    </citation>
    <scope>ACTIVITY REGULATION</scope>
</reference>
<reference key="78">
    <citation type="journal article" date="2015" name="Neurology">
        <title>Hemispheric cortical dysplasia secondary to a mosaic somatic mutation in MTOR.</title>
        <authorList>
            <person name="Leventer R.J."/>
            <person name="Scerri T."/>
            <person name="Marsh A.P."/>
            <person name="Pope K."/>
            <person name="Gillies G."/>
            <person name="Maixner W."/>
            <person name="MacGregor D."/>
            <person name="Harvey A.S."/>
            <person name="Delatycki M.B."/>
            <person name="Amor D.J."/>
            <person name="Crino P."/>
            <person name="Bahlo M."/>
            <person name="Lockhart P.J."/>
        </authorList>
    </citation>
    <scope>INVOLVEMENT IN FCORD2</scope>
    <scope>VARIANT FCORD2 GLY-1456</scope>
</reference>
<reference key="79">
    <citation type="journal article" date="2015" name="Proteomics">
        <title>N-terminome analysis of the human mitochondrial proteome.</title>
        <authorList>
            <person name="Vaca Jacome A.S."/>
            <person name="Rabilloud T."/>
            <person name="Schaeffer-Reiss C."/>
            <person name="Rompais M."/>
            <person name="Ayoub D."/>
            <person name="Lane L."/>
            <person name="Bairoch A."/>
            <person name="Van Dorsselaer A."/>
            <person name="Carapito C."/>
        </authorList>
    </citation>
    <scope>IDENTIFICATION BY MASS SPECTROMETRY [LARGE SCALE ANALYSIS]</scope>
</reference>
<reference key="80">
    <citation type="journal article" date="2015" name="Science">
        <title>Metabolism. Lysosomal amino acid transporter SLC38A9 signals arginine sufficiency to mTORC1.</title>
        <authorList>
            <person name="Wang S."/>
            <person name="Tsun Z.Y."/>
            <person name="Wolfson R.L."/>
            <person name="Shen K."/>
            <person name="Wyant G.A."/>
            <person name="Plovanich M.E."/>
            <person name="Yuan E.D."/>
            <person name="Jones T.D."/>
            <person name="Chantranupong L."/>
            <person name="Comb W."/>
            <person name="Wang T."/>
            <person name="Bar-Peled L."/>
            <person name="Zoncu R."/>
            <person name="Straub C."/>
            <person name="Kim C."/>
            <person name="Park J."/>
            <person name="Sabatini B.L."/>
            <person name="Sabatini D.M."/>
        </authorList>
    </citation>
    <scope>ACTIVITY REGULATION</scope>
</reference>
<reference key="81">
    <citation type="journal article" date="2016" name="Cell Res.">
        <title>mTORC2 promotes type I insulin-like growth factor receptor and insulin receptor activation through the tyrosine kinase activity of mTOR.</title>
        <authorList>
            <person name="Yin Y."/>
            <person name="Hua H."/>
            <person name="Li M."/>
            <person name="Liu S."/>
            <person name="Kong Q."/>
            <person name="Shao T."/>
            <person name="Wang J."/>
            <person name="Luo Y."/>
            <person name="Wang Q."/>
            <person name="Luo T."/>
            <person name="Jiang Y."/>
        </authorList>
    </citation>
    <scope>FUNCTION</scope>
    <scope>CATALYTIC ACTIVITY</scope>
</reference>
<reference key="82">
    <citation type="journal article" date="2016" name="Dev. Cell">
        <title>WAC regulates mTOR activity by acting as an adaptor for the TTT and Pontin/Reptin complexes.</title>
        <authorList>
            <person name="David-Morrison G."/>
            <person name="Xu Z."/>
            <person name="Rui Y.N."/>
            <person name="Charng W.L."/>
            <person name="Jaiswal M."/>
            <person name="Yamamoto S."/>
            <person name="Xiong B."/>
            <person name="Zhang K."/>
            <person name="Sandoval H."/>
            <person name="Duraine L."/>
            <person name="Zuo Z."/>
            <person name="Zhang S."/>
            <person name="Bellen H.J."/>
        </authorList>
    </citation>
    <scope>INTERACTION WITH WAC</scope>
</reference>
<reference key="83">
    <citation type="journal article" date="2016" name="Dev. Cell">
        <title>PIKfyve Regulates Vacuole Maturation and Nutrient Recovery following Engulfment.</title>
        <authorList>
            <person name="Krishna S."/>
            <person name="Palm W."/>
            <person name="Lee Y."/>
            <person name="Yang W."/>
            <person name="Bandyopadhyay U."/>
            <person name="Xu H."/>
            <person name="Florey O."/>
            <person name="Thompson C.B."/>
            <person name="Overholtzer M."/>
        </authorList>
    </citation>
    <scope>SUBCELLULAR LOCATION</scope>
</reference>
<reference key="84">
    <citation type="journal article" date="2016" name="Neurol. Genet.">
        <title>Germline and somatic mutations in the MTOR gene in focal cortical dysplasia and epilepsy.</title>
        <authorList>
            <person name="Moeller R.S."/>
            <person name="Weckhuysen S."/>
            <person name="Chipaux M."/>
            <person name="Marsan E."/>
            <person name="Taly V."/>
            <person name="Bebin E.M."/>
            <person name="Hiatt S.M."/>
            <person name="Prokop J.W."/>
            <person name="Bowling K.M."/>
            <person name="Mei D."/>
            <person name="Conti V."/>
            <person name="de la Grange P."/>
            <person name="Ferrand-Sorbets S."/>
            <person name="Dorfmueller G."/>
            <person name="Lambrecq V."/>
            <person name="Larsen L.H."/>
            <person name="Leguern E."/>
            <person name="Guerrini R."/>
            <person name="Rubboli G."/>
            <person name="Cooper G.M."/>
            <person name="Baulac S."/>
        </authorList>
    </citation>
    <scope>INVOLVEMENT IN FCORD2</scope>
    <scope>VARIANTS GLU-1376 AND VAL-2501</scope>
    <scope>VARIANTS FCORD2 SER-1459; PRO-1460; PHE-2215 AND TYR-2215</scope>
    <scope>VARIANTS SKS ARG-1490; ILE-1595; THR-1832; CYS-1888 AND ILE-2327</scope>
</reference>
<reference key="85">
    <citation type="journal article" date="2018" name="J. Biol. Chem.">
        <title>The SCFFBXO46 ubiquitin ligase complex mediates degradation of the tumor suppressor FBXO31 and thereby prevents premature cellular senescence.</title>
        <authorList>
            <person name="Choppara S."/>
            <person name="Ganga S."/>
            <person name="Manne R."/>
            <person name="Dutta P."/>
            <person name="Singh S."/>
            <person name="Santra M.K."/>
        </authorList>
    </citation>
    <scope>FUNCTION</scope>
</reference>
<reference key="86">
    <citation type="journal article" date="2018" name="Sci. Adv.">
        <title>Mammalian EAK-7 activates alternative mTOR signaling to regulate cell proliferation and migration.</title>
        <authorList>
            <person name="Nguyen J.T."/>
            <person name="Ray C."/>
            <person name="Fox A.L."/>
            <person name="Mendonca D.B."/>
            <person name="Kim J.K."/>
            <person name="Krebsbach P.H."/>
        </authorList>
    </citation>
    <scope>SUBCELLULAR LOCATION</scope>
    <scope>INTERACTION WITH MEAK7</scope>
</reference>
<reference key="87">
    <citation type="journal article" date="2018" name="EMBO J.">
        <title>The IKK-related kinase TBK1 activates mTORC1 directly in response to growth factors and innate immune agonists.</title>
        <authorList>
            <person name="Bodur C."/>
            <person name="Kazyken D."/>
            <person name="Huang K."/>
            <person name="Ekim Ustunel B."/>
            <person name="Siroky K.A."/>
            <person name="Tooley A.S."/>
            <person name="Gonzalez I.E."/>
            <person name="Foley D.H."/>
            <person name="Acosta-Jaquez H.A."/>
            <person name="Barnes T.M."/>
            <person name="Steinl G.K."/>
            <person name="Cho K.W."/>
            <person name="Lumeng C.N."/>
            <person name="Riddle S.M."/>
            <person name="Myers M.G. Jr."/>
            <person name="Fingar D.C."/>
        </authorList>
    </citation>
    <scope>FUNCTION</scope>
    <scope>CATALYTIC ACTIVITY</scope>
    <scope>PHOSPHORYLATION AT SER-2159</scope>
    <scope>MUTAGENESIS OF SER-2159</scope>
</reference>
<reference key="88">
    <citation type="journal article" date="2019" name="Cell Metab.">
        <title>Transmembrane 4 L six family member 5 senses arginine for mTORC1 signaling.</title>
        <authorList>
            <person name="Jung J.W."/>
            <person name="Macalino S.J.Y."/>
            <person name="Cui M."/>
            <person name="Kim J.E."/>
            <person name="Kim H.J."/>
            <person name="Song D.G."/>
            <person name="Nam S.H."/>
            <person name="Kim S."/>
            <person name="Choi S."/>
            <person name="Lee J.W."/>
        </authorList>
    </citation>
    <scope>INTERACTION WITH TM4SF5</scope>
    <scope>SUBCELLULAR LOCATION</scope>
    <scope>MUTAGENESIS OF ASP-2357 AND VAL-2364</scope>
</reference>
<reference key="89">
    <citation type="journal article" date="2019" name="Mol. Cell">
        <title>Pacer is a mediator of mTORC1 and GSK3-TIP60 signaling in regulation of autophagosome maturation and lipid metabolism.</title>
        <authorList>
            <person name="Cheng X."/>
            <person name="Ma X."/>
            <person name="Zhu Q."/>
            <person name="Song D."/>
            <person name="Ding X."/>
            <person name="Li L."/>
            <person name="Jiang X."/>
            <person name="Wang X."/>
            <person name="Tian R."/>
            <person name="Su H."/>
            <person name="Shen Z."/>
            <person name="Chen S."/>
            <person name="Liu T."/>
            <person name="Gong W."/>
            <person name="Liu W."/>
            <person name="Sun Q."/>
        </authorList>
    </citation>
    <scope>FUNCTION</scope>
</reference>
<reference key="90">
    <citation type="journal article" date="2019" name="Elife">
        <title>GPCR signaling inhibits mTORC1 via PKA phosphorylation of Raptor.</title>
        <authorList>
            <person name="Jewell J.L."/>
            <person name="Fu V."/>
            <person name="Hong A.W."/>
            <person name="Yu F.X."/>
            <person name="Meng D."/>
            <person name="Melick C.H."/>
            <person name="Wang H."/>
            <person name="Lam W.M."/>
            <person name="Yuan H.X."/>
            <person name="Taylor S.S."/>
            <person name="Guan K.L."/>
        </authorList>
    </citation>
    <scope>FUNCTION</scope>
    <scope>SUBCELLULAR LOCATION</scope>
</reference>
<reference key="91">
    <citation type="journal article" date="2019" name="Nature">
        <title>Lipid signalling drives proteolytic rewiring of mitochondria by YME1L.</title>
        <authorList>
            <person name="MacVicar T."/>
            <person name="Ohba Y."/>
            <person name="Nolte H."/>
            <person name="Mayer F.C."/>
            <person name="Tatsuta T."/>
            <person name="Sprenger H.G."/>
            <person name="Lindner B."/>
            <person name="Zhao Y."/>
            <person name="Li J."/>
            <person name="Bruns C."/>
            <person name="Krueger M."/>
            <person name="Habich M."/>
            <person name="Riemer J."/>
            <person name="Schwarzer R."/>
            <person name="Pasparakis M."/>
            <person name="Henschke S."/>
            <person name="Bruening J.C."/>
            <person name="Zamboni N."/>
            <person name="Langer T."/>
        </authorList>
    </citation>
    <scope>FUNCTION</scope>
</reference>
<reference key="92">
    <citation type="journal article" date="2019" name="Nat. Cell Biol.">
        <title>The lysosomal GPCR-like protein GPR137B regulates Rag and mTORC1 localization and activity.</title>
        <authorList>
            <person name="Gan L."/>
            <person name="Seki A."/>
            <person name="Shen K."/>
            <person name="Iyer H."/>
            <person name="Han K."/>
            <person name="Hayer A."/>
            <person name="Wollman R."/>
            <person name="Ge X."/>
            <person name="Lin J.R."/>
            <person name="Dey G."/>
            <person name="Talbot W.S."/>
            <person name="Meyer T."/>
        </authorList>
    </citation>
    <scope>INTERACTION WITH GPR137B</scope>
</reference>
<reference key="93">
    <citation type="journal article" date="2019" name="Science">
        <title>Structural basis for the docking of mTORC1 on the lysosomal surface.</title>
        <authorList>
            <person name="Rogala K.B."/>
            <person name="Gu X."/>
            <person name="Kedir J.F."/>
            <person name="Abu-Remaileh M."/>
            <person name="Bianchi L.F."/>
            <person name="Bottino A.M.S."/>
            <person name="Dueholm R."/>
            <person name="Niehaus A."/>
            <person name="Overwijn D."/>
            <person name="Fils A.P."/>
            <person name="Zhou S.X."/>
            <person name="Leary D."/>
            <person name="Laqtom N.N."/>
            <person name="Brignole E.J."/>
            <person name="Sabatini D.M."/>
        </authorList>
    </citation>
    <scope>FUNCTION</scope>
</reference>
<reference key="94">
    <citation type="journal article" date="2020" name="Cell Rep.">
        <title>mTORC2 Assembly Is Regulated by USP9X-Mediated Deubiquitination of RICTOR.</title>
        <authorList>
            <person name="Wrobel L."/>
            <person name="Siddiqi F.H."/>
            <person name="Hill S.M."/>
            <person name="Son S.M."/>
            <person name="Karabiyik C."/>
            <person name="Kim H."/>
            <person name="Rubinsztein D.C."/>
        </authorList>
    </citation>
    <scope>INTERACTION WITH RICTOR</scope>
</reference>
<reference key="95">
    <citation type="journal article" date="2020" name="Nature">
        <title>A substrate-specific mTORC1 pathway underlies Birt-Hogg-Dube syndrome.</title>
        <authorList>
            <person name="Napolitano G."/>
            <person name="Di Malta C."/>
            <person name="Esposito A."/>
            <person name="de Araujo M.E.G."/>
            <person name="Pece S."/>
            <person name="Bertalot G."/>
            <person name="Matarese M."/>
            <person name="Benedetti V."/>
            <person name="Zampelli A."/>
            <person name="Stasyk T."/>
            <person name="Siciliano D."/>
            <person name="Venuta A."/>
            <person name="Cesana M."/>
            <person name="Vilardo C."/>
            <person name="Nusco E."/>
            <person name="Monfregola J."/>
            <person name="Calcagni A."/>
            <person name="Di Fiore P.P."/>
            <person name="Huber L.A."/>
            <person name="Ballabio A."/>
        </authorList>
    </citation>
    <scope>FUNCTION</scope>
    <scope>ACTIVITY REGULATION</scope>
</reference>
<reference key="96">
    <citation type="journal article" date="2020" name="Nat. Commun.">
        <title>Leucine regulates autophagy via acetylation of the mTORC1 component raptor.</title>
        <authorList>
            <person name="Son S.M."/>
            <person name="Park S.J."/>
            <person name="Stamatakou E."/>
            <person name="Vicinanza M."/>
            <person name="Menzies F.M."/>
            <person name="Rubinsztein D.C."/>
        </authorList>
    </citation>
    <scope>FUNCTION</scope>
</reference>
<reference key="97">
    <citation type="journal article" date="2020" name="Science">
        <title>HEM1 deficiency disrupts mTORC2 and F-actin control in inherited immunodysregulatory disease.</title>
        <authorList>
            <person name="Cook S.A."/>
            <person name="Comrie W.A."/>
            <person name="Poli M.C."/>
            <person name="Similuk M."/>
            <person name="Oler A.J."/>
            <person name="Faruqi A.J."/>
            <person name="Kuhns D.B."/>
            <person name="Yang S."/>
            <person name="Vargas-Hernandez A."/>
            <person name="Carisey A.F."/>
            <person name="Fournier B."/>
            <person name="Anderson D.E."/>
            <person name="Price S."/>
            <person name="Smelkinson M."/>
            <person name="Abou Chahla W."/>
            <person name="Forbes L.R."/>
            <person name="Mace E.M."/>
            <person name="Cao T.N."/>
            <person name="Coban-Akdemir Z.H."/>
            <person name="Jhangiani S.N."/>
            <person name="Muzny D.M."/>
            <person name="Gibbs R.A."/>
            <person name="Lupski J.R."/>
            <person name="Orange J.S."/>
            <person name="Cuvelier G.D.E."/>
            <person name="Al Hassani M."/>
            <person name="Al Kaabi N."/>
            <person name="Al Yafei Z."/>
            <person name="Jyonouchi S."/>
            <person name="Raje N."/>
            <person name="Caldwell J.W."/>
            <person name="Huang Y."/>
            <person name="Burkhardt J.K."/>
            <person name="Latour S."/>
            <person name="Chen B."/>
            <person name="ElGhazali G."/>
            <person name="Rao V.K."/>
            <person name="Chinn I.K."/>
            <person name="Lenardo M.J."/>
        </authorList>
    </citation>
    <scope>INTERACTION WITH NCKAP1L</scope>
</reference>
<reference key="98">
    <citation type="journal article" date="2021" name="Cell">
        <title>Control of gasdermin D oligomerization and pyroptosis by the Ragulator-Rag-mTORC1 pathway.</title>
        <authorList>
            <person name="Evavold C.L."/>
            <person name="Hafner-Bratkovic I."/>
            <person name="Devant P."/>
            <person name="D'Andrea J.M."/>
            <person name="Ngwa E.M."/>
            <person name="Borsic E."/>
            <person name="Doench J.G."/>
            <person name="LaFleur M.W."/>
            <person name="Sharpe A.H."/>
            <person name="Thiagarajah J.R."/>
            <person name="Kagan J.C."/>
        </authorList>
    </citation>
    <scope>FUNCTION</scope>
</reference>
<reference key="99">
    <citation type="journal article" date="2022" name="Proc. Natl. Acad. Sci. U.S.A.">
        <title>SNAT7 regulates mTORC1 via macropinocytosis.</title>
        <authorList>
            <person name="Meng D."/>
            <person name="Yang Q."/>
            <person name="Jeong M.H."/>
            <person name="Curukovic A."/>
            <person name="Tiwary S."/>
            <person name="Melick C.H."/>
            <person name="Lama-Sherpa T.D."/>
            <person name="Wang H."/>
            <person name="Huerta-Rosario M."/>
            <person name="Urquhart G."/>
            <person name="Zacharias L.G."/>
            <person name="Lewis C."/>
            <person name="DeBerardinis R.J."/>
            <person name="Jewell J.L."/>
        </authorList>
    </citation>
    <scope>INTERACTION WITH SLC38A7</scope>
</reference>
<reference key="100">
    <citation type="journal article" date="2022" name="Cell Biol. Int.">
        <title>TSPAN8 alleviates high glucose-induced apoptosis and autophagy via targeting mTORC2.</title>
        <authorList>
            <person name="Zhuang L."/>
            <person name="Jin G."/>
            <person name="Hu X."/>
            <person name="Yang Q."/>
            <person name="Pei X."/>
            <person name="Zhao W."/>
        </authorList>
    </citation>
    <scope>INTERACTION WITH TSPAN8</scope>
</reference>
<reference key="101">
    <citation type="journal article" date="2023" name="EMBO J.">
        <title>TORC1 phosphorylates and inhibits the ribosome preservation factor Stm1 to activate dormant ribosomes.</title>
        <authorList>
            <person name="Shetty S."/>
            <person name="Hofstetter J."/>
            <person name="Battaglioni S."/>
            <person name="Ritz D."/>
            <person name="Hall M.N."/>
        </authorList>
    </citation>
    <scope>FUNCTION</scope>
</reference>
<reference key="102">
    <citation type="journal article" date="2023" name="Genet. Med.">
        <title>De novo missense variants in RRAGC lead to a fatal mTORopathy of early childhood.</title>
        <authorList>
            <person name="Reijnders M.R.F."/>
            <person name="Seibt A."/>
            <person name="Brugger M."/>
            <person name="Lamers I.J.C."/>
            <person name="Ott T."/>
            <person name="Klaas O."/>
            <person name="Horvath J."/>
            <person name="Rose A.M.S."/>
            <person name="Craghill I.M."/>
            <person name="Brunet T."/>
            <person name="Graf E."/>
            <person name="Mayerhanser K."/>
            <person name="Hellebrekers D."/>
            <person name="Pauck D."/>
            <person name="Neuen-Jacob E."/>
            <person name="Rodenburg R.J.T."/>
            <person name="Wieczorek D."/>
            <person name="Klee D."/>
            <person name="Mayatepek E."/>
            <person name="Driessen G."/>
            <person name="Bindermann R."/>
            <person name="Averdunk L."/>
            <person name="Lohmeier K."/>
            <person name="Sinnema M."/>
            <person name="Stegmann A.P.A."/>
            <person name="Roepman R."/>
            <person name="Poulter J.A."/>
            <person name="Distelmaier F."/>
        </authorList>
    </citation>
    <scope>SUBCELLULAR LOCATION</scope>
</reference>
<reference key="103">
    <citation type="journal article" date="2023" name="Mol. Cell">
        <title>A central role for regulated protein stability in the control of TFE3 and MITF by nutrients.</title>
        <authorList>
            <person name="Nardone C."/>
            <person name="Palanski B.A."/>
            <person name="Scott D.C."/>
            <person name="Timms R.T."/>
            <person name="Barber K.W."/>
            <person name="Gu X."/>
            <person name="Mao A."/>
            <person name="Leng Y."/>
            <person name="Watson E.V."/>
            <person name="Schulman B.A."/>
            <person name="Cole P.A."/>
            <person name="Elledge S.J."/>
        </authorList>
    </citation>
    <scope>FUNCTION</scope>
</reference>
<reference key="104">
    <citation type="journal article" date="2023" name="Cell Metab.">
        <title>The tRNA-GCN2-FBXO22-axis-mediated mTOR ubiquitination senses amino acid insufficiency.</title>
        <authorList>
            <person name="Ge M.K."/>
            <person name="Zhang C."/>
            <person name="Zhang N."/>
            <person name="He P."/>
            <person name="Cai H.Y."/>
            <person name="Li S."/>
            <person name="Wu S."/>
            <person name="Chu X.L."/>
            <person name="Zhang Y.X."/>
            <person name="Ma H.M."/>
            <person name="Xia L."/>
            <person name="Yang S."/>
            <person name="Yu J.X."/>
            <person name="Yao S.Y."/>
            <person name="Zhou X.L."/>
            <person name="Su B."/>
            <person name="Chen G.Q."/>
            <person name="Shen S.M."/>
        </authorList>
    </citation>
    <scope>FUNCTION</scope>
    <scope>UBIQUITINATION AT LYS-2066</scope>
    <scope>MUTAGENESIS OF LYS-2066</scope>
</reference>
<reference key="105">
    <citation type="journal article" date="2023" name="Mol. Cell">
        <title>Lysosomal cyst(e)ine storage potentiates tolerance to oxidative stress in cancer cells.</title>
        <authorList>
            <person name="He L."/>
            <person name="Chen J."/>
            <person name="Deng P."/>
            <person name="Huang S."/>
            <person name="Liu P."/>
            <person name="Wang C."/>
            <person name="Huang X."/>
            <person name="Li Y."/>
            <person name="Chen B."/>
            <person name="Shi D."/>
            <person name="Xiao Y."/>
            <person name="Chen X."/>
            <person name="Ouyang Y."/>
            <person name="Song L."/>
            <person name="Lin C."/>
        </authorList>
    </citation>
    <scope>FUNCTION</scope>
    <scope>CATALYTIC ACTIVITY</scope>
</reference>
<reference key="106">
    <citation type="journal article" date="1996" name="Science">
        <title>Structure of the FKBP12-rapamycin complex interacting with the binding domain of human FRAP.</title>
        <authorList>
            <person name="Choi J."/>
            <person name="Chen J."/>
            <person name="Schreiber S.L."/>
            <person name="Clardy J."/>
        </authorList>
    </citation>
    <scope>X-RAY CRYSTALLOGRAPHY (2.7 ANGSTROMS) OF 2018-2112 IN COMPLEX WITH FKBP1A AND INHIBITOR RAPAMYCIN</scope>
    <scope>ACTIVITY REGULATION</scope>
</reference>
<reference key="107">
    <citation type="journal article" date="1999" name="Acta Crystallogr. D">
        <title>Refined structure of the FKBP12-rapamycin-FRB ternary complex at 2.2 A resolution.</title>
        <authorList>
            <person name="Liang J."/>
            <person name="Choi J."/>
            <person name="Clardy J."/>
        </authorList>
    </citation>
    <scope>X-RAY CRYSTALLOGRAPHY (2.2 ANGSTROMS) OF 2018-2112 IN COMPLEX WITH FKBP1A AND INHIBITOR RAPAMYCIN</scope>
    <scope>ACTIVITY REGULATION</scope>
</reference>
<reference key="108">
    <citation type="journal article" date="2010" name="J. Struct. Biol.">
        <title>Insights into the domain and repeat architecture of target of rapamycin.</title>
        <authorList>
            <person name="Knutson B.A."/>
        </authorList>
    </citation>
    <scope>3D-STRUCTURE MODELING</scope>
    <scope>HEAT-REPEATS</scope>
    <scope>TPR-REPEATS</scope>
</reference>
<reference key="109">
    <citation type="journal article" date="2010" name="Mol. Cell">
        <title>Structure of the human mTOR complex I and its implications for rapamycin inhibition.</title>
        <authorList>
            <person name="Yip C.K."/>
            <person name="Murata K."/>
            <person name="Walz T."/>
            <person name="Sabatini D.M."/>
            <person name="Kang S.A."/>
        </authorList>
    </citation>
    <scope>STRUCTURE BY ELECTRON MICROSCOPY (26 ANGSTROMS) OF MTORC1 COMPLEX</scope>
    <scope>SUBUNIT</scope>
</reference>
<reference key="110">
    <citation type="journal article" date="2013" name="Nature">
        <title>mTOR kinase structure, mechanism and regulation.</title>
        <authorList>
            <person name="Yang H."/>
            <person name="Rudge D.G."/>
            <person name="Koos J.D."/>
            <person name="Vaidialingam B."/>
            <person name="Yang H.J."/>
            <person name="Pavletich N.P."/>
        </authorList>
    </citation>
    <scope>X-RAY CRYSTALLOGRAPHY (3.2 ANGSTROMS) OF 1376-2549 IN COMPLEX WITH MLST8</scope>
    <scope>SUBUNIT</scope>
    <scope>TPR-REPEATS</scope>
    <scope>DOMAINS</scope>
    <scope>MUTAGENESIS OF HIS-2340</scope>
</reference>
<reference evidence="114" key="111">
    <citation type="journal article" date="2016" name="Protein Cell">
        <title>4.4 Aa Resolution Cryo-EM structure of human mTOR Complex 1.</title>
        <authorList>
            <person name="Yang H."/>
            <person name="Wang J."/>
            <person name="Liu M."/>
            <person name="Chen X."/>
            <person name="Huang M."/>
            <person name="Tan D."/>
            <person name="Dong M.Q."/>
            <person name="Wong C.C."/>
            <person name="Wang J."/>
            <person name="Xu Y."/>
            <person name="Wang H.W."/>
        </authorList>
    </citation>
    <scope>STRUCTURE BY ELECTRON MICROSCOPY (4.40 ANGSTROMS) IN COMPLEX WITH RPTOR AND MLST8</scope>
    <scope>IDENTIFICATION IN THE MTORC1 COMPLEX</scope>
</reference>
<reference evidence="113" key="112">
    <citation type="journal article" date="2016" name="Science">
        <title>Architecture of human mTOR complex 1.</title>
        <authorList>
            <person name="Aylett C.H."/>
            <person name="Sauer E."/>
            <person name="Imseng S."/>
            <person name="Boehringer D."/>
            <person name="Hall M.N."/>
            <person name="Ban N."/>
            <person name="Maier T."/>
        </authorList>
    </citation>
    <scope>STRUCTURE BY ELECTRON MICROSCOPY (5.90 ANGSTROMS) IN COMPLEX WITH MLST8</scope>
</reference>
<reference evidence="115 116 117 119 120" key="113">
    <citation type="journal article" date="2017" name="Nature">
        <title>Mechanisms of mTORC1 activation by RHEB and inhibition by PRAS40.</title>
        <authorList>
            <person name="Yang H."/>
            <person name="Jiang X."/>
            <person name="Li B."/>
            <person name="Yang H.J."/>
            <person name="Miller M."/>
            <person name="Yang A."/>
            <person name="Dhar A."/>
            <person name="Pavletich N.P."/>
        </authorList>
    </citation>
    <scope>STRUCTURE BY ELECTRON MICROSCOPY (3.43 ANGSTROMS) IN COMPLEX WITH ATP; MAGNESIUM; MLST8; RPTOR; RHEB; AKT1S1; RPS6KB1 AND EIF4EBP1</scope>
    <scope>FUNCTION</scope>
    <scope>CATALYTIC ACTIVITY</scope>
    <scope>ACTIVITY REGULATION</scope>
    <scope>IDENTIFICATION IN THE MTORC1 COMPLEX</scope>
</reference>
<reference evidence="118" key="114">
    <citation type="journal article" date="2018" name="Cell Res.">
        <title>Cryo-EM structure of human mTOR complex 2.</title>
        <authorList>
            <person name="Chen X."/>
            <person name="Liu M."/>
            <person name="Tian Y."/>
            <person name="Li J."/>
            <person name="Qi Y."/>
            <person name="Zhao D."/>
            <person name="Wu Z."/>
            <person name="Huang M."/>
            <person name="Wong C.C.L."/>
            <person name="Wang H.W."/>
            <person name="Wang J."/>
            <person name="Yang H."/>
            <person name="Xu Y."/>
        </authorList>
    </citation>
    <scope>STRUCTURE BY ELECTRON MICROSCOPY (4.90 ANGSTROMS) OF THE MTORC2 COMPLEX</scope>
    <scope>IDENTIFICATION IN THE MTORC2 COMPLEX</scope>
</reference>
<reference key="115">
    <citation type="journal article" date="2018" name="Elife">
        <title>Architecture of the human mTORC2 core complex.</title>
        <authorList>
            <person name="Stuttfeld E."/>
            <person name="Aylett C.H."/>
            <person name="Imseng S."/>
            <person name="Boehringer D."/>
            <person name="Scaiola A."/>
            <person name="Sauer E."/>
            <person name="Hall M.N."/>
            <person name="Maier T."/>
            <person name="Ban N."/>
        </authorList>
    </citation>
    <scope>STRUCTURE BY ELECTRON MICROSCOPY OF THE MTORC2 COMPLEX</scope>
    <scope>IDENTIFICATION IN THE MTORC2 COMPLEX</scope>
</reference>
<reference evidence="121 122" key="116">
    <citation type="journal article" date="2019" name="Science">
        <title>Architecture of human Rag GTPase heterodimers and their complex with mTORC1.</title>
        <authorList>
            <person name="Anandapadamanaban M."/>
            <person name="Masson G.R."/>
            <person name="Perisic O."/>
            <person name="Berndt A."/>
            <person name="Kaufman J."/>
            <person name="Johnson C.M."/>
            <person name="Santhanam B."/>
            <person name="Rogala K.B."/>
            <person name="Sabatini D.M."/>
            <person name="Williams R.L."/>
        </authorList>
    </citation>
    <scope>STRUCTURE BY ELECTRON MICROSCOPY (5.50 ANGSTROMS) IN COMPLEX WITH RRAGA; RRAGC; RPTOR; MLST8 AND AKT1S1</scope>
    <scope>IDENTIFICATION IN THE MTORC1 COMPLEX</scope>
    <scope>SUBCELLULAR LOCATION</scope>
</reference>
<reference evidence="123 124" key="117">
    <citation type="journal article" date="2020" name="Sci. Adv.">
        <title>The 3.2-Aa resolution structure of human mTORC2.</title>
        <authorList>
            <person name="Scaiola A."/>
            <person name="Mangia F."/>
            <person name="Imseng S."/>
            <person name="Boehringer D."/>
            <person name="Berneiser K."/>
            <person name="Shimobayashi M."/>
            <person name="Stuttfeld E."/>
            <person name="Hall M.N."/>
            <person name="Ban N."/>
            <person name="Maier T."/>
        </authorList>
    </citation>
    <scope>STRUCTURE BY ELECTRON MICROSCOPY (3.00 ANGSTROMS) OF THE MTORC2 COMPLEX IN COMPLEX WITH 1D-MYO-INOSITOL HEXAKISPHOSPHATE</scope>
    <scope>IDENTIFICATION IN THE MTORC2 COMPLEX</scope>
</reference>
<reference evidence="126 127 128 129 130 131" key="118">
    <citation type="journal article" date="2021" name="Elife">
        <title>Regulation of human mTOR complexes by DEPTOR.</title>
        <authorList>
            <person name="Waelchli M."/>
            <person name="Berneiser K."/>
            <person name="Mangia F."/>
            <person name="Imseng S."/>
            <person name="Craigie L.M."/>
            <person name="Stuttfeld E."/>
            <person name="Hall M.N."/>
            <person name="Maier T."/>
        </authorList>
    </citation>
    <scope>X-RAY CRYSTALLOGRAPHY (1.93 ANGSTROMS) OF 1-230 IN COMPLEX WITH DEPTOR; MLST8; MAPKAP1; RICTOR AND RPTOR</scope>
    <scope>ACTIVITY REGULATION</scope>
    <scope>IDENTIFICATION IN THE MTORC1 COMPLEX</scope>
    <scope>IDENTIFICATION IN THE MTORC2 COMPLEX</scope>
</reference>
<reference evidence="125" key="119">
    <citation type="journal article" date="2021" name="Elife">
        <title>Bipartite binding and partial inhibition links DEPTOR and mTOR in a mutually antagonistic embrace.</title>
        <authorList>
            <person name="Heimhalt M."/>
            <person name="Berndt A."/>
            <person name="Wagstaff J."/>
            <person name="Anandapadamanaban M."/>
            <person name="Perisic O."/>
            <person name="Maslen S."/>
            <person name="McLaughlin S."/>
            <person name="Yu C.W."/>
            <person name="Masson G.R."/>
            <person name="Boland A."/>
            <person name="Ni X."/>
            <person name="Yamashita K."/>
            <person name="Murshudov G.N."/>
            <person name="Skehel M."/>
            <person name="Freund S.M."/>
            <person name="Williams R.L."/>
        </authorList>
    </citation>
    <scope>STRUCTURE BY ELECTRON MICROSCOPY (4.70 ANGSTROMS) IN COMPLEX WITH DEPTOR; MLST8 AND RPTOR</scope>
    <scope>ACTIVITY REGULATION</scope>
    <scope>IDENTIFICATION IN THE MTORC1 COMPLEX</scope>
    <scope>FUNCTION</scope>
</reference>
<reference evidence="132" key="120">
    <citation type="journal article" date="2022" name="J. Biol. Chem.">
        <title>Interactions between mTORC2 core subunits Rictor and mSin1 dictate selective and context-dependent phosphorylation of substrate kinases SGK1 and Akt.</title>
        <authorList>
            <person name="Yu Z."/>
            <person name="Chen J."/>
            <person name="Takagi E."/>
            <person name="Wang F."/>
            <person name="Saha B."/>
            <person name="Liu X."/>
            <person name="Joubert L.M."/>
            <person name="Gleason C.E."/>
            <person name="Jin M."/>
            <person name="Li C."/>
            <person name="Nowotny C."/>
            <person name="Agard D."/>
            <person name="Cheng Y."/>
            <person name="Pearce D."/>
        </authorList>
    </citation>
    <scope>STRUCTURE BY ELECTRON MICROSCOPY (3.28 ANGSTROMS) OF THE MTORC2 COMPLEX</scope>
    <scope>FUNCTION</scope>
    <scope>IDENTIFICATION IN THE MTORC2 COMPLEX</scope>
</reference>
<reference evidence="133 134" key="121">
    <citation type="journal article" date="2023" name="Nature">
        <title>Structure of the lysosomal mTORC1-TFEB-Rag-Ragulator megacomplex.</title>
        <authorList>
            <person name="Cui Z."/>
            <person name="Napolitano G."/>
            <person name="de Araujo M.E.G."/>
            <person name="Esposito A."/>
            <person name="Monfregola J."/>
            <person name="Huber L.A."/>
            <person name="Ballabio A."/>
            <person name="Hurley J.H."/>
        </authorList>
    </citation>
    <scope>STRUCTURE BY ELECTRON MICROSCOPY (2.90 ANGSTROMS) IN COMPLEX WITH RRAGA; RRAGC; LAMTOR1; LAMTOR2; LAMTOR3; LAMTOR4; LAMTOR5; RPTOR; MLST8 AND TFEB</scope>
    <scope>FUNCTION</scope>
    <scope>ACTIVITY REGULATION</scope>
    <scope>IDENTIFICATION IN THE MTORC1 COMPLEX</scope>
</reference>
<reference key="122">
    <citation type="journal article" date="2007" name="Nature">
        <title>Patterns of somatic mutation in human cancer genomes.</title>
        <authorList>
            <person name="Greenman C."/>
            <person name="Stephens P."/>
            <person name="Smith R."/>
            <person name="Dalgliesh G.L."/>
            <person name="Hunter C."/>
            <person name="Bignell G."/>
            <person name="Davies H."/>
            <person name="Teague J."/>
            <person name="Butler A."/>
            <person name="Stevens C."/>
            <person name="Edkins S."/>
            <person name="O'Meara S."/>
            <person name="Vastrik I."/>
            <person name="Schmidt E.E."/>
            <person name="Avis T."/>
            <person name="Barthorpe S."/>
            <person name="Bhamra G."/>
            <person name="Buck G."/>
            <person name="Choudhury B."/>
            <person name="Clements J."/>
            <person name="Cole J."/>
            <person name="Dicks E."/>
            <person name="Forbes S."/>
            <person name="Gray K."/>
            <person name="Halliday K."/>
            <person name="Harrison R."/>
            <person name="Hills K."/>
            <person name="Hinton J."/>
            <person name="Jenkinson A."/>
            <person name="Jones D."/>
            <person name="Menzies A."/>
            <person name="Mironenko T."/>
            <person name="Perry J."/>
            <person name="Raine K."/>
            <person name="Richardson D."/>
            <person name="Shepherd R."/>
            <person name="Small A."/>
            <person name="Tofts C."/>
            <person name="Varian J."/>
            <person name="Webb T."/>
            <person name="West S."/>
            <person name="Widaa S."/>
            <person name="Yates A."/>
            <person name="Cahill D.P."/>
            <person name="Louis D.N."/>
            <person name="Goldstraw P."/>
            <person name="Nicholson A.G."/>
            <person name="Brasseur F."/>
            <person name="Looijenga L."/>
            <person name="Weber B.L."/>
            <person name="Chiew Y.-E."/>
            <person name="DeFazio A."/>
            <person name="Greaves M.F."/>
            <person name="Green A.R."/>
            <person name="Campbell P."/>
            <person name="Birney E."/>
            <person name="Easton D.F."/>
            <person name="Chenevix-Trench G."/>
            <person name="Tan M.-H."/>
            <person name="Khoo S.K."/>
            <person name="Teh B.T."/>
            <person name="Yuen S.T."/>
            <person name="Leung S.Y."/>
            <person name="Wooster R."/>
            <person name="Futreal P.A."/>
            <person name="Stratton M.R."/>
        </authorList>
    </citation>
    <scope>VARIANTS [LARGE SCALE ANALYSIS] SER-8; THR-135; VAL-1083; VAL-1134; PHE-1178; VAL-2011; TYR-2215 AND LEU-2476</scope>
</reference>
<reference key="123">
    <citation type="journal article" date="2011" name="Nature">
        <title>Exome sequencing identifies frequent mutation of the SWI/SNF complex gene PBRM1 in renal carcinoma.</title>
        <authorList>
            <person name="Varela I."/>
            <person name="Tarpey P."/>
            <person name="Raine K."/>
            <person name="Huang D."/>
            <person name="Ong C.K."/>
            <person name="Stephens P."/>
            <person name="Davies H."/>
            <person name="Jones D."/>
            <person name="Lin M.L."/>
            <person name="Teague J."/>
            <person name="Bignell G."/>
            <person name="Butler A."/>
            <person name="Cho J."/>
            <person name="Dalgliesh G.L."/>
            <person name="Galappaththige D."/>
            <person name="Greenman C."/>
            <person name="Hardy C."/>
            <person name="Jia M."/>
            <person name="Latimer C."/>
            <person name="Lau K.W."/>
            <person name="Marshall J."/>
            <person name="McLaren S."/>
            <person name="Menzies A."/>
            <person name="Mudie L."/>
            <person name="Stebbings L."/>
            <person name="Largaespada D.A."/>
            <person name="Wessels L.F.A."/>
            <person name="Richard S."/>
            <person name="Kahnoski R.J."/>
            <person name="Anema J."/>
            <person name="Tuveson D.A."/>
            <person name="Perez-Mancera P.A."/>
            <person name="Mustonen V."/>
            <person name="Fischer A."/>
            <person name="Adams D.J."/>
            <person name="Rust A."/>
            <person name="Chan-On W."/>
            <person name="Subimerb C."/>
            <person name="Dykema K."/>
            <person name="Furge K."/>
            <person name="Campbell P.J."/>
            <person name="Teh B.T."/>
            <person name="Stratton M.R."/>
            <person name="Futreal P.A."/>
        </authorList>
    </citation>
    <scope>VARIANTS PHE-2220 AND ALA-2406</scope>
</reference>
<keyword id="KW-0002">3D-structure</keyword>
<keyword id="KW-0007">Acetylation</keyword>
<keyword id="KW-0067">ATP-binding</keyword>
<keyword id="KW-1003">Cell membrane</keyword>
<keyword id="KW-0963">Cytoplasm</keyword>
<keyword id="KW-0968">Cytoplasmic vesicle</keyword>
<keyword id="KW-0225">Disease variant</keyword>
<keyword id="KW-0256">Endoplasmic reticulum</keyword>
<keyword id="KW-0887">Epilepsy</keyword>
<keyword id="KW-0333">Golgi apparatus</keyword>
<keyword id="KW-0991">Intellectual disability</keyword>
<keyword id="KW-1017">Isopeptide bond</keyword>
<keyword id="KW-0418">Kinase</keyword>
<keyword id="KW-0458">Lysosome</keyword>
<keyword id="KW-0472">Membrane</keyword>
<keyword id="KW-0492">Microsome</keyword>
<keyword id="KW-0496">Mitochondrion</keyword>
<keyword id="KW-1000">Mitochondrion outer membrane</keyword>
<keyword id="KW-0547">Nucleotide-binding</keyword>
<keyword id="KW-0539">Nucleus</keyword>
<keyword id="KW-0597">Phosphoprotein</keyword>
<keyword id="KW-1267">Proteomics identification</keyword>
<keyword id="KW-1185">Reference proteome</keyword>
<keyword id="KW-0677">Repeat</keyword>
<keyword id="KW-0723">Serine/threonine-protein kinase</keyword>
<keyword id="KW-0802">TPR repeat</keyword>
<keyword id="KW-0808">Transferase</keyword>
<keyword id="KW-0832">Ubl conjugation</keyword>